<dbReference type="EMBL" id="X87838">
    <property type="protein sequence ID" value="CAA61107.1"/>
    <property type="molecule type" value="mRNA"/>
</dbReference>
<dbReference type="EMBL" id="Z19054">
    <property type="protein sequence ID" value="CAA79497.1"/>
    <property type="molecule type" value="mRNA"/>
</dbReference>
<dbReference type="EMBL" id="AF130085">
    <property type="protein sequence ID" value="AAG35511.1"/>
    <property type="status" value="ALT_SEQ"/>
    <property type="molecule type" value="mRNA"/>
</dbReference>
<dbReference type="EMBL" id="AY463360">
    <property type="protein sequence ID" value="AAR18817.1"/>
    <property type="molecule type" value="Genomic_DNA"/>
</dbReference>
<dbReference type="EMBL" id="AK289932">
    <property type="protein sequence ID" value="BAF82621.1"/>
    <property type="molecule type" value="mRNA"/>
</dbReference>
<dbReference type="EMBL" id="AC104307">
    <property type="status" value="NOT_ANNOTATED_CDS"/>
    <property type="molecule type" value="Genomic_DNA"/>
</dbReference>
<dbReference type="EMBL" id="CH471055">
    <property type="protein sequence ID" value="EAW64625.1"/>
    <property type="molecule type" value="Genomic_DNA"/>
</dbReference>
<dbReference type="EMBL" id="BC058926">
    <property type="protein sequence ID" value="AAH58926.1"/>
    <property type="molecule type" value="mRNA"/>
</dbReference>
<dbReference type="EMBL" id="AY081165">
    <property type="protein sequence ID" value="AAL89457.1"/>
    <property type="molecule type" value="Genomic_DNA"/>
</dbReference>
<dbReference type="EMBL" id="AB062292">
    <property type="protein sequence ID" value="BAB93475.1"/>
    <property type="status" value="ALT_INIT"/>
    <property type="molecule type" value="mRNA"/>
</dbReference>
<dbReference type="CCDS" id="CCDS2694.1"/>
<dbReference type="PIR" id="A38973">
    <property type="entry name" value="A38973"/>
</dbReference>
<dbReference type="RefSeq" id="NP_001091679.1">
    <property type="nucleotide sequence ID" value="NM_001098209.2"/>
</dbReference>
<dbReference type="RefSeq" id="NP_001091680.1">
    <property type="nucleotide sequence ID" value="NM_001098210.2"/>
</dbReference>
<dbReference type="RefSeq" id="NP_001895.1">
    <property type="nucleotide sequence ID" value="NM_001904.4"/>
</dbReference>
<dbReference type="RefSeq" id="XP_005264943.1">
    <property type="nucleotide sequence ID" value="XM_005264886.2"/>
</dbReference>
<dbReference type="RefSeq" id="XP_016861227.1">
    <property type="nucleotide sequence ID" value="XM_017005738.2"/>
</dbReference>
<dbReference type="RefSeq" id="XP_024309124.1">
    <property type="nucleotide sequence ID" value="XM_024453356.2"/>
</dbReference>
<dbReference type="RefSeq" id="XP_047303433.1">
    <property type="nucleotide sequence ID" value="XM_047447477.1"/>
</dbReference>
<dbReference type="RefSeq" id="XP_047303434.1">
    <property type="nucleotide sequence ID" value="XM_047447478.1"/>
</dbReference>
<dbReference type="RefSeq" id="XP_047303435.1">
    <property type="nucleotide sequence ID" value="XM_047447479.1"/>
</dbReference>
<dbReference type="RefSeq" id="XP_047303436.1">
    <property type="nucleotide sequence ID" value="XM_047447480.1"/>
</dbReference>
<dbReference type="RefSeq" id="XP_047303437.1">
    <property type="nucleotide sequence ID" value="XM_047447481.1"/>
</dbReference>
<dbReference type="RefSeq" id="XP_054201285.1">
    <property type="nucleotide sequence ID" value="XM_054345310.1"/>
</dbReference>
<dbReference type="RefSeq" id="XP_054201286.1">
    <property type="nucleotide sequence ID" value="XM_054345311.1"/>
</dbReference>
<dbReference type="RefSeq" id="XP_054201287.1">
    <property type="nucleotide sequence ID" value="XM_054345312.1"/>
</dbReference>
<dbReference type="RefSeq" id="XP_054201288.1">
    <property type="nucleotide sequence ID" value="XM_054345313.1"/>
</dbReference>
<dbReference type="RefSeq" id="XP_054201289.1">
    <property type="nucleotide sequence ID" value="XM_054345314.1"/>
</dbReference>
<dbReference type="PDB" id="1G3J">
    <property type="method" value="X-ray"/>
    <property type="resolution" value="2.10 A"/>
    <property type="chains" value="A/C=133-664"/>
</dbReference>
<dbReference type="PDB" id="1JDH">
    <property type="method" value="X-ray"/>
    <property type="resolution" value="1.90 A"/>
    <property type="chains" value="A=135-663"/>
</dbReference>
<dbReference type="PDB" id="1JPW">
    <property type="method" value="X-ray"/>
    <property type="resolution" value="2.50 A"/>
    <property type="chains" value="A/B/C=131-670"/>
</dbReference>
<dbReference type="PDB" id="1LUJ">
    <property type="method" value="X-ray"/>
    <property type="resolution" value="2.50 A"/>
    <property type="chains" value="A=150-663"/>
</dbReference>
<dbReference type="PDB" id="1P22">
    <property type="method" value="X-ray"/>
    <property type="resolution" value="2.95 A"/>
    <property type="chains" value="C=19-44"/>
</dbReference>
<dbReference type="PDB" id="1QZ7">
    <property type="method" value="X-ray"/>
    <property type="resolution" value="2.20 A"/>
    <property type="chains" value="A=133-665"/>
</dbReference>
<dbReference type="PDB" id="1T08">
    <property type="method" value="X-ray"/>
    <property type="resolution" value="2.10 A"/>
    <property type="chains" value="A=146-664"/>
</dbReference>
<dbReference type="PDB" id="1TH1">
    <property type="method" value="X-ray"/>
    <property type="resolution" value="2.50 A"/>
    <property type="chains" value="A/B=133-664"/>
</dbReference>
<dbReference type="PDB" id="2G57">
    <property type="method" value="NMR"/>
    <property type="chains" value="A=19-44"/>
</dbReference>
<dbReference type="PDB" id="2GL7">
    <property type="method" value="X-ray"/>
    <property type="resolution" value="2.60 A"/>
    <property type="chains" value="A/D=138-686"/>
</dbReference>
<dbReference type="PDB" id="2Z6H">
    <property type="method" value="X-ray"/>
    <property type="resolution" value="2.20 A"/>
    <property type="chains" value="A=138-781"/>
</dbReference>
<dbReference type="PDB" id="3DIW">
    <property type="method" value="X-ray"/>
    <property type="resolution" value="2.10 A"/>
    <property type="chains" value="C/D=772-781"/>
</dbReference>
<dbReference type="PDB" id="3FQN">
    <property type="method" value="X-ray"/>
    <property type="resolution" value="1.65 A"/>
    <property type="chains" value="C=30-39"/>
</dbReference>
<dbReference type="PDB" id="3FQR">
    <property type="method" value="X-ray"/>
    <property type="resolution" value="1.70 A"/>
    <property type="chains" value="C=30-39"/>
</dbReference>
<dbReference type="PDB" id="3SL9">
    <property type="method" value="X-ray"/>
    <property type="resolution" value="2.20 A"/>
    <property type="chains" value="A/B/E/G=141-305"/>
</dbReference>
<dbReference type="PDB" id="3SLA">
    <property type="method" value="X-ray"/>
    <property type="resolution" value="2.50 A"/>
    <property type="chains" value="A/B/C/D/E=141-306"/>
</dbReference>
<dbReference type="PDB" id="3TX7">
    <property type="method" value="X-ray"/>
    <property type="resolution" value="2.76 A"/>
    <property type="chains" value="A=138-663"/>
</dbReference>
<dbReference type="PDB" id="4DJS">
    <property type="method" value="X-ray"/>
    <property type="resolution" value="3.03 A"/>
    <property type="chains" value="A=148-665"/>
</dbReference>
<dbReference type="PDB" id="6M90">
    <property type="method" value="X-ray"/>
    <property type="resolution" value="2.05 A"/>
    <property type="chains" value="C=17-48"/>
</dbReference>
<dbReference type="PDB" id="6M91">
    <property type="method" value="X-ray"/>
    <property type="resolution" value="2.40 A"/>
    <property type="chains" value="C=17-48"/>
</dbReference>
<dbReference type="PDB" id="6M92">
    <property type="method" value="X-ray"/>
    <property type="resolution" value="2.35 A"/>
    <property type="chains" value="C=17-48"/>
</dbReference>
<dbReference type="PDB" id="6M93">
    <property type="method" value="X-ray"/>
    <property type="resolution" value="2.50 A"/>
    <property type="chains" value="C=17-48"/>
</dbReference>
<dbReference type="PDB" id="6M94">
    <property type="method" value="X-ray"/>
    <property type="resolution" value="2.70 A"/>
    <property type="chains" value="C=17-48"/>
</dbReference>
<dbReference type="PDB" id="6O9B">
    <property type="method" value="X-ray"/>
    <property type="resolution" value="2.20 A"/>
    <property type="chains" value="C=41-49"/>
</dbReference>
<dbReference type="PDB" id="6O9C">
    <property type="method" value="X-ray"/>
    <property type="resolution" value="2.45 A"/>
    <property type="chains" value="C=41-49"/>
</dbReference>
<dbReference type="PDB" id="6WLX">
    <property type="method" value="X-ray"/>
    <property type="resolution" value="2.20 A"/>
    <property type="chains" value="B=671-677"/>
</dbReference>
<dbReference type="PDB" id="6WNX">
    <property type="method" value="X-ray"/>
    <property type="resolution" value="2.50 A"/>
    <property type="chains" value="C/F/I=31-39"/>
</dbReference>
<dbReference type="PDB" id="7AFW">
    <property type="method" value="X-ray"/>
    <property type="resolution" value="1.81 A"/>
    <property type="chains" value="A=141-305"/>
</dbReference>
<dbReference type="PDB" id="7AR4">
    <property type="method" value="X-ray"/>
    <property type="resolution" value="2.60 A"/>
    <property type="chains" value="AAA=134-665"/>
</dbReference>
<dbReference type="PDB" id="7UWI">
    <property type="method" value="X-ray"/>
    <property type="resolution" value="2.32 A"/>
    <property type="chains" value="A=143-663"/>
</dbReference>
<dbReference type="PDB" id="7UWO">
    <property type="method" value="X-ray"/>
    <property type="resolution" value="2.75 A"/>
    <property type="chains" value="A=134-665"/>
</dbReference>
<dbReference type="PDB" id="7ZRB">
    <property type="method" value="X-ray"/>
    <property type="resolution" value="3.43 A"/>
    <property type="chains" value="A/B=133-664"/>
</dbReference>
<dbReference type="PDB" id="8EI9">
    <property type="method" value="X-ray"/>
    <property type="resolution" value="3.90 A"/>
    <property type="chains" value="A=134-665"/>
</dbReference>
<dbReference type="PDB" id="8EIA">
    <property type="method" value="X-ray"/>
    <property type="resolution" value="3.60 A"/>
    <property type="chains" value="A=134-665"/>
</dbReference>
<dbReference type="PDB" id="8EIB">
    <property type="method" value="X-ray"/>
    <property type="resolution" value="3.76 A"/>
    <property type="chains" value="A=134-665"/>
</dbReference>
<dbReference type="PDB" id="8EIC">
    <property type="method" value="X-ray"/>
    <property type="resolution" value="2.62 A"/>
    <property type="chains" value="A=134-665"/>
</dbReference>
<dbReference type="PDB" id="8RU3">
    <property type="method" value="X-ray"/>
    <property type="resolution" value="2.00 A"/>
    <property type="chains" value="A=134-665"/>
</dbReference>
<dbReference type="PDB" id="8RU4">
    <property type="method" value="X-ray"/>
    <property type="resolution" value="2.13 A"/>
    <property type="chains" value="A/B=145-665"/>
</dbReference>
<dbReference type="PDB" id="8VME">
    <property type="method" value="X-ray"/>
    <property type="resolution" value="2.30 A"/>
    <property type="chains" value="C=35-61"/>
</dbReference>
<dbReference type="PDB" id="8VMF">
    <property type="method" value="X-ray"/>
    <property type="resolution" value="2.50 A"/>
    <property type="chains" value="C=35-61"/>
</dbReference>
<dbReference type="PDB" id="8Y0G">
    <property type="method" value="X-ray"/>
    <property type="resolution" value="2.50 A"/>
    <property type="chains" value="A=138-686"/>
</dbReference>
<dbReference type="PDB" id="8Y0P">
    <property type="method" value="X-ray"/>
    <property type="resolution" value="2.62 A"/>
    <property type="chains" value="A/B=138-686"/>
</dbReference>
<dbReference type="PDB" id="8Y14">
    <property type="method" value="X-ray"/>
    <property type="resolution" value="2.80 A"/>
    <property type="chains" value="A=138-686"/>
</dbReference>
<dbReference type="PDB" id="8Z0U">
    <property type="method" value="X-ray"/>
    <property type="resolution" value="2.21 A"/>
    <property type="chains" value="A=138-686"/>
</dbReference>
<dbReference type="PDB" id="8Z10">
    <property type="method" value="X-ray"/>
    <property type="resolution" value="2.35 A"/>
    <property type="chains" value="A=138-686"/>
</dbReference>
<dbReference type="PDB" id="8Z5J">
    <property type="method" value="X-ray"/>
    <property type="resolution" value="2.80 A"/>
    <property type="chains" value="A=138-686"/>
</dbReference>
<dbReference type="PDB" id="8Z61">
    <property type="method" value="X-ray"/>
    <property type="resolution" value="2.50 A"/>
    <property type="chains" value="A=138-686"/>
</dbReference>
<dbReference type="PDBsum" id="1G3J"/>
<dbReference type="PDBsum" id="1JDH"/>
<dbReference type="PDBsum" id="1JPW"/>
<dbReference type="PDBsum" id="1LUJ"/>
<dbReference type="PDBsum" id="1P22"/>
<dbReference type="PDBsum" id="1QZ7"/>
<dbReference type="PDBsum" id="1T08"/>
<dbReference type="PDBsum" id="1TH1"/>
<dbReference type="PDBsum" id="2G57"/>
<dbReference type="PDBsum" id="2GL7"/>
<dbReference type="PDBsum" id="2Z6H"/>
<dbReference type="PDBsum" id="3DIW"/>
<dbReference type="PDBsum" id="3FQN"/>
<dbReference type="PDBsum" id="3FQR"/>
<dbReference type="PDBsum" id="3SL9"/>
<dbReference type="PDBsum" id="3SLA"/>
<dbReference type="PDBsum" id="3TX7"/>
<dbReference type="PDBsum" id="4DJS"/>
<dbReference type="PDBsum" id="6M90"/>
<dbReference type="PDBsum" id="6M91"/>
<dbReference type="PDBsum" id="6M92"/>
<dbReference type="PDBsum" id="6M93"/>
<dbReference type="PDBsum" id="6M94"/>
<dbReference type="PDBsum" id="6O9B"/>
<dbReference type="PDBsum" id="6O9C"/>
<dbReference type="PDBsum" id="6WLX"/>
<dbReference type="PDBsum" id="6WNX"/>
<dbReference type="PDBsum" id="7AFW"/>
<dbReference type="PDBsum" id="7AR4"/>
<dbReference type="PDBsum" id="7UWI"/>
<dbReference type="PDBsum" id="7UWO"/>
<dbReference type="PDBsum" id="7ZRB"/>
<dbReference type="PDBsum" id="8EI9"/>
<dbReference type="PDBsum" id="8EIA"/>
<dbReference type="PDBsum" id="8EIB"/>
<dbReference type="PDBsum" id="8EIC"/>
<dbReference type="PDBsum" id="8RU3"/>
<dbReference type="PDBsum" id="8RU4"/>
<dbReference type="PDBsum" id="8VME"/>
<dbReference type="PDBsum" id="8VMF"/>
<dbReference type="PDBsum" id="8Y0G"/>
<dbReference type="PDBsum" id="8Y0P"/>
<dbReference type="PDBsum" id="8Y14"/>
<dbReference type="PDBsum" id="8Z0U"/>
<dbReference type="PDBsum" id="8Z10"/>
<dbReference type="PDBsum" id="8Z5J"/>
<dbReference type="PDBsum" id="8Z61"/>
<dbReference type="SMR" id="P35222"/>
<dbReference type="BioGRID" id="107880">
    <property type="interactions" value="974"/>
</dbReference>
<dbReference type="ComplexPortal" id="CPX-316">
    <property type="entry name" value="beta1-catenin - LEF1 complex"/>
</dbReference>
<dbReference type="CORUM" id="P35222"/>
<dbReference type="DIP" id="DIP-122N"/>
<dbReference type="FunCoup" id="P35222">
    <property type="interactions" value="2315"/>
</dbReference>
<dbReference type="IntAct" id="P35222">
    <property type="interactions" value="329"/>
</dbReference>
<dbReference type="MINT" id="P35222"/>
<dbReference type="STRING" id="9606.ENSP00000495360"/>
<dbReference type="BindingDB" id="P35222"/>
<dbReference type="ChEMBL" id="CHEMBL5866"/>
<dbReference type="DrugBank" id="DB03904">
    <property type="generic name" value="Urea"/>
</dbReference>
<dbReference type="GlyCosmos" id="P35222">
    <property type="glycosylation" value="4 sites, 1 glycan"/>
</dbReference>
<dbReference type="GlyGen" id="P35222">
    <property type="glycosylation" value="6 sites, 1 N-linked glycan (1 site), 1 O-linked glycan (4 sites)"/>
</dbReference>
<dbReference type="iPTMnet" id="P35222"/>
<dbReference type="MetOSite" id="P35222"/>
<dbReference type="PhosphoSitePlus" id="P35222"/>
<dbReference type="SwissPalm" id="P35222"/>
<dbReference type="BioMuta" id="CTNNB1"/>
<dbReference type="DMDM" id="461854"/>
<dbReference type="CPTAC" id="CPTAC-1745"/>
<dbReference type="CPTAC" id="non-CPTAC-3265"/>
<dbReference type="CPTAC" id="non-CPTAC-3266"/>
<dbReference type="CPTAC" id="non-CPTAC-5365"/>
<dbReference type="CPTAC" id="non-CPTAC-5715"/>
<dbReference type="CPTAC" id="non-CPTAC-5716"/>
<dbReference type="jPOST" id="P35222"/>
<dbReference type="MassIVE" id="P35222"/>
<dbReference type="PaxDb" id="9606-ENSP00000344456"/>
<dbReference type="PeptideAtlas" id="P35222"/>
<dbReference type="PRIDE" id="P35222"/>
<dbReference type="Pumba" id="P35222"/>
<dbReference type="ABCD" id="P35222">
    <property type="antibodies" value="7 sequenced antibodies"/>
</dbReference>
<dbReference type="Antibodypedia" id="3432">
    <property type="antibodies" value="5149 antibodies from 58 providers"/>
</dbReference>
<dbReference type="DNASU" id="1499"/>
<dbReference type="Ensembl" id="ENST00000349496.11">
    <property type="protein sequence ID" value="ENSP00000344456.5"/>
    <property type="gene ID" value="ENSG00000168036.19"/>
</dbReference>
<dbReference type="Ensembl" id="ENST00000396183.7">
    <property type="protein sequence ID" value="ENSP00000379486.3"/>
    <property type="gene ID" value="ENSG00000168036.19"/>
</dbReference>
<dbReference type="Ensembl" id="ENST00000396185.8">
    <property type="protein sequence ID" value="ENSP00000379488.3"/>
    <property type="gene ID" value="ENSG00000168036.19"/>
</dbReference>
<dbReference type="Ensembl" id="ENST00000405570.6">
    <property type="protein sequence ID" value="ENSP00000385604.1"/>
    <property type="gene ID" value="ENSG00000168036.19"/>
</dbReference>
<dbReference type="Ensembl" id="ENST00000431914.6">
    <property type="protein sequence ID" value="ENSP00000412219.2"/>
    <property type="gene ID" value="ENSG00000168036.19"/>
</dbReference>
<dbReference type="Ensembl" id="ENST00000433400.6">
    <property type="protein sequence ID" value="ENSP00000387455.2"/>
    <property type="gene ID" value="ENSG00000168036.19"/>
</dbReference>
<dbReference type="Ensembl" id="ENST00000441708.2">
    <property type="protein sequence ID" value="ENSP00000401599.2"/>
    <property type="gene ID" value="ENSG00000168036.19"/>
</dbReference>
<dbReference type="Ensembl" id="ENST00000450969.6">
    <property type="protein sequence ID" value="ENSP00000409302.2"/>
    <property type="gene ID" value="ENSG00000168036.19"/>
</dbReference>
<dbReference type="Ensembl" id="ENST00000642248.1">
    <property type="protein sequence ID" value="ENSP00000495244.1"/>
    <property type="gene ID" value="ENSG00000168036.19"/>
</dbReference>
<dbReference type="Ensembl" id="ENST00000642315.1">
    <property type="protein sequence ID" value="ENSP00000495076.1"/>
    <property type="gene ID" value="ENSG00000168036.19"/>
</dbReference>
<dbReference type="Ensembl" id="ENST00000642426.1">
    <property type="protein sequence ID" value="ENSP00000495719.1"/>
    <property type="gene ID" value="ENSG00000168036.19"/>
</dbReference>
<dbReference type="Ensembl" id="ENST00000642992.1">
    <property type="protein sequence ID" value="ENSP00000496385.1"/>
    <property type="gene ID" value="ENSG00000168036.19"/>
</dbReference>
<dbReference type="Ensembl" id="ENST00000643031.1">
    <property type="protein sequence ID" value="ENSP00000495450.1"/>
    <property type="gene ID" value="ENSG00000168036.19"/>
</dbReference>
<dbReference type="Ensembl" id="ENST00000643297.1">
    <property type="protein sequence ID" value="ENSP00000494677.1"/>
    <property type="gene ID" value="ENSG00000168036.19"/>
</dbReference>
<dbReference type="Ensembl" id="ENST00000643541.1">
    <property type="protein sequence ID" value="ENSP00000494411.1"/>
    <property type="gene ID" value="ENSG00000168036.19"/>
</dbReference>
<dbReference type="Ensembl" id="ENST00000643977.1">
    <property type="protein sequence ID" value="ENSP00000494053.1"/>
    <property type="gene ID" value="ENSG00000168036.19"/>
</dbReference>
<dbReference type="Ensembl" id="ENST00000643992.1">
    <property type="protein sequence ID" value="ENSP00000493610.1"/>
    <property type="gene ID" value="ENSG00000168036.19"/>
</dbReference>
<dbReference type="Ensembl" id="ENST00000644867.1">
    <property type="protein sequence ID" value="ENSP00000495992.1"/>
    <property type="gene ID" value="ENSG00000168036.19"/>
</dbReference>
<dbReference type="Ensembl" id="ENST00000645210.1">
    <property type="protein sequence ID" value="ENSP00000496180.1"/>
    <property type="gene ID" value="ENSG00000168036.19"/>
</dbReference>
<dbReference type="Ensembl" id="ENST00000645320.1">
    <property type="protein sequence ID" value="ENSP00000495360.1"/>
    <property type="gene ID" value="ENSG00000168036.19"/>
</dbReference>
<dbReference type="Ensembl" id="ENST00000645982.1">
    <property type="protein sequence ID" value="ENSP00000494845.1"/>
    <property type="gene ID" value="ENSG00000168036.19"/>
</dbReference>
<dbReference type="Ensembl" id="ENST00000646369.1">
    <property type="protein sequence ID" value="ENSP00000494914.1"/>
    <property type="gene ID" value="ENSG00000168036.19"/>
</dbReference>
<dbReference type="Ensembl" id="ENST00000646725.1">
    <property type="protein sequence ID" value="ENSP00000496021.1"/>
    <property type="gene ID" value="ENSG00000168036.19"/>
</dbReference>
<dbReference type="Ensembl" id="ENST00000647390.1">
    <property type="protein sequence ID" value="ENSP00000493533.1"/>
    <property type="gene ID" value="ENSG00000168036.19"/>
</dbReference>
<dbReference type="Ensembl" id="ENST00000647413.2">
    <property type="protein sequence ID" value="ENSP00000493583.2"/>
    <property type="gene ID" value="ENSG00000168036.19"/>
</dbReference>
<dbReference type="GeneID" id="1499"/>
<dbReference type="KEGG" id="hsa:1499"/>
<dbReference type="MANE-Select" id="ENST00000349496.11">
    <property type="protein sequence ID" value="ENSP00000344456.5"/>
    <property type="RefSeq nucleotide sequence ID" value="NM_001904.4"/>
    <property type="RefSeq protein sequence ID" value="NP_001895.1"/>
</dbReference>
<dbReference type="UCSC" id="uc003ckp.3">
    <property type="organism name" value="human"/>
</dbReference>
<dbReference type="AGR" id="HGNC:2514"/>
<dbReference type="CTD" id="1499"/>
<dbReference type="DisGeNET" id="1499"/>
<dbReference type="GeneCards" id="CTNNB1"/>
<dbReference type="GeneReviews" id="CTNNB1"/>
<dbReference type="HGNC" id="HGNC:2514">
    <property type="gene designation" value="CTNNB1"/>
</dbReference>
<dbReference type="HPA" id="ENSG00000168036">
    <property type="expression patterns" value="Low tissue specificity"/>
</dbReference>
<dbReference type="MalaCards" id="CTNNB1"/>
<dbReference type="MIM" id="114500">
    <property type="type" value="phenotype"/>
</dbReference>
<dbReference type="MIM" id="116806">
    <property type="type" value="gene"/>
</dbReference>
<dbReference type="MIM" id="132600">
    <property type="type" value="phenotype"/>
</dbReference>
<dbReference type="MIM" id="155255">
    <property type="type" value="phenotype"/>
</dbReference>
<dbReference type="MIM" id="156240">
    <property type="type" value="phenotype"/>
</dbReference>
<dbReference type="MIM" id="167000">
    <property type="type" value="phenotype"/>
</dbReference>
<dbReference type="MIM" id="181030">
    <property type="type" value="phenotype"/>
</dbReference>
<dbReference type="MIM" id="615075">
    <property type="type" value="phenotype"/>
</dbReference>
<dbReference type="MIM" id="617572">
    <property type="type" value="phenotype"/>
</dbReference>
<dbReference type="neXtProt" id="NX_P35222"/>
<dbReference type="OpenTargets" id="ENSG00000168036"/>
<dbReference type="Orphanet" id="952">
    <property type="disease" value="Acrofacial dysostosis, Weyers type"/>
</dbReference>
<dbReference type="Orphanet" id="689430">
    <property type="disease" value="Adenoid ameloblastoma"/>
</dbReference>
<dbReference type="Orphanet" id="1501">
    <property type="disease" value="Adrenocortical carcinoma"/>
</dbReference>
<dbReference type="Orphanet" id="210159">
    <property type="disease" value="Adult hepatocellular carcinoma"/>
</dbReference>
<dbReference type="Orphanet" id="54595">
    <property type="disease" value="Craniopharyngioma"/>
</dbReference>
<dbReference type="Orphanet" id="873">
    <property type="disease" value="Desmoid tumor"/>
</dbReference>
<dbReference type="Orphanet" id="891">
    <property type="disease" value="Familial exudative vitreoretinopathy"/>
</dbReference>
<dbReference type="Orphanet" id="404473">
    <property type="disease" value="Intellectual disability-peripheral spasticity-exudative vitreoretinopathy syndrome"/>
</dbReference>
<dbReference type="Orphanet" id="569248">
    <property type="disease" value="Microcystic stromal tumor"/>
</dbReference>
<dbReference type="Orphanet" id="2780">
    <property type="disease" value="Osteopathia striata-cranial sclerosis syndrome"/>
</dbReference>
<dbReference type="Orphanet" id="33402">
    <property type="disease" value="Pediatric hepatocellular carcinoma"/>
</dbReference>
<dbReference type="Orphanet" id="91414">
    <property type="disease" value="Pilomatrixoma"/>
</dbReference>
<dbReference type="PharmGKB" id="PA27013"/>
<dbReference type="VEuPathDB" id="HostDB:ENSG00000168036"/>
<dbReference type="eggNOG" id="KOG4203">
    <property type="taxonomic scope" value="Eukaryota"/>
</dbReference>
<dbReference type="GeneTree" id="ENSGT00940000155471"/>
<dbReference type="InParanoid" id="P35222"/>
<dbReference type="OMA" id="YPKLVYT"/>
<dbReference type="OrthoDB" id="195736at2759"/>
<dbReference type="PAN-GO" id="P35222">
    <property type="GO annotations" value="12 GO annotations based on evolutionary models"/>
</dbReference>
<dbReference type="PhylomeDB" id="P35222"/>
<dbReference type="TreeFam" id="TF317997"/>
<dbReference type="PathwayCommons" id="P35222"/>
<dbReference type="Reactome" id="R-HSA-195253">
    <property type="pathway name" value="Degradation of beta-catenin by the destruction complex"/>
</dbReference>
<dbReference type="Reactome" id="R-HSA-196299">
    <property type="pathway name" value="Beta-catenin phosphorylation cascade"/>
</dbReference>
<dbReference type="Reactome" id="R-HSA-201681">
    <property type="pathway name" value="TCF dependent signaling in response to WNT"/>
</dbReference>
<dbReference type="Reactome" id="R-HSA-201722">
    <property type="pathway name" value="Formation of the beta-catenin:TCF transactivating complex"/>
</dbReference>
<dbReference type="Reactome" id="R-HSA-3134973">
    <property type="pathway name" value="LRR FLII-interacting protein 1 (LRRFIP1) activates type I IFN production"/>
</dbReference>
<dbReference type="Reactome" id="R-HSA-351906">
    <property type="pathway name" value="Apoptotic cleavage of cell adhesion proteins"/>
</dbReference>
<dbReference type="Reactome" id="R-HSA-3769402">
    <property type="pathway name" value="Deactivation of the beta-catenin transactivating complex"/>
</dbReference>
<dbReference type="Reactome" id="R-HSA-381771">
    <property type="pathway name" value="Synthesis, secretion, and inactivation of Glucagon-like Peptide-1 (GLP-1)"/>
</dbReference>
<dbReference type="Reactome" id="R-HSA-4086398">
    <property type="pathway name" value="Ca2+ pathway"/>
</dbReference>
<dbReference type="Reactome" id="R-HSA-418990">
    <property type="pathway name" value="Adherens junctions interactions"/>
</dbReference>
<dbReference type="Reactome" id="R-HSA-4411364">
    <property type="pathway name" value="Binding of TCF/LEF:CTNNB1 to target gene promoters"/>
</dbReference>
<dbReference type="Reactome" id="R-HSA-4641262">
    <property type="pathway name" value="Disassembly of the destruction complex and recruitment of AXIN to the membrane"/>
</dbReference>
<dbReference type="Reactome" id="R-HSA-5218920">
    <property type="pathway name" value="VEGFR2 mediated vascular permeability"/>
</dbReference>
<dbReference type="Reactome" id="R-HSA-525793">
    <property type="pathway name" value="Myogenesis"/>
</dbReference>
<dbReference type="Reactome" id="R-HSA-5339716">
    <property type="pathway name" value="Signaling by GSK3beta mutants"/>
</dbReference>
<dbReference type="Reactome" id="R-HSA-5358747">
    <property type="pathway name" value="CTNNB1 S33 mutants aren't phosphorylated"/>
</dbReference>
<dbReference type="Reactome" id="R-HSA-5358749">
    <property type="pathway name" value="CTNNB1 S37 mutants aren't phosphorylated"/>
</dbReference>
<dbReference type="Reactome" id="R-HSA-5358751">
    <property type="pathway name" value="CTNNB1 S45 mutants aren't phosphorylated"/>
</dbReference>
<dbReference type="Reactome" id="R-HSA-5358752">
    <property type="pathway name" value="CTNNB1 T41 mutants aren't phosphorylated"/>
</dbReference>
<dbReference type="Reactome" id="R-HSA-5626467">
    <property type="pathway name" value="RHO GTPases activate IQGAPs"/>
</dbReference>
<dbReference type="Reactome" id="R-HSA-8853884">
    <property type="pathway name" value="Transcriptional Regulation by VENTX"/>
</dbReference>
<dbReference type="Reactome" id="R-HSA-8876493">
    <property type="pathway name" value="InlA-mediated entry of Listeria monocytogenes into host cells"/>
</dbReference>
<dbReference type="Reactome" id="R-HSA-8951430">
    <property type="pathway name" value="RUNX3 regulates WNT signaling"/>
</dbReference>
<dbReference type="Reactome" id="R-HSA-9733709">
    <property type="pathway name" value="Cardiogenesis"/>
</dbReference>
<dbReference type="Reactome" id="R-HSA-9754189">
    <property type="pathway name" value="Germ layer formation at gastrulation"/>
</dbReference>
<dbReference type="Reactome" id="R-HSA-9762292">
    <property type="pathway name" value="Regulation of CDH11 function"/>
</dbReference>
<dbReference type="Reactome" id="R-HSA-9764302">
    <property type="pathway name" value="Regulation of CDH19 Expression and Function"/>
</dbReference>
<dbReference type="Reactome" id="R-HSA-9793380">
    <property type="pathway name" value="Formation of paraxial mesoderm"/>
</dbReference>
<dbReference type="Reactome" id="R-HSA-9796292">
    <property type="pathway name" value="Formation of axial mesoderm"/>
</dbReference>
<dbReference type="Reactome" id="R-HSA-9823730">
    <property type="pathway name" value="Formation of definitive endoderm"/>
</dbReference>
<dbReference type="Reactome" id="R-HSA-9824272">
    <property type="pathway name" value="Somitogenesis"/>
</dbReference>
<dbReference type="Reactome" id="R-HSA-9824585">
    <property type="pathway name" value="Regulation of MITF-M-dependent genes involved in pigmentation"/>
</dbReference>
<dbReference type="Reactome" id="R-HSA-9825892">
    <property type="pathway name" value="Regulation of MITF-M-dependent genes involved in cell cycle and proliferation"/>
</dbReference>
<dbReference type="Reactome" id="R-HSA-9830364">
    <property type="pathway name" value="Formation of the nephric duct"/>
</dbReference>
<dbReference type="Reactome" id="R-HSA-9833576">
    <property type="pathway name" value="CDH11 homotypic and heterotypic interactions"/>
</dbReference>
<dbReference type="Reactome" id="R-HSA-9834899">
    <property type="pathway name" value="Specification of the neural plate border"/>
</dbReference>
<dbReference type="Reactome" id="R-HSA-9856530">
    <property type="pathway name" value="High laminar flow shear stress activates signaling by PIEZO1 and PECAM1:CDH5:KDR in endothelial cells"/>
</dbReference>
<dbReference type="Reactome" id="R-HSA-9856649">
    <property type="pathway name" value="Transcriptional and post-translational regulation of MITF-M expression and activity"/>
</dbReference>
<dbReference type="SignaLink" id="P35222"/>
<dbReference type="SIGNOR" id="P35222"/>
<dbReference type="BioGRID-ORCS" id="1499">
    <property type="hits" value="103 hits in 1178 CRISPR screens"/>
</dbReference>
<dbReference type="CD-CODE" id="38EC0B30">
    <property type="entry name" value="Transcriptional condensate"/>
</dbReference>
<dbReference type="CD-CODE" id="53379B70">
    <property type="entry name" value="LEF1/beta-catenin condensate"/>
</dbReference>
<dbReference type="CD-CODE" id="7FF4107C">
    <property type="entry name" value="beta-Catenin Destruction Complex"/>
</dbReference>
<dbReference type="CD-CODE" id="8C2F96ED">
    <property type="entry name" value="Centrosome"/>
</dbReference>
<dbReference type="CD-CODE" id="FB4E32DD">
    <property type="entry name" value="Presynaptic clusters and postsynaptic densities"/>
</dbReference>
<dbReference type="ChiTaRS" id="CTNNB1">
    <property type="organism name" value="human"/>
</dbReference>
<dbReference type="EvolutionaryTrace" id="P35222"/>
<dbReference type="GeneWiki" id="Beta-catenin"/>
<dbReference type="GenomeRNAi" id="1499"/>
<dbReference type="Pharos" id="P35222">
    <property type="development level" value="Tchem"/>
</dbReference>
<dbReference type="PRO" id="PR:P35222"/>
<dbReference type="Proteomes" id="UP000005640">
    <property type="component" value="Chromosome 3"/>
</dbReference>
<dbReference type="RNAct" id="P35222">
    <property type="molecule type" value="protein"/>
</dbReference>
<dbReference type="Bgee" id="ENSG00000168036">
    <property type="expression patterns" value="Expressed in adrenal tissue and 204 other cell types or tissues"/>
</dbReference>
<dbReference type="ExpressionAtlas" id="P35222">
    <property type="expression patterns" value="baseline and differential"/>
</dbReference>
<dbReference type="GO" id="GO:0005912">
    <property type="term" value="C:adherens junction"/>
    <property type="evidence" value="ECO:0000314"/>
    <property type="project" value="UniProtKB"/>
</dbReference>
<dbReference type="GO" id="GO:0045177">
    <property type="term" value="C:apical part of cell"/>
    <property type="evidence" value="ECO:0007669"/>
    <property type="project" value="Ensembl"/>
</dbReference>
<dbReference type="GO" id="GO:0016327">
    <property type="term" value="C:apicolateral plasma membrane"/>
    <property type="evidence" value="ECO:0007669"/>
    <property type="project" value="Ensembl"/>
</dbReference>
<dbReference type="GO" id="GO:0016323">
    <property type="term" value="C:basolateral plasma membrane"/>
    <property type="evidence" value="ECO:0000314"/>
    <property type="project" value="UniProtKB"/>
</dbReference>
<dbReference type="GO" id="GO:0030877">
    <property type="term" value="C:beta-catenin destruction complex"/>
    <property type="evidence" value="ECO:0000314"/>
    <property type="project" value="BHF-UCL"/>
</dbReference>
<dbReference type="GO" id="GO:1990711">
    <property type="term" value="C:beta-catenin-ICAT complex"/>
    <property type="evidence" value="ECO:0007669"/>
    <property type="project" value="Ensembl"/>
</dbReference>
<dbReference type="GO" id="GO:1990907">
    <property type="term" value="C:beta-catenin-TCF complex"/>
    <property type="evidence" value="ECO:0000314"/>
    <property type="project" value="FlyBase"/>
</dbReference>
<dbReference type="GO" id="GO:0070369">
    <property type="term" value="C:beta-catenin-TCF7L2 complex"/>
    <property type="evidence" value="ECO:0000314"/>
    <property type="project" value="UniProtKB"/>
</dbReference>
<dbReference type="GO" id="GO:0005923">
    <property type="term" value="C:bicellular tight junction"/>
    <property type="evidence" value="ECO:0007669"/>
    <property type="project" value="Ensembl"/>
</dbReference>
<dbReference type="GO" id="GO:0016342">
    <property type="term" value="C:catenin complex"/>
    <property type="evidence" value="ECO:0000314"/>
    <property type="project" value="UniProtKB"/>
</dbReference>
<dbReference type="GO" id="GO:0005938">
    <property type="term" value="C:cell cortex"/>
    <property type="evidence" value="ECO:0000314"/>
    <property type="project" value="BHF-UCL"/>
</dbReference>
<dbReference type="GO" id="GO:0030054">
    <property type="term" value="C:cell junction"/>
    <property type="evidence" value="ECO:0000314"/>
    <property type="project" value="BHF-UCL"/>
</dbReference>
<dbReference type="GO" id="GO:0071944">
    <property type="term" value="C:cell periphery"/>
    <property type="evidence" value="ECO:0000314"/>
    <property type="project" value="BHF-UCL"/>
</dbReference>
<dbReference type="GO" id="GO:0005911">
    <property type="term" value="C:cell-cell junction"/>
    <property type="evidence" value="ECO:0000314"/>
    <property type="project" value="MGI"/>
</dbReference>
<dbReference type="GO" id="GO:0005813">
    <property type="term" value="C:centrosome"/>
    <property type="evidence" value="ECO:0000314"/>
    <property type="project" value="UniProtKB"/>
</dbReference>
<dbReference type="GO" id="GO:0036064">
    <property type="term" value="C:ciliary basal body"/>
    <property type="evidence" value="ECO:0000314"/>
    <property type="project" value="HPA"/>
</dbReference>
<dbReference type="GO" id="GO:0005929">
    <property type="term" value="C:cilium"/>
    <property type="evidence" value="ECO:0000314"/>
    <property type="project" value="HPA"/>
</dbReference>
<dbReference type="GO" id="GO:0005737">
    <property type="term" value="C:cytoplasm"/>
    <property type="evidence" value="ECO:0000314"/>
    <property type="project" value="UniProtKB"/>
</dbReference>
<dbReference type="GO" id="GO:0005829">
    <property type="term" value="C:cytosol"/>
    <property type="evidence" value="ECO:0000314"/>
    <property type="project" value="UniProtKB"/>
</dbReference>
<dbReference type="GO" id="GO:0000791">
    <property type="term" value="C:euchromatin"/>
    <property type="evidence" value="ECO:0000314"/>
    <property type="project" value="BHF-UCL"/>
</dbReference>
<dbReference type="GO" id="GO:0070062">
    <property type="term" value="C:extracellular exosome"/>
    <property type="evidence" value="ECO:0007005"/>
    <property type="project" value="UniProtKB"/>
</dbReference>
<dbReference type="GO" id="GO:0005916">
    <property type="term" value="C:fascia adherens"/>
    <property type="evidence" value="ECO:0007669"/>
    <property type="project" value="Ensembl"/>
</dbReference>
<dbReference type="GO" id="GO:0016600">
    <property type="term" value="C:flotillin complex"/>
    <property type="evidence" value="ECO:0007669"/>
    <property type="project" value="Ensembl"/>
</dbReference>
<dbReference type="GO" id="GO:0005925">
    <property type="term" value="C:focal adhesion"/>
    <property type="evidence" value="ECO:0007005"/>
    <property type="project" value="UniProtKB"/>
</dbReference>
<dbReference type="GO" id="GO:0098978">
    <property type="term" value="C:glutamatergic synapse"/>
    <property type="evidence" value="ECO:0007669"/>
    <property type="project" value="Ensembl"/>
</dbReference>
<dbReference type="GO" id="GO:0043231">
    <property type="term" value="C:intracellular membrane-bounded organelle"/>
    <property type="evidence" value="ECO:0000314"/>
    <property type="project" value="HPA"/>
</dbReference>
<dbReference type="GO" id="GO:0030027">
    <property type="term" value="C:lamellipodium"/>
    <property type="evidence" value="ECO:0007669"/>
    <property type="project" value="Ensembl"/>
</dbReference>
<dbReference type="GO" id="GO:0016328">
    <property type="term" value="C:lateral plasma membrane"/>
    <property type="evidence" value="ECO:0000314"/>
    <property type="project" value="MGI"/>
</dbReference>
<dbReference type="GO" id="GO:0016020">
    <property type="term" value="C:membrane"/>
    <property type="evidence" value="ECO:0000250"/>
    <property type="project" value="UniProtKB"/>
</dbReference>
<dbReference type="GO" id="GO:0031528">
    <property type="term" value="C:microvillus membrane"/>
    <property type="evidence" value="ECO:0007669"/>
    <property type="project" value="Ensembl"/>
</dbReference>
<dbReference type="GO" id="GO:0005654">
    <property type="term" value="C:nucleoplasm"/>
    <property type="evidence" value="ECO:0000304"/>
    <property type="project" value="Reactome"/>
</dbReference>
<dbReference type="GO" id="GO:0005634">
    <property type="term" value="C:nucleus"/>
    <property type="evidence" value="ECO:0000314"/>
    <property type="project" value="UniProtKB"/>
</dbReference>
<dbReference type="GO" id="GO:0048471">
    <property type="term" value="C:perinuclear region of cytoplasm"/>
    <property type="evidence" value="ECO:0000314"/>
    <property type="project" value="UniProtKB"/>
</dbReference>
<dbReference type="GO" id="GO:0005886">
    <property type="term" value="C:plasma membrane"/>
    <property type="evidence" value="ECO:0000314"/>
    <property type="project" value="UniProtKB"/>
</dbReference>
<dbReference type="GO" id="GO:0099092">
    <property type="term" value="C:postsynaptic density, intracellular component"/>
    <property type="evidence" value="ECO:0007669"/>
    <property type="project" value="Ensembl"/>
</dbReference>
<dbReference type="GO" id="GO:0045211">
    <property type="term" value="C:postsynaptic membrane"/>
    <property type="evidence" value="ECO:0007669"/>
    <property type="project" value="Ensembl"/>
</dbReference>
<dbReference type="GO" id="GO:0098831">
    <property type="term" value="C:presynaptic active zone cytoplasmic component"/>
    <property type="evidence" value="ECO:0007669"/>
    <property type="project" value="Ensembl"/>
</dbReference>
<dbReference type="GO" id="GO:0042734">
    <property type="term" value="C:presynaptic membrane"/>
    <property type="evidence" value="ECO:0007669"/>
    <property type="project" value="Ensembl"/>
</dbReference>
<dbReference type="GO" id="GO:0032991">
    <property type="term" value="C:protein-containing complex"/>
    <property type="evidence" value="ECO:0000314"/>
    <property type="project" value="MGI"/>
</dbReference>
<dbReference type="GO" id="GO:0032993">
    <property type="term" value="C:protein-DNA complex"/>
    <property type="evidence" value="ECO:0000314"/>
    <property type="project" value="BHF-UCL"/>
</dbReference>
<dbReference type="GO" id="GO:0098685">
    <property type="term" value="C:Schaffer collateral - CA1 synapse"/>
    <property type="evidence" value="ECO:0007669"/>
    <property type="project" value="Ensembl"/>
</dbReference>
<dbReference type="GO" id="GO:0034750">
    <property type="term" value="C:Scrib-APC-beta-catenin complex"/>
    <property type="evidence" value="ECO:0007669"/>
    <property type="project" value="Ensembl"/>
</dbReference>
<dbReference type="GO" id="GO:0000922">
    <property type="term" value="C:spindle pole"/>
    <property type="evidence" value="ECO:0007669"/>
    <property type="project" value="UniProtKB-SubCell"/>
</dbReference>
<dbReference type="GO" id="GO:0045202">
    <property type="term" value="C:synapse"/>
    <property type="evidence" value="ECO:0000250"/>
    <property type="project" value="UniProtKB"/>
</dbReference>
<dbReference type="GO" id="GO:0005667">
    <property type="term" value="C:transcription regulator complex"/>
    <property type="evidence" value="ECO:0000314"/>
    <property type="project" value="BHF-UCL"/>
</dbReference>
<dbReference type="GO" id="GO:1990909">
    <property type="term" value="C:Wnt signalosome"/>
    <property type="evidence" value="ECO:0000303"/>
    <property type="project" value="ParkinsonsUK-UCL"/>
</dbReference>
<dbReference type="GO" id="GO:0030018">
    <property type="term" value="C:Z disc"/>
    <property type="evidence" value="ECO:0007669"/>
    <property type="project" value="Ensembl"/>
</dbReference>
<dbReference type="GO" id="GO:0045294">
    <property type="term" value="F:alpha-catenin binding"/>
    <property type="evidence" value="ECO:0000353"/>
    <property type="project" value="BHF-UCL"/>
</dbReference>
<dbReference type="GO" id="GO:0045296">
    <property type="term" value="F:cadherin binding"/>
    <property type="evidence" value="ECO:0000353"/>
    <property type="project" value="BHF-UCL"/>
</dbReference>
<dbReference type="GO" id="GO:0003682">
    <property type="term" value="F:chromatin binding"/>
    <property type="evidence" value="ECO:0000250"/>
    <property type="project" value="ParkinsonsUK-UCL"/>
</dbReference>
<dbReference type="GO" id="GO:0097718">
    <property type="term" value="F:disordered domain specific binding"/>
    <property type="evidence" value="ECO:0007669"/>
    <property type="project" value="Ensembl"/>
</dbReference>
<dbReference type="GO" id="GO:0140297">
    <property type="term" value="F:DNA-binding transcription factor binding"/>
    <property type="evidence" value="ECO:0000353"/>
    <property type="project" value="BHF-UCL"/>
</dbReference>
<dbReference type="GO" id="GO:0019899">
    <property type="term" value="F:enzyme binding"/>
    <property type="evidence" value="ECO:0000353"/>
    <property type="project" value="ParkinsonsUK-UCL"/>
</dbReference>
<dbReference type="GO" id="GO:1990226">
    <property type="term" value="F:histone methyltransferase binding"/>
    <property type="evidence" value="ECO:0000250"/>
    <property type="project" value="ARUK-UCL"/>
</dbReference>
<dbReference type="GO" id="GO:0070411">
    <property type="term" value="F:I-SMAD binding"/>
    <property type="evidence" value="ECO:0000353"/>
    <property type="project" value="BHF-UCL"/>
</dbReference>
<dbReference type="GO" id="GO:0019900">
    <property type="term" value="F:kinase binding"/>
    <property type="evidence" value="ECO:0000353"/>
    <property type="project" value="BHF-UCL"/>
</dbReference>
<dbReference type="GO" id="GO:0030331">
    <property type="term" value="F:nuclear estrogen receptor binding"/>
    <property type="evidence" value="ECO:0000353"/>
    <property type="project" value="BHF-UCL"/>
</dbReference>
<dbReference type="GO" id="GO:0016922">
    <property type="term" value="F:nuclear receptor binding"/>
    <property type="evidence" value="ECO:0000353"/>
    <property type="project" value="BHF-UCL"/>
</dbReference>
<dbReference type="GO" id="GO:0019902">
    <property type="term" value="F:phosphatase binding"/>
    <property type="evidence" value="ECO:0000353"/>
    <property type="project" value="BHF-UCL"/>
</dbReference>
<dbReference type="GO" id="GO:0019901">
    <property type="term" value="F:protein kinase binding"/>
    <property type="evidence" value="ECO:0007669"/>
    <property type="project" value="Ensembl"/>
</dbReference>
<dbReference type="GO" id="GO:0019903">
    <property type="term" value="F:protein phosphatase binding"/>
    <property type="evidence" value="ECO:0000318"/>
    <property type="project" value="GO_Central"/>
</dbReference>
<dbReference type="GO" id="GO:0061629">
    <property type="term" value="F:RNA polymerase II-specific DNA-binding transcription factor binding"/>
    <property type="evidence" value="ECO:0000314"/>
    <property type="project" value="UniProtKB"/>
</dbReference>
<dbReference type="GO" id="GO:0005102">
    <property type="term" value="F:signaling receptor binding"/>
    <property type="evidence" value="ECO:0000353"/>
    <property type="project" value="ARUK-UCL"/>
</dbReference>
<dbReference type="GO" id="GO:0046332">
    <property type="term" value="F:SMAD binding"/>
    <property type="evidence" value="ECO:0000353"/>
    <property type="project" value="BHF-UCL"/>
</dbReference>
<dbReference type="GO" id="GO:0003713">
    <property type="term" value="F:transcription coactivator activity"/>
    <property type="evidence" value="ECO:0000314"/>
    <property type="project" value="UniProtKB"/>
</dbReference>
<dbReference type="GO" id="GO:0001221">
    <property type="term" value="F:transcription coregulator binding"/>
    <property type="evidence" value="ECO:0000250"/>
    <property type="project" value="ARUK-UCL"/>
</dbReference>
<dbReference type="GO" id="GO:0001222">
    <property type="term" value="F:transcription corepressor binding"/>
    <property type="evidence" value="ECO:0000353"/>
    <property type="project" value="UniProtKB"/>
</dbReference>
<dbReference type="GO" id="GO:0044325">
    <property type="term" value="F:transmembrane transporter binding"/>
    <property type="evidence" value="ECO:0000353"/>
    <property type="project" value="BHF-UCL"/>
</dbReference>
<dbReference type="GO" id="GO:0031625">
    <property type="term" value="F:ubiquitin protein ligase binding"/>
    <property type="evidence" value="ECO:0000269"/>
    <property type="project" value="DisProt"/>
</dbReference>
<dbReference type="GO" id="GO:0090425">
    <property type="term" value="P:acinar cell differentiation"/>
    <property type="evidence" value="ECO:0007669"/>
    <property type="project" value="Ensembl"/>
</dbReference>
<dbReference type="GO" id="GO:0034333">
    <property type="term" value="P:adherens junction assembly"/>
    <property type="evidence" value="ECO:0000315"/>
    <property type="project" value="BHF-UCL"/>
</dbReference>
<dbReference type="GO" id="GO:0009948">
    <property type="term" value="P:anterior/posterior axis specification"/>
    <property type="evidence" value="ECO:0007669"/>
    <property type="project" value="Ensembl"/>
</dbReference>
<dbReference type="GO" id="GO:0097190">
    <property type="term" value="P:apoptotic signaling pathway"/>
    <property type="evidence" value="ECO:0007669"/>
    <property type="project" value="Ensembl"/>
</dbReference>
<dbReference type="GO" id="GO:0036520">
    <property type="term" value="P:astrocyte-dopaminergic neuron signaling"/>
    <property type="evidence" value="ECO:0007669"/>
    <property type="project" value="Ensembl"/>
</dbReference>
<dbReference type="GO" id="GO:0045453">
    <property type="term" value="P:bone resorption"/>
    <property type="evidence" value="ECO:0007669"/>
    <property type="project" value="Ensembl"/>
</dbReference>
<dbReference type="GO" id="GO:0001569">
    <property type="term" value="P:branching involved in blood vessel morphogenesis"/>
    <property type="evidence" value="ECO:0007669"/>
    <property type="project" value="Ensembl"/>
</dbReference>
<dbReference type="GO" id="GO:0001658">
    <property type="term" value="P:branching involved in ureteric bud morphogenesis"/>
    <property type="evidence" value="ECO:0007669"/>
    <property type="project" value="Ensembl"/>
</dbReference>
<dbReference type="GO" id="GO:0060070">
    <property type="term" value="P:canonical Wnt signaling pathway"/>
    <property type="evidence" value="ECO:0000314"/>
    <property type="project" value="UniProtKB"/>
</dbReference>
<dbReference type="GO" id="GO:0044338">
    <property type="term" value="P:canonical Wnt signaling pathway involved in mesenchymal stem cell differentiation"/>
    <property type="evidence" value="ECO:0007669"/>
    <property type="project" value="Ensembl"/>
</dbReference>
<dbReference type="GO" id="GO:0007155">
    <property type="term" value="P:cell adhesion"/>
    <property type="evidence" value="ECO:0000315"/>
    <property type="project" value="BHF-UCL"/>
</dbReference>
<dbReference type="GO" id="GO:0001708">
    <property type="term" value="P:cell fate specification"/>
    <property type="evidence" value="ECO:0007669"/>
    <property type="project" value="Ensembl"/>
</dbReference>
<dbReference type="GO" id="GO:0048469">
    <property type="term" value="P:cell maturation"/>
    <property type="evidence" value="ECO:0007669"/>
    <property type="project" value="Ensembl"/>
</dbReference>
<dbReference type="GO" id="GO:0098609">
    <property type="term" value="P:cell-cell adhesion"/>
    <property type="evidence" value="ECO:0000318"/>
    <property type="project" value="GO_Central"/>
</dbReference>
<dbReference type="GO" id="GO:0044331">
    <property type="term" value="P:cell-cell adhesion mediated by cadherin"/>
    <property type="evidence" value="ECO:0000315"/>
    <property type="project" value="BHF-UCL"/>
</dbReference>
<dbReference type="GO" id="GO:0007160">
    <property type="term" value="P:cell-matrix adhesion"/>
    <property type="evidence" value="ECO:0007669"/>
    <property type="project" value="Ensembl"/>
</dbReference>
<dbReference type="GO" id="GO:0071363">
    <property type="term" value="P:cellular response to growth factor stimulus"/>
    <property type="evidence" value="ECO:0000315"/>
    <property type="project" value="BHF-UCL"/>
</dbReference>
<dbReference type="GO" id="GO:0071681">
    <property type="term" value="P:cellular response to indole-3-methanol"/>
    <property type="evidence" value="ECO:0000314"/>
    <property type="project" value="UniProtKB"/>
</dbReference>
<dbReference type="GO" id="GO:0022009">
    <property type="term" value="P:central nervous system vasculogenesis"/>
    <property type="evidence" value="ECO:0007669"/>
    <property type="project" value="Ensembl"/>
</dbReference>
<dbReference type="GO" id="GO:0007268">
    <property type="term" value="P:chemical synaptic transmission"/>
    <property type="evidence" value="ECO:0007669"/>
    <property type="project" value="Ensembl"/>
</dbReference>
<dbReference type="GO" id="GO:0002062">
    <property type="term" value="P:chondrocyte differentiation"/>
    <property type="evidence" value="ECO:0007669"/>
    <property type="project" value="Ensembl"/>
</dbReference>
<dbReference type="GO" id="GO:0061550">
    <property type="term" value="P:cranial ganglion development"/>
    <property type="evidence" value="ECO:0007669"/>
    <property type="project" value="Ensembl"/>
</dbReference>
<dbReference type="GO" id="GO:1904888">
    <property type="term" value="P:cranial skeletal system development"/>
    <property type="evidence" value="ECO:0007669"/>
    <property type="project" value="Ensembl"/>
</dbReference>
<dbReference type="GO" id="GO:0035995">
    <property type="term" value="P:detection of muscle stretch"/>
    <property type="evidence" value="ECO:0000304"/>
    <property type="project" value="BHF-UCL"/>
</dbReference>
<dbReference type="GO" id="GO:1990791">
    <property type="term" value="P:dorsal root ganglion development"/>
    <property type="evidence" value="ECO:0007669"/>
    <property type="project" value="Ensembl"/>
</dbReference>
<dbReference type="GO" id="GO:0009950">
    <property type="term" value="P:dorsal/ventral axis specification"/>
    <property type="evidence" value="ECO:0007669"/>
    <property type="project" value="Ensembl"/>
</dbReference>
<dbReference type="GO" id="GO:0007398">
    <property type="term" value="P:ectoderm development"/>
    <property type="evidence" value="ECO:0007669"/>
    <property type="project" value="Ensembl"/>
</dbReference>
<dbReference type="GO" id="GO:0000578">
    <property type="term" value="P:embryonic axis specification"/>
    <property type="evidence" value="ECO:0007669"/>
    <property type="project" value="Ensembl"/>
</dbReference>
<dbReference type="GO" id="GO:1990403">
    <property type="term" value="P:embryonic brain development"/>
    <property type="evidence" value="ECO:0007669"/>
    <property type="project" value="Ensembl"/>
</dbReference>
<dbReference type="GO" id="GO:0042733">
    <property type="term" value="P:embryonic digit morphogenesis"/>
    <property type="evidence" value="ECO:0007669"/>
    <property type="project" value="Ensembl"/>
</dbReference>
<dbReference type="GO" id="GO:0048617">
    <property type="term" value="P:embryonic foregut morphogenesis"/>
    <property type="evidence" value="ECO:0007669"/>
    <property type="project" value="Ensembl"/>
</dbReference>
<dbReference type="GO" id="GO:0035115">
    <property type="term" value="P:embryonic forelimb morphogenesis"/>
    <property type="evidence" value="ECO:0007669"/>
    <property type="project" value="Ensembl"/>
</dbReference>
<dbReference type="GO" id="GO:0035050">
    <property type="term" value="P:embryonic heart tube development"/>
    <property type="evidence" value="ECO:0007669"/>
    <property type="project" value="Ensembl"/>
</dbReference>
<dbReference type="GO" id="GO:0035116">
    <property type="term" value="P:embryonic hindlimb morphogenesis"/>
    <property type="evidence" value="ECO:0007669"/>
    <property type="project" value="Ensembl"/>
</dbReference>
<dbReference type="GO" id="GO:0036023">
    <property type="term" value="P:embryonic skeletal limb joint morphogenesis"/>
    <property type="evidence" value="ECO:0000250"/>
    <property type="project" value="BHF-UCL"/>
</dbReference>
<dbReference type="GO" id="GO:0001711">
    <property type="term" value="P:endodermal cell fate commitment"/>
    <property type="evidence" value="ECO:0007669"/>
    <property type="project" value="Ensembl"/>
</dbReference>
<dbReference type="GO" id="GO:0061154">
    <property type="term" value="P:endothelial tube morphogenesis"/>
    <property type="evidence" value="ECO:0000315"/>
    <property type="project" value="BHF-UCL"/>
</dbReference>
<dbReference type="GO" id="GO:0007173">
    <property type="term" value="P:epidermal growth factor receptor signaling pathway"/>
    <property type="evidence" value="ECO:0000314"/>
    <property type="project" value="ARUK-UCL"/>
</dbReference>
<dbReference type="GO" id="GO:0060742">
    <property type="term" value="P:epithelial cell differentiation involved in prostate gland development"/>
    <property type="evidence" value="ECO:0007669"/>
    <property type="project" value="Ensembl"/>
</dbReference>
<dbReference type="GO" id="GO:0060767">
    <property type="term" value="P:epithelial cell proliferation involved in prostate gland development"/>
    <property type="evidence" value="ECO:0007669"/>
    <property type="project" value="Ensembl"/>
</dbReference>
<dbReference type="GO" id="GO:0001837">
    <property type="term" value="P:epithelial to mesenchymal transition"/>
    <property type="evidence" value="ECO:0000304"/>
    <property type="project" value="HGNC-UCL"/>
</dbReference>
<dbReference type="GO" id="GO:0060441">
    <property type="term" value="P:epithelial tube branching involved in lung morphogenesis"/>
    <property type="evidence" value="ECO:0007669"/>
    <property type="project" value="Ensembl"/>
</dbReference>
<dbReference type="GO" id="GO:0060856">
    <property type="term" value="P:establishment of blood-brain barrier"/>
    <property type="evidence" value="ECO:0007669"/>
    <property type="project" value="Ensembl"/>
</dbReference>
<dbReference type="GO" id="GO:1990963">
    <property type="term" value="P:establishment of blood-retinal barrier"/>
    <property type="evidence" value="ECO:0007669"/>
    <property type="project" value="Ensembl"/>
</dbReference>
<dbReference type="GO" id="GO:0008543">
    <property type="term" value="P:fibroblast growth factor receptor signaling pathway"/>
    <property type="evidence" value="ECO:0007669"/>
    <property type="project" value="Ensembl"/>
</dbReference>
<dbReference type="GO" id="GO:0061198">
    <property type="term" value="P:fungiform papilla formation"/>
    <property type="evidence" value="ECO:0007669"/>
    <property type="project" value="Ensembl"/>
</dbReference>
<dbReference type="GO" id="GO:0001702">
    <property type="term" value="P:gastrulation with mouth forming second"/>
    <property type="evidence" value="ECO:0007669"/>
    <property type="project" value="Ensembl"/>
</dbReference>
<dbReference type="GO" id="GO:0035112">
    <property type="term" value="P:genitalia morphogenesis"/>
    <property type="evidence" value="ECO:0007669"/>
    <property type="project" value="Ensembl"/>
</dbReference>
<dbReference type="GO" id="GO:0007403">
    <property type="term" value="P:glial cell fate determination"/>
    <property type="evidence" value="ECO:0007669"/>
    <property type="project" value="Ensembl"/>
</dbReference>
<dbReference type="GO" id="GO:0035315">
    <property type="term" value="P:hair cell differentiation"/>
    <property type="evidence" value="ECO:0000304"/>
    <property type="project" value="BHF-UCL"/>
</dbReference>
<dbReference type="GO" id="GO:0031069">
    <property type="term" value="P:hair follicle morphogenesis"/>
    <property type="evidence" value="ECO:0007669"/>
    <property type="project" value="Ensembl"/>
</dbReference>
<dbReference type="GO" id="GO:0060789">
    <property type="term" value="P:hair follicle placode formation"/>
    <property type="evidence" value="ECO:0007669"/>
    <property type="project" value="Ensembl"/>
</dbReference>
<dbReference type="GO" id="GO:0030902">
    <property type="term" value="P:hindbrain development"/>
    <property type="evidence" value="ECO:0007669"/>
    <property type="project" value="Ensembl"/>
</dbReference>
<dbReference type="GO" id="GO:0021854">
    <property type="term" value="P:hypothalamus development"/>
    <property type="evidence" value="ECO:0007669"/>
    <property type="project" value="Ensembl"/>
</dbReference>
<dbReference type="GO" id="GO:0001701">
    <property type="term" value="P:in utero embryonic development"/>
    <property type="evidence" value="ECO:0007669"/>
    <property type="project" value="Ensembl"/>
</dbReference>
<dbReference type="GO" id="GO:0021819">
    <property type="term" value="P:layer formation in cerebral cortex"/>
    <property type="evidence" value="ECO:0007669"/>
    <property type="project" value="Ensembl"/>
</dbReference>
<dbReference type="GO" id="GO:0002089">
    <property type="term" value="P:lens morphogenesis in camera-type eye"/>
    <property type="evidence" value="ECO:0007669"/>
    <property type="project" value="Ensembl"/>
</dbReference>
<dbReference type="GO" id="GO:0060487">
    <property type="term" value="P:lung epithelial cell differentiation"/>
    <property type="evidence" value="ECO:0007669"/>
    <property type="project" value="Ensembl"/>
</dbReference>
<dbReference type="GO" id="GO:0060492">
    <property type="term" value="P:lung induction"/>
    <property type="evidence" value="ECO:0007669"/>
    <property type="project" value="Ensembl"/>
</dbReference>
<dbReference type="GO" id="GO:0060484">
    <property type="term" value="P:lung-associated mesenchyme development"/>
    <property type="evidence" value="ECO:0007669"/>
    <property type="project" value="Ensembl"/>
</dbReference>
<dbReference type="GO" id="GO:0030539">
    <property type="term" value="P:male genitalia development"/>
    <property type="evidence" value="ECO:0007669"/>
    <property type="project" value="Ensembl"/>
</dbReference>
<dbReference type="GO" id="GO:0000165">
    <property type="term" value="P:MAPK cascade"/>
    <property type="evidence" value="ECO:0007669"/>
    <property type="project" value="Ensembl"/>
</dbReference>
<dbReference type="GO" id="GO:0060916">
    <property type="term" value="P:mesenchymal cell proliferation involved in lung development"/>
    <property type="evidence" value="ECO:0007669"/>
    <property type="project" value="Ensembl"/>
</dbReference>
<dbReference type="GO" id="GO:0072497">
    <property type="term" value="P:mesenchymal stem cell differentiation"/>
    <property type="evidence" value="ECO:0000315"/>
    <property type="project" value="ARUK-UCL"/>
</dbReference>
<dbReference type="GO" id="GO:0060231">
    <property type="term" value="P:mesenchymal to epithelial transition"/>
    <property type="evidence" value="ECO:0000315"/>
    <property type="project" value="UniProtKB"/>
</dbReference>
<dbReference type="GO" id="GO:0003338">
    <property type="term" value="P:metanephros morphogenesis"/>
    <property type="evidence" value="ECO:0007669"/>
    <property type="project" value="Ensembl"/>
</dbReference>
<dbReference type="GO" id="GO:1904948">
    <property type="term" value="P:midbrain dopaminergic neuron differentiation"/>
    <property type="evidence" value="ECO:0000250"/>
    <property type="project" value="ParkinsonsUK-UCL"/>
</dbReference>
<dbReference type="GO" id="GO:0051450">
    <property type="term" value="P:myoblast proliferation"/>
    <property type="evidence" value="ECO:0007669"/>
    <property type="project" value="Ensembl"/>
</dbReference>
<dbReference type="GO" id="GO:0016525">
    <property type="term" value="P:negative regulation of angiogenesis"/>
    <property type="evidence" value="ECO:0000250"/>
    <property type="project" value="BHF-UCL"/>
</dbReference>
<dbReference type="GO" id="GO:0043066">
    <property type="term" value="P:negative regulation of apoptotic process"/>
    <property type="evidence" value="ECO:0000315"/>
    <property type="project" value="BHF-UCL"/>
</dbReference>
<dbReference type="GO" id="GO:0090090">
    <property type="term" value="P:negative regulation of canonical Wnt signaling pathway"/>
    <property type="evidence" value="ECO:0007669"/>
    <property type="project" value="Ensembl"/>
</dbReference>
<dbReference type="GO" id="GO:0008285">
    <property type="term" value="P:negative regulation of cell population proliferation"/>
    <property type="evidence" value="ECO:0000314"/>
    <property type="project" value="UniProtKB"/>
</dbReference>
<dbReference type="GO" id="GO:0032331">
    <property type="term" value="P:negative regulation of chondrocyte differentiation"/>
    <property type="evidence" value="ECO:0007669"/>
    <property type="project" value="Ensembl"/>
</dbReference>
<dbReference type="GO" id="GO:0045892">
    <property type="term" value="P:negative regulation of DNA-templated transcription"/>
    <property type="evidence" value="ECO:0000315"/>
    <property type="project" value="UniProtKB"/>
</dbReference>
<dbReference type="GO" id="GO:0010629">
    <property type="term" value="P:negative regulation of gene expression"/>
    <property type="evidence" value="ECO:0007669"/>
    <property type="project" value="Ensembl"/>
</dbReference>
<dbReference type="GO" id="GO:0003340">
    <property type="term" value="P:negative regulation of mesenchymal to epithelial transition involved in metanephros morphogenesis"/>
    <property type="evidence" value="ECO:0007669"/>
    <property type="project" value="Ensembl"/>
</dbReference>
<dbReference type="GO" id="GO:0045976">
    <property type="term" value="P:negative regulation of mitotic cell cycle, embryonic"/>
    <property type="evidence" value="ECO:0000250"/>
    <property type="project" value="UniProtKB"/>
</dbReference>
<dbReference type="GO" id="GO:0048715">
    <property type="term" value="P:negative regulation of oligodendrocyte differentiation"/>
    <property type="evidence" value="ECO:0007669"/>
    <property type="project" value="Ensembl"/>
</dbReference>
<dbReference type="GO" id="GO:0045671">
    <property type="term" value="P:negative regulation of osteoclast differentiation"/>
    <property type="evidence" value="ECO:0007669"/>
    <property type="project" value="Ensembl"/>
</dbReference>
<dbReference type="GO" id="GO:1903377">
    <property type="term" value="P:negative regulation of oxidative stress-induced neuron intrinsic apoptotic signaling pathway"/>
    <property type="evidence" value="ECO:0007669"/>
    <property type="project" value="Ensembl"/>
</dbReference>
<dbReference type="GO" id="GO:0033234">
    <property type="term" value="P:negative regulation of protein sumoylation"/>
    <property type="evidence" value="ECO:0000314"/>
    <property type="project" value="UniProtKB"/>
</dbReference>
<dbReference type="GO" id="GO:0000122">
    <property type="term" value="P:negative regulation of transcription by RNA polymerase II"/>
    <property type="evidence" value="ECO:0007669"/>
    <property type="project" value="Ensembl"/>
</dbReference>
<dbReference type="GO" id="GO:0072079">
    <property type="term" value="P:nephron tubule formation"/>
    <property type="evidence" value="ECO:0007669"/>
    <property type="project" value="Ensembl"/>
</dbReference>
<dbReference type="GO" id="GO:0001840">
    <property type="term" value="P:neural plate development"/>
    <property type="evidence" value="ECO:0007669"/>
    <property type="project" value="Ensembl"/>
</dbReference>
<dbReference type="GO" id="GO:0007405">
    <property type="term" value="P:neuroblast proliferation"/>
    <property type="evidence" value="ECO:0007669"/>
    <property type="project" value="Ensembl"/>
</dbReference>
<dbReference type="GO" id="GO:0048664">
    <property type="term" value="P:neuron fate determination"/>
    <property type="evidence" value="ECO:0007669"/>
    <property type="project" value="Ensembl"/>
</dbReference>
<dbReference type="GO" id="GO:0001764">
    <property type="term" value="P:neuron migration"/>
    <property type="evidence" value="ECO:0007669"/>
    <property type="project" value="Ensembl"/>
</dbReference>
<dbReference type="GO" id="GO:1990138">
    <property type="term" value="P:neuron projection extension"/>
    <property type="evidence" value="ECO:0000315"/>
    <property type="project" value="UniProtKB"/>
</dbReference>
<dbReference type="GO" id="GO:0042475">
    <property type="term" value="P:odontogenesis of dentin-containing tooth"/>
    <property type="evidence" value="ECO:0007669"/>
    <property type="project" value="Ensembl"/>
</dbReference>
<dbReference type="GO" id="GO:0048709">
    <property type="term" value="P:oligodendrocyte differentiation"/>
    <property type="evidence" value="ECO:0007669"/>
    <property type="project" value="Ensembl"/>
</dbReference>
<dbReference type="GO" id="GO:0048599">
    <property type="term" value="P:oocyte development"/>
    <property type="evidence" value="ECO:0007669"/>
    <property type="project" value="Ensembl"/>
</dbReference>
<dbReference type="GO" id="GO:0001649">
    <property type="term" value="P:osteoblast differentiation"/>
    <property type="evidence" value="ECO:0000315"/>
    <property type="project" value="ARUK-UCL"/>
</dbReference>
<dbReference type="GO" id="GO:0030316">
    <property type="term" value="P:osteoclast differentiation"/>
    <property type="evidence" value="ECO:0007669"/>
    <property type="project" value="Ensembl"/>
</dbReference>
<dbReference type="GO" id="GO:0003151">
    <property type="term" value="P:outflow tract morphogenesis"/>
    <property type="evidence" value="ECO:0000250"/>
    <property type="project" value="BHF-UCL"/>
</dbReference>
<dbReference type="GO" id="GO:0060066">
    <property type="term" value="P:oviduct development"/>
    <property type="evidence" value="ECO:0007669"/>
    <property type="project" value="Ensembl"/>
</dbReference>
<dbReference type="GO" id="GO:0031016">
    <property type="term" value="P:pancreas development"/>
    <property type="evidence" value="ECO:0007669"/>
    <property type="project" value="Ensembl"/>
</dbReference>
<dbReference type="GO" id="GO:0043065">
    <property type="term" value="P:positive regulation of apoptotic process"/>
    <property type="evidence" value="ECO:0000314"/>
    <property type="project" value="UniProtKB"/>
</dbReference>
<dbReference type="GO" id="GO:1905555">
    <property type="term" value="P:positive regulation of blood vessel branching"/>
    <property type="evidence" value="ECO:0000315"/>
    <property type="project" value="BHF-UCL"/>
</dbReference>
<dbReference type="GO" id="GO:0061047">
    <property type="term" value="P:positive regulation of branching involved in lung morphogenesis"/>
    <property type="evidence" value="ECO:0007669"/>
    <property type="project" value="Ensembl"/>
</dbReference>
<dbReference type="GO" id="GO:0045597">
    <property type="term" value="P:positive regulation of cell differentiation"/>
    <property type="evidence" value="ECO:0000303"/>
    <property type="project" value="ComplexPortal"/>
</dbReference>
<dbReference type="GO" id="GO:0008284">
    <property type="term" value="P:positive regulation of cell population proliferation"/>
    <property type="evidence" value="ECO:0000250"/>
    <property type="project" value="BHF-UCL"/>
</dbReference>
<dbReference type="GO" id="GO:2000017">
    <property type="term" value="P:positive regulation of determination of dorsal identity"/>
    <property type="evidence" value="ECO:0007669"/>
    <property type="project" value="Ensembl"/>
</dbReference>
<dbReference type="GO" id="GO:0045893">
    <property type="term" value="P:positive regulation of DNA-templated transcription"/>
    <property type="evidence" value="ECO:0000314"/>
    <property type="project" value="UniProtKB"/>
</dbReference>
<dbReference type="GO" id="GO:0045603">
    <property type="term" value="P:positive regulation of endothelial cell differentiation"/>
    <property type="evidence" value="ECO:0007669"/>
    <property type="project" value="Ensembl"/>
</dbReference>
<dbReference type="GO" id="GO:0060769">
    <property type="term" value="P:positive regulation of epithelial cell proliferation involved in prostate gland development"/>
    <property type="evidence" value="ECO:0007669"/>
    <property type="project" value="Ensembl"/>
</dbReference>
<dbReference type="GO" id="GO:0010718">
    <property type="term" value="P:positive regulation of epithelial to mesenchymal transition"/>
    <property type="evidence" value="ECO:0000315"/>
    <property type="project" value="BHF-UCL"/>
</dbReference>
<dbReference type="GO" id="GO:0045743">
    <property type="term" value="P:positive regulation of fibroblast growth factor receptor signaling pathway"/>
    <property type="evidence" value="ECO:0007669"/>
    <property type="project" value="Ensembl"/>
</dbReference>
<dbReference type="GO" id="GO:0010628">
    <property type="term" value="P:positive regulation of gene expression"/>
    <property type="evidence" value="ECO:0007669"/>
    <property type="project" value="Ensembl"/>
</dbReference>
<dbReference type="GO" id="GO:0010909">
    <property type="term" value="P:positive regulation of heparan sulfate proteoglycan biosynthetic process"/>
    <property type="evidence" value="ECO:0000315"/>
    <property type="project" value="BHF-UCL"/>
</dbReference>
<dbReference type="GO" id="GO:0034112">
    <property type="term" value="P:positive regulation of homotypic cell-cell adhesion"/>
    <property type="evidence" value="ECO:0000316"/>
    <property type="project" value="BHF-UCL"/>
</dbReference>
<dbReference type="GO" id="GO:0043410">
    <property type="term" value="P:positive regulation of MAPK cascade"/>
    <property type="evidence" value="ECO:0007669"/>
    <property type="project" value="Ensembl"/>
</dbReference>
<dbReference type="GO" id="GO:0002053">
    <property type="term" value="P:positive regulation of mesenchymal cell proliferation"/>
    <property type="evidence" value="ECO:0007669"/>
    <property type="project" value="Ensembl"/>
</dbReference>
<dbReference type="GO" id="GO:2000288">
    <property type="term" value="P:positive regulation of myoblast proliferation"/>
    <property type="evidence" value="ECO:0007669"/>
    <property type="project" value="Ensembl"/>
</dbReference>
<dbReference type="GO" id="GO:0002052">
    <property type="term" value="P:positive regulation of neuroblast proliferation"/>
    <property type="evidence" value="ECO:0000250"/>
    <property type="project" value="UniProtKB"/>
</dbReference>
<dbReference type="GO" id="GO:0043525">
    <property type="term" value="P:positive regulation of neuron apoptotic process"/>
    <property type="evidence" value="ECO:0000314"/>
    <property type="project" value="ParkinsonsUK-UCL"/>
</dbReference>
<dbReference type="GO" id="GO:1901331">
    <property type="term" value="P:positive regulation of odontoblast differentiation"/>
    <property type="evidence" value="ECO:0007669"/>
    <property type="project" value="Ensembl"/>
</dbReference>
<dbReference type="GO" id="GO:0045669">
    <property type="term" value="P:positive regulation of osteoblast differentiation"/>
    <property type="evidence" value="ECO:0007669"/>
    <property type="project" value="Ensembl"/>
</dbReference>
<dbReference type="GO" id="GO:0048643">
    <property type="term" value="P:positive regulation of skeletal muscle tissue development"/>
    <property type="evidence" value="ECO:0007669"/>
    <property type="project" value="Ensembl"/>
</dbReference>
<dbReference type="GO" id="GO:2000648">
    <property type="term" value="P:positive regulation of stem cell proliferation"/>
    <property type="evidence" value="ECO:0007669"/>
    <property type="project" value="Ensembl"/>
</dbReference>
<dbReference type="GO" id="GO:0032212">
    <property type="term" value="P:positive regulation of telomere maintenance via telomerase"/>
    <property type="evidence" value="ECO:0000250"/>
    <property type="project" value="ARUK-UCL"/>
</dbReference>
<dbReference type="GO" id="GO:0045944">
    <property type="term" value="P:positive regulation of transcription by RNA polymerase II"/>
    <property type="evidence" value="ECO:0000314"/>
    <property type="project" value="UniProtKB"/>
</dbReference>
<dbReference type="GO" id="GO:0032968">
    <property type="term" value="P:positive regulation of transcription elongation by RNA polymerase II"/>
    <property type="evidence" value="ECO:0007669"/>
    <property type="project" value="Ensembl"/>
</dbReference>
<dbReference type="GO" id="GO:0043161">
    <property type="term" value="P:proteasome-mediated ubiquitin-dependent protein catabolic process"/>
    <property type="evidence" value="ECO:0000314"/>
    <property type="project" value="UniProtKB"/>
</dbReference>
<dbReference type="GO" id="GO:0034394">
    <property type="term" value="P:protein localization to cell surface"/>
    <property type="evidence" value="ECO:0000315"/>
    <property type="project" value="BHF-UCL"/>
</dbReference>
<dbReference type="GO" id="GO:0000209">
    <property type="term" value="P:protein polyubiquitination"/>
    <property type="evidence" value="ECO:0000314"/>
    <property type="project" value="UniProtKB"/>
</dbReference>
<dbReference type="GO" id="GO:0009954">
    <property type="term" value="P:proximal/distal pattern formation"/>
    <property type="evidence" value="ECO:0007669"/>
    <property type="project" value="Ensembl"/>
</dbReference>
<dbReference type="GO" id="GO:0045765">
    <property type="term" value="P:regulation of angiogenesis"/>
    <property type="evidence" value="ECO:0000304"/>
    <property type="project" value="BHF-UCL"/>
</dbReference>
<dbReference type="GO" id="GO:0090279">
    <property type="term" value="P:regulation of calcium ion import"/>
    <property type="evidence" value="ECO:0000314"/>
    <property type="project" value="BHF-UCL"/>
</dbReference>
<dbReference type="GO" id="GO:0030997">
    <property type="term" value="P:regulation of centriole-centriole cohesion"/>
    <property type="evidence" value="ECO:0000314"/>
    <property type="project" value="UniProtKB"/>
</dbReference>
<dbReference type="GO" id="GO:0070602">
    <property type="term" value="P:regulation of centromeric sister chromatid cohesion"/>
    <property type="evidence" value="ECO:0000315"/>
    <property type="project" value="BHF-UCL"/>
</dbReference>
<dbReference type="GO" id="GO:0010717">
    <property type="term" value="P:regulation of epithelial to mesenchymal transition"/>
    <property type="evidence" value="ECO:0000315"/>
    <property type="project" value="UniProtKB"/>
</dbReference>
<dbReference type="GO" id="GO:0048145">
    <property type="term" value="P:regulation of fibroblast proliferation"/>
    <property type="evidence" value="ECO:0000304"/>
    <property type="project" value="BHF-UCL"/>
</dbReference>
<dbReference type="GO" id="GO:0031641">
    <property type="term" value="P:regulation of myelination"/>
    <property type="evidence" value="ECO:0007669"/>
    <property type="project" value="Ensembl"/>
</dbReference>
<dbReference type="GO" id="GO:0072182">
    <property type="term" value="P:regulation of nephron tubule epithelial cell differentiation"/>
    <property type="evidence" value="ECO:0000250"/>
    <property type="project" value="UniProtKB"/>
</dbReference>
<dbReference type="GO" id="GO:0050767">
    <property type="term" value="P:regulation of neurogenesis"/>
    <property type="evidence" value="ECO:0000304"/>
    <property type="project" value="ParkinsonsUK-UCL"/>
</dbReference>
<dbReference type="GO" id="GO:2000008">
    <property type="term" value="P:regulation of protein localization to cell surface"/>
    <property type="evidence" value="ECO:0000314"/>
    <property type="project" value="BHF-UCL"/>
</dbReference>
<dbReference type="GO" id="GO:0031396">
    <property type="term" value="P:regulation of protein ubiquitination"/>
    <property type="evidence" value="ECO:0000315"/>
    <property type="project" value="DisProt"/>
</dbReference>
<dbReference type="GO" id="GO:0003266">
    <property type="term" value="P:regulation of secondary heart field cardioblast proliferation"/>
    <property type="evidence" value="ECO:0007669"/>
    <property type="project" value="Ensembl"/>
</dbReference>
<dbReference type="GO" id="GO:0048660">
    <property type="term" value="P:regulation of smooth muscle cell proliferation"/>
    <property type="evidence" value="ECO:0000315"/>
    <property type="project" value="BHF-UCL"/>
</dbReference>
<dbReference type="GO" id="GO:0051963">
    <property type="term" value="P:regulation of synapse assembly"/>
    <property type="evidence" value="ECO:0007669"/>
    <property type="project" value="Ensembl"/>
</dbReference>
<dbReference type="GO" id="GO:0042129">
    <property type="term" value="P:regulation of T cell proliferation"/>
    <property type="evidence" value="ECO:0007669"/>
    <property type="project" value="Ensembl"/>
</dbReference>
<dbReference type="GO" id="GO:0051884">
    <property type="term" value="P:regulation of timing of anagen"/>
    <property type="evidence" value="ECO:0007669"/>
    <property type="project" value="Ensembl"/>
</dbReference>
<dbReference type="GO" id="GO:0072053">
    <property type="term" value="P:renal inner medulla development"/>
    <property type="evidence" value="ECO:0007669"/>
    <property type="project" value="Ensembl"/>
</dbReference>
<dbReference type="GO" id="GO:0072054">
    <property type="term" value="P:renal outer medulla development"/>
    <property type="evidence" value="ECO:0007669"/>
    <property type="project" value="Ensembl"/>
</dbReference>
<dbReference type="GO" id="GO:0072033">
    <property type="term" value="P:renal vesicle formation"/>
    <property type="evidence" value="ECO:0007669"/>
    <property type="project" value="Ensembl"/>
</dbReference>
<dbReference type="GO" id="GO:0032355">
    <property type="term" value="P:response to estradiol"/>
    <property type="evidence" value="ECO:0000314"/>
    <property type="project" value="BHF-UCL"/>
</dbReference>
<dbReference type="GO" id="GO:0009410">
    <property type="term" value="P:response to xenobiotic stimulus"/>
    <property type="evidence" value="ECO:0000270"/>
    <property type="project" value="UniProtKB"/>
</dbReference>
<dbReference type="GO" id="GO:0051145">
    <property type="term" value="P:smooth muscle cell differentiation"/>
    <property type="evidence" value="ECO:0007669"/>
    <property type="project" value="Ensembl"/>
</dbReference>
<dbReference type="GO" id="GO:0019827">
    <property type="term" value="P:stem cell population maintenance"/>
    <property type="evidence" value="ECO:0000304"/>
    <property type="project" value="BHF-UCL"/>
</dbReference>
<dbReference type="GO" id="GO:0072089">
    <property type="term" value="P:stem cell proliferation"/>
    <property type="evidence" value="ECO:0007669"/>
    <property type="project" value="Ensembl"/>
</dbReference>
<dbReference type="GO" id="GO:0061549">
    <property type="term" value="P:sympathetic ganglion development"/>
    <property type="evidence" value="ECO:0000250"/>
    <property type="project" value="UniProtKB"/>
</dbReference>
<dbReference type="GO" id="GO:0050808">
    <property type="term" value="P:synapse organization"/>
    <property type="evidence" value="ECO:0007669"/>
    <property type="project" value="Ensembl"/>
</dbReference>
<dbReference type="GO" id="GO:0097091">
    <property type="term" value="P:synaptic vesicle clustering"/>
    <property type="evidence" value="ECO:0007669"/>
    <property type="project" value="Ensembl"/>
</dbReference>
<dbReference type="GO" id="GO:0048489">
    <property type="term" value="P:synaptic vesicle transport"/>
    <property type="evidence" value="ECO:0007669"/>
    <property type="project" value="Ensembl"/>
</dbReference>
<dbReference type="GO" id="GO:0033077">
    <property type="term" value="P:T cell differentiation in thymus"/>
    <property type="evidence" value="ECO:0007669"/>
    <property type="project" value="Ensembl"/>
</dbReference>
<dbReference type="GO" id="GO:0048538">
    <property type="term" value="P:thymus development"/>
    <property type="evidence" value="ECO:0007669"/>
    <property type="project" value="Ensembl"/>
</dbReference>
<dbReference type="GO" id="GO:0060440">
    <property type="term" value="P:trachea formation"/>
    <property type="evidence" value="ECO:0007669"/>
    <property type="project" value="Ensembl"/>
</dbReference>
<dbReference type="GO" id="GO:0006366">
    <property type="term" value="P:transcription by RNA polymerase II"/>
    <property type="evidence" value="ECO:0007669"/>
    <property type="project" value="Ensembl"/>
</dbReference>
<dbReference type="CDD" id="cd21724">
    <property type="entry name" value="CTNNAbd_CTNNB1"/>
    <property type="match status" value="1"/>
</dbReference>
<dbReference type="DisProt" id="DP01119"/>
<dbReference type="FunFam" id="1.25.10.10:FF:000015">
    <property type="entry name" value="Catenin beta-1"/>
    <property type="match status" value="1"/>
</dbReference>
<dbReference type="Gene3D" id="1.25.10.10">
    <property type="entry name" value="Leucine-rich Repeat Variant"/>
    <property type="match status" value="1"/>
</dbReference>
<dbReference type="IDEAL" id="IID00039"/>
<dbReference type="InterPro" id="IPR011989">
    <property type="entry name" value="ARM-like"/>
</dbReference>
<dbReference type="InterPro" id="IPR016024">
    <property type="entry name" value="ARM-type_fold"/>
</dbReference>
<dbReference type="InterPro" id="IPR000225">
    <property type="entry name" value="Armadillo"/>
</dbReference>
<dbReference type="InterPro" id="IPR013284">
    <property type="entry name" value="Beta-catenin"/>
</dbReference>
<dbReference type="PANTHER" id="PTHR45976">
    <property type="entry name" value="ARMADILLO SEGMENT POLARITY PROTEIN"/>
    <property type="match status" value="1"/>
</dbReference>
<dbReference type="Pfam" id="PF00514">
    <property type="entry name" value="Arm"/>
    <property type="match status" value="4"/>
</dbReference>
<dbReference type="PRINTS" id="PR01869">
    <property type="entry name" value="BCATNINFAMLY"/>
</dbReference>
<dbReference type="SMART" id="SM00185">
    <property type="entry name" value="ARM"/>
    <property type="match status" value="12"/>
</dbReference>
<dbReference type="SUPFAM" id="SSF48371">
    <property type="entry name" value="ARM repeat"/>
    <property type="match status" value="1"/>
</dbReference>
<dbReference type="PROSITE" id="PS50176">
    <property type="entry name" value="ARM_REPEAT"/>
    <property type="match status" value="9"/>
</dbReference>
<accession>P35222</accession>
<accession>A8K1L7</accession>
<accession>Q8NEW9</accession>
<accession>Q8NI94</accession>
<accession>Q9H391</accession>
<organism>
    <name type="scientific">Homo sapiens</name>
    <name type="common">Human</name>
    <dbReference type="NCBI Taxonomy" id="9606"/>
    <lineage>
        <taxon>Eukaryota</taxon>
        <taxon>Metazoa</taxon>
        <taxon>Chordata</taxon>
        <taxon>Craniata</taxon>
        <taxon>Vertebrata</taxon>
        <taxon>Euteleostomi</taxon>
        <taxon>Mammalia</taxon>
        <taxon>Eutheria</taxon>
        <taxon>Euarchontoglires</taxon>
        <taxon>Primates</taxon>
        <taxon>Haplorrhini</taxon>
        <taxon>Catarrhini</taxon>
        <taxon>Hominidae</taxon>
        <taxon>Homo</taxon>
    </lineage>
</organism>
<comment type="function">
    <text evidence="3 44 45 46 49 61 64 65 67 68 85">Key downstream component of the canonical Wnt signaling pathway (PubMed:17524503, PubMed:18077326, PubMed:18086858, PubMed:18957423, PubMed:21262353, PubMed:22155184, PubMed:22647378, PubMed:22699938). In the absence of Wnt, forms a complex with AXIN1, AXIN2, APC, CSNK1A1 and GSK3B that promotes phosphorylation on N-terminal Ser and Thr residues and ubiquitination of CTNNB1 via BTRC and its subsequent degradation by the proteasome (PubMed:17524503, PubMed:18077326, PubMed:18086858, PubMed:18957423, PubMed:21262353, PubMed:22155184, PubMed:22647378, PubMed:22699938). In the presence of Wnt ligand, CTNNB1 is not ubiquitinated and accumulates in the nucleus, where it acts as a coactivator for transcription factors of the TCF/LEF family, leading to activate Wnt responsive genes (PubMed:17524503, PubMed:18077326, PubMed:18086858, PubMed:18957423, PubMed:21262353, PubMed:22155184, PubMed:22647378, PubMed:22699938). Also acts as a coactivator for other transcription factors, such as NR5A2 (PubMed:22187462). Promotes epithelial to mesenchymal transition/mesenchymal to epithelial transition (EMT/MET) via driving transcription of CTNNB1/TCF-target genes (PubMed:29910125). Involved in the regulation of cell adhesion, as component of an E-cadherin:catenin adhesion complex (By similarity). Acts as a negative regulator of centrosome cohesion (PubMed:18086858). Involved in the CDK2/PTPN6/CTNNB1/CEACAM1 pathway of insulin internalization (PubMed:21262353). Blocks anoikis of malignant kidney and intestinal epithelial cells and promotes their anchorage-independent growth by down-regulating DAPK2 (PubMed:18957423). Disrupts PML function and PML-NB formation by inhibiting RANBP2-mediated sumoylation of PML (PubMed:22155184). Promotes neurogenesis by maintaining sympathetic neuroblasts within the cell cycle (By similarity). Involved in chondrocyte differentiation via interaction with SOX9: SOX9-binding competes with the binding sites of TCF/LEF within CTNNB1, thereby inhibiting the Wnt signaling (By similarity). Acts as a positive regulator of odontoblast differentiation during mesenchymal tooth germ formation, via promoting the transcription of differentiation factors such as LEF1, BMP2 and BMP4 (By similarity). Activity is repressed in a MSX1-mediated manner at the bell stage of mesenchymal tooth germ formation which prevents premature differentiation of odontoblasts (By similarity).</text>
</comment>
<comment type="subunit">
    <text evidence="3 14 16 17 19 21 22 23 24 27 28 29 30 31 32 34 35 36 37 38 39 40 41 42 43 44 45 46 47 48 50 51 52 53 54 55 56 59 60 61 62 63 64 65 67 68 72 73 74 76 77 80 81 82 83 84 85 86 89 98">Two separate complex-associated pools are found in the cytoplasm. The majority is present as component of an E-cadherin:catenin adhesion complex composed of at least E-cadherin/CDH1 and beta-catenin/CTNNB1, and possibly alpha-catenin/CTNNA1; the complex is located to adherens junctions. The stable association of CTNNA1 is controversial as CTNNA1 was shown not to bind to F-actin when assembled in the complex. Alternatively, the CTNNA1-containing complex may be linked to F-actin by other proteins such as LIMA1. Another cytoplasmic pool is part of a large complex containing AXIN1, AXIN2, APC, CSNK1A1 and GSK3B that promotes phosphorylation on N-terminal Ser and Thr residues and ubiquitination of CTNNB1 via BTRC and its subsequent degradation by the proteasome. Wnt-dependent activation of DVL antagonizes the action of GSK3B. When GSK3B activity is inhibited the complex dissociates, CTNNB1 is dephosphorylated and is no longer targeted for destruction. The stabilized protein translocates to the nucleus, where it binds TCF/LEF-1 family members, BCL9, BCL9L and possibly also RUVBL1 and CHD8. Binds CTNNBIP and EP300. CTNNB1 forms a ternary complex with LEF1 and EP300 that is disrupted by CTNNBIP1 binding. Interacts with TAX1BP3 (via the PDZ domain); this interaction inhibits the transcriptional activity of CTNNB1. Interacts with AJAP1, BAIAP1, CARM1, CTNNA3, CXADR and PCDH11Y. Binds NHERF1. Interacts with GLIS2 and MUC1. Interacts with SLC30A9. Interacts with XIRP1. Interacts directly with AXIN1; the interaction is regulated by CDK2 phosphorylation of AXIN1. Interacts with SCRIB. Interacts with RAPGEF2. Interacts with PTPRU (via the cytoplasmic juxtamembrane domain). Interacts with EMD. Interacts with TNIK and TCF7L2. Interacts with SESTD1 and TRPC4. Interacts with CAV1. Interacts with TRPV4. The TRPV4 and CTNNB1 complex can interact with CDH1. Interacts with VCL. Interacts with PTPRJ. Interacts with PKT7 and CDK2. Interacts with FAT1 (via the cytoplasmic domain). Interacts with NANOS1 and NDRG2. Interacts with isoform 1 of NEK2. Interacts with both isoform 1 and isoform 2 of CDK5. Interacts with PTK6. Interacts with SOX7; this interaction may lead to proteasomal degradation of active CTNNB1 and thus inhibition of Wnt/beta-catenin-stimulated transcription. Identified in a complex with HINT1 and MITF. Interacts with FHIT. The CTNNB1 and TCF7L2/TCF4 complex interacts with PML (isoform PML-4). Interacts with FERMT2. Identified in a complex with TCF7L2/TCF4 and FERMT2 (PubMed:22699938, PubMed:29739711). Interacts with RORA. May interact with P-cadherin/CDH3. Interacts with RNF220 (PubMed:25266658). Interacts with CTNND2 (PubMed:25807484). Interacts (via the C-terminal region) with CBY1 (PubMed:12712206, PubMed:16424001, PubMed:19435523). The complex composed, at least, of APC, CTNNB1 and GSK3B interacts with JPT1; the interaction requires the inactive form of GSK3B (phosphorylated at 'Ser-9') (PubMed:25169422). Interacts with DLG5 (By similarity). Interacts with FAM53B; promoting translocation to the nucleus (PubMed:25183871). Interacts with TMEM170B (PubMed:29367600). Interacts with AHI1 (PubMed:21623382). Interacts with GID8 (PubMed:28829046). Component of an cadherin:catenin adhesion complex composed of at least of CDH26, beta-catenin/CTNNB1, alpha-catenin/CTNNA1 and p120 catenin/CTNND1 (PubMed:28051089). Forms a complex comprising APPL1, RUVBL2, APPL2, HDAC1 and HDAC2 (PubMed:19433865). Interacts with IRF2BPL; mediates the ubiquitination and degradation of CTNNB1 (PubMed:29374064). Interacts with AMFR (By similarity). Interacts with LMBR1L (PubMed:31073040). Interacts with SOX30; prevents interaction of CTNNB1 with TCF7L2/TCF4 and leads to inhibition of Wnt signaling (PubMed:29739711). Interacts with SOX9; inhibiting CTNNB1 activity by competing with the binding sites of TCF/LEF within CTNNB1, thereby inhibiting the Wnt signaling (By similarity). Interacts with SPN/CD43 cytoplasmic tail (PubMed:15003504). Interacts (when phosphorylated at Tyr-333) with isoform M2 of PKM (PKM2); promoting transcription activation (PubMed:22056988). Interacts with PKP2 (via HEAD domain) (PubMed:11790773). Interacts with CDH1 (PubMed:11790773). Interacts (when unphosphorylated) with FLYWCH1, perhaps preventing interaction of CTNNB1 with TCF4, and thereby regulating transcription activation; phosphorylation of CTNNB1 may inhibit the interaction (PubMed:30097457). Interacts (via the central armadillo domains) with probable transcriptional regulator ADNP (via N-terminal region); interaction is direct and stabilizes CTNNB1 by modulating its phosphorylation by glycogen synthase kinase-3 beta GSK3B (By similarity). Interacts with NR5A2 (PubMed:22187462). Interacts with DSG2; the interaction promotes localization of CTNNB1 at cell junctions thus reducing its nuclear localization and subsequent transcription of CTNNB1/TCF-target genes (PubMed:29910125).</text>
</comment>
<comment type="subunit">
    <text evidence="83">(Microbial infection) Interacts with herpes virus 8 protein vPK; this interaction inhibits the Wnt signaling pathway.</text>
</comment>
<comment type="interaction">
    <interactant intactId="EBI-491549">
        <id>P35222</id>
    </interactant>
    <interactant intactId="EBI-640741">
        <id>P01023</id>
        <label>A2M</label>
    </interactant>
    <organismsDiffer>false</organismsDiffer>
    <experiments>3</experiments>
</comment>
<comment type="interaction">
    <interactant intactId="EBI-491549">
        <id>P35222</id>
    </interactant>
    <interactant intactId="EBI-375543">
        <id>P00519</id>
        <label>ABL1</label>
    </interactant>
    <organismsDiffer>false</organismsDiffer>
    <experiments>2</experiments>
</comment>
<comment type="interaction">
    <interactant intactId="EBI-491549">
        <id>P35222</id>
    </interactant>
    <interactant intactId="EBI-351526">
        <id>O43707</id>
        <label>ACTN4</label>
    </interactant>
    <organismsDiffer>false</organismsDiffer>
    <experiments>7</experiments>
</comment>
<comment type="interaction">
    <interactant intactId="EBI-491549">
        <id>P35222</id>
    </interactant>
    <interactant intactId="EBI-2562430">
        <id>Q02952</id>
        <label>AKAP12</label>
    </interactant>
    <organismsDiffer>false</organismsDiffer>
    <experiments>2</experiments>
</comment>
<comment type="interaction">
    <interactant intactId="EBI-491549">
        <id>P35222</id>
    </interactant>
    <interactant intactId="EBI-6169747">
        <id>Q5JTC6</id>
        <label>AMER1</label>
    </interactant>
    <organismsDiffer>false</organismsDiffer>
    <experiments>9</experiments>
</comment>
<comment type="interaction">
    <interactant intactId="EBI-491549">
        <id>P35222</id>
    </interactant>
    <interactant intactId="EBI-727707">
        <id>P25054</id>
        <label>APC</label>
    </interactant>
    <organismsDiffer>false</organismsDiffer>
    <experiments>22</experiments>
</comment>
<comment type="interaction">
    <interactant intactId="EBI-491549">
        <id>P35222</id>
    </interactant>
    <interactant intactId="EBI-608057">
        <id>P10275</id>
        <label>AR</label>
    </interactant>
    <organismsDiffer>false</organismsDiffer>
    <experiments>11</experiments>
</comment>
<comment type="interaction">
    <interactant intactId="EBI-491549">
        <id>P35222</id>
    </interactant>
    <interactant intactId="EBI-710484">
        <id>O15169</id>
        <label>AXIN1</label>
    </interactant>
    <organismsDiffer>false</organismsDiffer>
    <experiments>44</experiments>
</comment>
<comment type="interaction">
    <interactant intactId="EBI-491549">
        <id>P35222</id>
    </interactant>
    <interactant intactId="EBI-4400025">
        <id>Q9Y2T1</id>
        <label>AXIN2</label>
    </interactant>
    <organismsDiffer>false</organismsDiffer>
    <experiments>2</experiments>
</comment>
<comment type="interaction">
    <interactant intactId="EBI-491549">
        <id>P35222</id>
    </interactant>
    <interactant intactId="EBI-533127">
        <id>O00512</id>
        <label>BCL9</label>
    </interactant>
    <organismsDiffer>false</organismsDiffer>
    <experiments>5</experiments>
</comment>
<comment type="interaction">
    <interactant intactId="EBI-491549">
        <id>P35222</id>
    </interactant>
    <interactant intactId="EBI-7286259">
        <id>A1Z199</id>
        <label>BCR/ABL fusion</label>
    </interactant>
    <organismsDiffer>false</organismsDiffer>
    <experiments>2</experiments>
</comment>
<comment type="interaction">
    <interactant intactId="EBI-491549">
        <id>P35222</id>
    </interactant>
    <interactant intactId="EBI-12275524">
        <id>P23560-2</id>
        <label>BDNF</label>
    </interactant>
    <organismsDiffer>false</organismsDiffer>
    <experiments>3</experiments>
</comment>
<comment type="interaction">
    <interactant intactId="EBI-491549">
        <id>P35222</id>
    </interactant>
    <interactant intactId="EBI-2683809">
        <id>Q2LD37</id>
        <label>BLTP1</label>
    </interactant>
    <organismsDiffer>false</organismsDiffer>
    <experiments>2</experiments>
</comment>
<comment type="interaction">
    <interactant intactId="EBI-491549">
        <id>P35222</id>
    </interactant>
    <interactant intactId="EBI-307461">
        <id>Q9Y297</id>
        <label>BTRC</label>
    </interactant>
    <organismsDiffer>false</organismsDiffer>
    <experiments>8</experiments>
</comment>
<comment type="interaction">
    <interactant intactId="EBI-491549">
        <id>P35222</id>
    </interactant>
    <interactant intactId="EBI-718729">
        <id>P55212</id>
        <label>CASP6</label>
    </interactant>
    <organismsDiffer>false</organismsDiffer>
    <experiments>3</experiments>
</comment>
<comment type="interaction">
    <interactant intactId="EBI-491549">
        <id>P35222</id>
    </interactant>
    <interactant intactId="EBI-740135">
        <id>P35520</id>
        <label>CBS</label>
    </interactant>
    <organismsDiffer>false</organismsDiffer>
    <experiments>3</experiments>
</comment>
<comment type="interaction">
    <interactant intactId="EBI-491549">
        <id>P35222</id>
    </interactant>
    <interactant intactId="EBI-930143">
        <id>Q6P1J9</id>
        <label>CDC73</label>
    </interactant>
    <organismsDiffer>false</organismsDiffer>
    <experiments>10</experiments>
</comment>
<comment type="interaction">
    <interactant intactId="EBI-491549">
        <id>P35222</id>
    </interactant>
    <interactant intactId="EBI-727477">
        <id>P12830</id>
        <label>CDH1</label>
    </interactant>
    <organismsDiffer>false</organismsDiffer>
    <experiments>22</experiments>
</comment>
<comment type="interaction">
    <interactant intactId="EBI-491549">
        <id>P35222</id>
    </interactant>
    <interactant intactId="EBI-2256711">
        <id>P19022</id>
        <label>CDH2</label>
    </interactant>
    <organismsDiffer>false</organismsDiffer>
    <experiments>12</experiments>
</comment>
<comment type="interaction">
    <interactant intactId="EBI-491549">
        <id>P35222</id>
    </interactant>
    <interactant intactId="EBI-2903122">
        <id>P33151</id>
        <label>CDH5</label>
    </interactant>
    <organismsDiffer>false</organismsDiffer>
    <experiments>8</experiments>
</comment>
<comment type="interaction">
    <interactant intactId="EBI-491549">
        <id>P35222</id>
    </interactant>
    <interactant intactId="EBI-81215">
        <id>Q92793</id>
        <label>CREBBP</label>
    </interactant>
    <organismsDiffer>false</organismsDiffer>
    <experiments>2</experiments>
</comment>
<comment type="interaction">
    <interactant intactId="EBI-491549">
        <id>P35222</id>
    </interactant>
    <interactant intactId="EBI-739060">
        <id>P02511</id>
        <label>CRYAB</label>
    </interactant>
    <organismsDiffer>false</organismsDiffer>
    <experiments>6</experiments>
</comment>
<comment type="interaction">
    <interactant intactId="EBI-491549">
        <id>P35222</id>
    </interactant>
    <interactant intactId="EBI-701918">
        <id>P35221</id>
        <label>CTNNA1</label>
    </interactant>
    <organismsDiffer>false</organismsDiffer>
    <experiments>7</experiments>
</comment>
<comment type="interaction">
    <interactant intactId="EBI-491549">
        <id>P35222</id>
    </interactant>
    <interactant intactId="EBI-3953920">
        <id>P26232</id>
        <label>CTNNA2</label>
    </interactant>
    <organismsDiffer>false</organismsDiffer>
    <experiments>5</experiments>
</comment>
<comment type="interaction">
    <interactant intactId="EBI-491549">
        <id>P35222</id>
    </interactant>
    <interactant intactId="EBI-21980640">
        <id>Q9UI47-1</id>
        <label>CTNNA3</label>
    </interactant>
    <organismsDiffer>false</organismsDiffer>
    <experiments>4</experiments>
</comment>
<comment type="interaction">
    <interactant intactId="EBI-491549">
        <id>P35222</id>
    </interactant>
    <interactant intactId="EBI-747082">
        <id>Q9NSA3</id>
        <label>CTNNBIP1</label>
    </interactant>
    <organismsDiffer>false</organismsDiffer>
    <experiments>16</experiments>
</comment>
<comment type="interaction">
    <interactant intactId="EBI-491549">
        <id>P35222</id>
    </interactant>
    <interactant intactId="EBI-3951744">
        <id>Q9NYF0</id>
        <label>DACT1</label>
    </interactant>
    <organismsDiffer>false</organismsDiffer>
    <experiments>3</experiments>
</comment>
<comment type="interaction">
    <interactant intactId="EBI-491549">
        <id>P35222</id>
    </interactant>
    <interactant intactId="EBI-10976677">
        <id>G5E9A7</id>
        <label>DMWD</label>
    </interactant>
    <organismsDiffer>false</organismsDiffer>
    <experiments>3</experiments>
</comment>
<comment type="interaction">
    <interactant intactId="EBI-491549">
        <id>P35222</id>
    </interactant>
    <interactant intactId="EBI-719459">
        <id>P26358</id>
        <label>DNMT1</label>
    </interactant>
    <organismsDiffer>false</organismsDiffer>
    <experiments>8</experiments>
</comment>
<comment type="interaction">
    <interactant intactId="EBI-491549">
        <id>P35222</id>
    </interactant>
    <interactant intactId="EBI-2834611">
        <id>P18146</id>
        <label>EGR1</label>
    </interactant>
    <organismsDiffer>false</organismsDiffer>
    <experiments>7</experiments>
</comment>
<comment type="interaction">
    <interactant intactId="EBI-491549">
        <id>P35222</id>
    </interactant>
    <interactant intactId="EBI-489887">
        <id>P50402</id>
        <label>EMD</label>
    </interactant>
    <organismsDiffer>false</organismsDiffer>
    <experiments>3</experiments>
</comment>
<comment type="interaction">
    <interactant intactId="EBI-491549">
        <id>P35222</id>
    </interactant>
    <interactant intactId="EBI-702104">
        <id>P29317</id>
        <label>EPHA2</label>
    </interactant>
    <organismsDiffer>false</organismsDiffer>
    <experiments>2</experiments>
</comment>
<comment type="interaction">
    <interactant intactId="EBI-491549">
        <id>P35222</id>
    </interactant>
    <interactant intactId="EBI-355189">
        <id>Q9UKB1</id>
        <label>FBXW11</label>
    </interactant>
    <organismsDiffer>false</organismsDiffer>
    <experiments>4</experiments>
</comment>
<comment type="interaction">
    <interactant intactId="EBI-491549">
        <id>P35222</id>
    </interactant>
    <interactant intactId="EBI-4399465">
        <id>Q96AC1</id>
        <label>FERMT2</label>
    </interactant>
    <organismsDiffer>false</organismsDiffer>
    <experiments>13</experiments>
</comment>
<comment type="interaction">
    <interactant intactId="EBI-491549">
        <id>P35222</id>
    </interactant>
    <interactant intactId="EBI-12836320">
        <id>Q92915-2</id>
        <label>FGF14</label>
    </interactant>
    <organismsDiffer>false</organismsDiffer>
    <experiments>3</experiments>
</comment>
<comment type="interaction">
    <interactant intactId="EBI-491549">
        <id>P35222</id>
    </interactant>
    <interactant intactId="EBI-1028277">
        <id>P11362</id>
        <label>FGFR1</label>
    </interactant>
    <organismsDiffer>false</organismsDiffer>
    <experiments>3</experiments>
</comment>
<comment type="interaction">
    <interactant intactId="EBI-491549">
        <id>P35222</id>
    </interactant>
    <interactant intactId="EBI-741760">
        <id>P49789</id>
        <label>FHIT</label>
    </interactant>
    <organismsDiffer>false</organismsDiffer>
    <experiments>4</experiments>
</comment>
<comment type="interaction">
    <interactant intactId="EBI-491549">
        <id>P35222</id>
    </interactant>
    <interactant intactId="EBI-866480">
        <id>Q08050</id>
        <label>FOXM1</label>
    </interactant>
    <organismsDiffer>false</organismsDiffer>
    <experiments>16</experiments>
</comment>
<comment type="interaction">
    <interactant intactId="EBI-491549">
        <id>P35222</id>
    </interactant>
    <interactant intactId="EBI-354056">
        <id>P04406</id>
        <label>GAPDH</label>
    </interactant>
    <organismsDiffer>false</organismsDiffer>
    <experiments>3</experiments>
</comment>
<comment type="interaction">
    <interactant intactId="EBI-491549">
        <id>P35222</id>
    </interactant>
    <interactant intactId="EBI-744302">
        <id>P14136</id>
        <label>GFAP</label>
    </interactant>
    <organismsDiffer>false</organismsDiffer>
    <experiments>3</experiments>
</comment>
<comment type="interaction">
    <interactant intactId="EBI-491549">
        <id>P35222</id>
    </interactant>
    <interactant intactId="EBI-7251368">
        <id>Q9BZE0</id>
        <label>GLIS2</label>
    </interactant>
    <organismsDiffer>false</organismsDiffer>
    <experiments>6</experiments>
</comment>
<comment type="interaction">
    <interactant intactId="EBI-491549">
        <id>P35222</id>
    </interactant>
    <interactant intactId="EBI-373586">
        <id>P49841</id>
        <label>GSK3B</label>
    </interactant>
    <organismsDiffer>false</organismsDiffer>
    <experiments>20</experiments>
</comment>
<comment type="interaction">
    <interactant intactId="EBI-491549">
        <id>P35222</id>
    </interactant>
    <interactant intactId="EBI-301697">
        <id>Q9UBN7</id>
        <label>HDAC6</label>
    </interactant>
    <organismsDiffer>false</organismsDiffer>
    <experiments>4</experiments>
</comment>
<comment type="interaction">
    <interactant intactId="EBI-491549">
        <id>P35222</id>
    </interactant>
    <interactant intactId="EBI-447269">
        <id>Q16665</id>
        <label>HIF1A</label>
    </interactant>
    <organismsDiffer>false</organismsDiffer>
    <experiments>4</experiments>
</comment>
<comment type="interaction">
    <interactant intactId="EBI-491549">
        <id>P35222</id>
    </interactant>
    <interactant intactId="EBI-473886">
        <id>O00291</id>
        <label>HIP1</label>
    </interactant>
    <organismsDiffer>false</organismsDiffer>
    <experiments>3</experiments>
</comment>
<comment type="interaction">
    <interactant intactId="EBI-491549">
        <id>P35222</id>
    </interactant>
    <interactant intactId="EBI-296047">
        <id>P07900</id>
        <label>HSP90AA1</label>
    </interactant>
    <organismsDiffer>false</organismsDiffer>
    <experiments>3</experiments>
</comment>
<comment type="interaction">
    <interactant intactId="EBI-491549">
        <id>P35222</id>
    </interactant>
    <interactant intactId="EBI-466029">
        <id>P42858</id>
        <label>HTT</label>
    </interactant>
    <organismsDiffer>false</organismsDiffer>
    <experiments>14</experiments>
</comment>
<comment type="interaction">
    <interactant intactId="EBI-491549">
        <id>P35222</id>
    </interactant>
    <interactant intactId="EBI-475981">
        <id>P08069</id>
        <label>IGF1R</label>
    </interactant>
    <organismsDiffer>false</organismsDiffer>
    <experiments>3</experiments>
</comment>
<comment type="interaction">
    <interactant intactId="EBI-491549">
        <id>P35222</id>
    </interactant>
    <interactant intactId="EBI-297509">
        <id>P46940</id>
        <label>IQGAP1</label>
    </interactant>
    <organismsDiffer>false</organismsDiffer>
    <experiments>3</experiments>
</comment>
<comment type="interaction">
    <interactant intactId="EBI-491549">
        <id>P35222</id>
    </interactant>
    <interactant intactId="EBI-1055254">
        <id>Q8WXH2</id>
        <label>JPH3</label>
    </interactant>
    <organismsDiffer>false</organismsDiffer>
    <experiments>3</experiments>
</comment>
<comment type="interaction">
    <interactant intactId="EBI-491549">
        <id>P35222</id>
    </interactant>
    <interactant intactId="EBI-8607681">
        <id>O75564</id>
        <label>JRK</label>
    </interactant>
    <organismsDiffer>false</organismsDiffer>
    <experiments>3</experiments>
</comment>
<comment type="interaction">
    <interactant intactId="EBI-491549">
        <id>P35222</id>
    </interactant>
    <interactant intactId="EBI-2556221">
        <id>Q14678</id>
        <label>KANK1</label>
    </interactant>
    <organismsDiffer>false</organismsDiffer>
    <experiments>2</experiments>
</comment>
<comment type="interaction">
    <interactant intactId="EBI-491549">
        <id>P35222</id>
    </interactant>
    <interactant intactId="EBI-21591415">
        <id>P13473-2</id>
        <label>LAMP2</label>
    </interactant>
    <organismsDiffer>false</organismsDiffer>
    <experiments>3</experiments>
</comment>
<comment type="interaction">
    <interactant intactId="EBI-491549">
        <id>P35222</id>
    </interactant>
    <interactant intactId="EBI-926131">
        <id>Q9UJU2</id>
        <label>LEF1</label>
    </interactant>
    <organismsDiffer>false</organismsDiffer>
    <experiments>10</experiments>
</comment>
<comment type="interaction">
    <interactant intactId="EBI-491549">
        <id>P35222</id>
    </interactant>
    <interactant intactId="EBI-932432">
        <id>Q8WVC0</id>
        <label>LEO1</label>
    </interactant>
    <organismsDiffer>false</organismsDiffer>
    <experiments>2</experiments>
</comment>
<comment type="interaction">
    <interactant intactId="EBI-491549">
        <id>P35222</id>
    </interactant>
    <interactant intactId="EBI-25832196">
        <id>Q14114-3</id>
        <label>LRP8</label>
    </interactant>
    <organismsDiffer>false</organismsDiffer>
    <experiments>3</experiments>
</comment>
<comment type="interaction">
    <interactant intactId="EBI-491549">
        <id>P35222</id>
    </interactant>
    <interactant intactId="EBI-373144">
        <id>Q9GZQ8</id>
        <label>MAP1LC3B</label>
    </interactant>
    <organismsDiffer>false</organismsDiffer>
    <experiments>5</experiments>
</comment>
<comment type="interaction">
    <interactant intactId="EBI-491549">
        <id>P35222</id>
    </interactant>
    <interactant intactId="EBI-1189067">
        <id>P51608</id>
        <label>MECP2</label>
    </interactant>
    <organismsDiffer>false</organismsDiffer>
    <experiments>3</experiments>
</comment>
<comment type="interaction">
    <interactant intactId="EBI-491549">
        <id>P35222</id>
    </interactant>
    <interactant intactId="EBI-1104952">
        <id>P55197</id>
        <label>MLLT10</label>
    </interactant>
    <organismsDiffer>false</organismsDiffer>
    <experiments>4</experiments>
</comment>
<comment type="interaction">
    <interactant intactId="EBI-491549">
        <id>P35222</id>
    </interactant>
    <interactant intactId="EBI-716486">
        <id>Q92597</id>
        <label>NDRG1</label>
    </interactant>
    <organismsDiffer>false</organismsDiffer>
    <experiments>3</experiments>
</comment>
<comment type="interaction">
    <interactant intactId="EBI-491549">
        <id>P35222</id>
    </interactant>
    <interactant intactId="EBI-713665">
        <id>P19404</id>
        <label>NDUFV2</label>
    </interactant>
    <organismsDiffer>false</organismsDiffer>
    <experiments>3</experiments>
</comment>
<comment type="interaction">
    <interactant intactId="EBI-491549">
        <id>P35222</id>
    </interactant>
    <interactant intactId="EBI-300010">
        <id>P19838</id>
        <label>NFKB1</label>
    </interactant>
    <organismsDiffer>false</organismsDiffer>
    <experiments>3</experiments>
</comment>
<comment type="interaction">
    <interactant intactId="EBI-491549">
        <id>P35222</id>
    </interactant>
    <interactant intactId="EBI-1391623">
        <id>P29474</id>
        <label>NOS3</label>
    </interactant>
    <organismsDiffer>false</organismsDiffer>
    <experiments>4</experiments>
</comment>
<comment type="interaction">
    <interactant intactId="EBI-491549">
        <id>P35222</id>
    </interactant>
    <interactant intactId="EBI-15960777">
        <id>O00482-1</id>
        <label>NR5A2</label>
    </interactant>
    <organismsDiffer>false</organismsDiffer>
    <experiments>5</experiments>
</comment>
<comment type="interaction">
    <interactant intactId="EBI-491549">
        <id>P35222</id>
    </interactant>
    <interactant intactId="EBI-915016">
        <id>P49757</id>
        <label>NUMB</label>
    </interactant>
    <organismsDiffer>false</organismsDiffer>
    <experiments>2</experiments>
</comment>
<comment type="interaction">
    <interactant intactId="EBI-491549">
        <id>P35222</id>
    </interactant>
    <interactant intactId="EBI-10692196">
        <id>P49757-3</id>
        <label>NUMB</label>
    </interactant>
    <organismsDiffer>false</organismsDiffer>
    <experiments>3</experiments>
</comment>
<comment type="interaction">
    <interactant intactId="EBI-491549">
        <id>P35222</id>
    </interactant>
    <interactant intactId="EBI-353408">
        <id>P14618</id>
        <label>PKM</label>
    </interactant>
    <organismsDiffer>false</organismsDiffer>
    <experiments>4</experiments>
</comment>
<comment type="interaction">
    <interactant intactId="EBI-491549">
        <id>P35222</id>
    </interactant>
    <interactant intactId="EBI-4304679">
        <id>P14618-1</id>
        <label>PKM</label>
    </interactant>
    <organismsDiffer>false</organismsDiffer>
    <experiments>3</experiments>
</comment>
<comment type="interaction">
    <interactant intactId="EBI-491549">
        <id>P35222</id>
    </interactant>
    <interactant intactId="EBI-5280197">
        <id>O75400-2</id>
        <label>PRPF40A</label>
    </interactant>
    <organismsDiffer>false</organismsDiffer>
    <experiments>3</experiments>
</comment>
<comment type="interaction">
    <interactant intactId="EBI-491549">
        <id>P35222</id>
    </interactant>
    <interactant intactId="EBI-2860297">
        <id>Q03431</id>
        <label>PTH1R</label>
    </interactant>
    <organismsDiffer>false</organismsDiffer>
    <experiments>4</experiments>
</comment>
<comment type="interaction">
    <interactant intactId="EBI-491549">
        <id>P35222</id>
    </interactant>
    <interactant intactId="EBI-2803245">
        <id>Q13308</id>
        <label>PTK7</label>
    </interactant>
    <organismsDiffer>false</organismsDiffer>
    <experiments>5</experiments>
</comment>
<comment type="interaction">
    <interactant intactId="EBI-491549">
        <id>P35222</id>
    </interactant>
    <interactant intactId="EBI-1341">
        <id>P08575</id>
        <label>PTPRC</label>
    </interactant>
    <organismsDiffer>false</organismsDiffer>
    <experiments>2</experiments>
</comment>
<comment type="interaction">
    <interactant intactId="EBI-491549">
        <id>P35222</id>
    </interactant>
    <interactant intactId="EBI-2258115">
        <id>P23470</id>
        <label>PTPRG</label>
    </interactant>
    <organismsDiffer>false</organismsDiffer>
    <experiments>2</experiments>
</comment>
<comment type="interaction">
    <interactant intactId="EBI-491549">
        <id>P35222</id>
    </interactant>
    <interactant intactId="EBI-2264500">
        <id>Q12913</id>
        <label>PTPRJ</label>
    </interactant>
    <organismsDiffer>false</organismsDiffer>
    <experiments>2</experiments>
</comment>
<comment type="interaction">
    <interactant intactId="EBI-491549">
        <id>P35222</id>
    </interactant>
    <interactant intactId="EBI-702209">
        <id>P49023</id>
        <label>PXN</label>
    </interactant>
    <organismsDiffer>false</organismsDiffer>
    <experiments>4</experiments>
</comment>
<comment type="interaction">
    <interactant intactId="EBI-491549">
        <id>P35222</id>
    </interactant>
    <interactant intactId="EBI-286642">
        <id>P62826</id>
        <label>RAN</label>
    </interactant>
    <organismsDiffer>false</organismsDiffer>
    <experiments>3</experiments>
</comment>
<comment type="interaction">
    <interactant intactId="EBI-491549">
        <id>P35222</id>
    </interactant>
    <interactant intactId="EBI-73886">
        <id>Q04206</id>
        <label>RELA</label>
    </interactant>
    <organismsDiffer>false</organismsDiffer>
    <experiments>3</experiments>
</comment>
<comment type="interaction">
    <interactant intactId="EBI-491549">
        <id>P35222</id>
    </interactant>
    <interactant intactId="EBI-925990">
        <id>Q13761</id>
        <label>RUNX3</label>
    </interactant>
    <organismsDiffer>false</organismsDiffer>
    <experiments>12</experiments>
</comment>
<comment type="interaction">
    <interactant intactId="EBI-491549">
        <id>P35222</id>
    </interactant>
    <interactant intactId="EBI-353675">
        <id>Q9Y265</id>
        <label>RUVBL1</label>
    </interactant>
    <organismsDiffer>false</organismsDiffer>
    <experiments>3</experiments>
</comment>
<comment type="interaction">
    <interactant intactId="EBI-491549">
        <id>P35222</id>
    </interactant>
    <interactant intactId="EBI-743747">
        <id>Q01826</id>
        <label>SATB1</label>
    </interactant>
    <organismsDiffer>false</organismsDiffer>
    <experiments>9</experiments>
</comment>
<comment type="interaction">
    <interactant intactId="EBI-491549">
        <id>P35222</id>
    </interactant>
    <interactant intactId="EBI-9106753">
        <id>Q9H6I2</id>
        <label>SOX17</label>
    </interactant>
    <organismsDiffer>false</organismsDiffer>
    <experiments>2</experiments>
</comment>
<comment type="interaction">
    <interactant intactId="EBI-491549">
        <id>P35222</id>
    </interactant>
    <interactant intactId="EBI-5235340">
        <id>Q7Z699</id>
        <label>SPRED1</label>
    </interactant>
    <organismsDiffer>false</organismsDiffer>
    <experiments>3</experiments>
</comment>
<comment type="interaction">
    <interactant intactId="EBI-491549">
        <id>P35222</id>
    </interactant>
    <interactant intactId="EBI-621482">
        <id>P12931</id>
        <label>SRC</label>
    </interactant>
    <organismsDiffer>false</organismsDiffer>
    <experiments>2</experiments>
</comment>
<comment type="interaction">
    <interactant intactId="EBI-491549">
        <id>P35222</id>
    </interactant>
    <interactant intactId="EBI-723259">
        <id>O14907</id>
        <label>TAX1BP3</label>
    </interactant>
    <organismsDiffer>false</organismsDiffer>
    <experiments>4</experiments>
</comment>
<comment type="interaction">
    <interactant intactId="EBI-491549">
        <id>P35222</id>
    </interactant>
    <interactant intactId="EBI-533224">
        <id>P15884</id>
        <label>TCF4</label>
    </interactant>
    <organismsDiffer>false</organismsDiffer>
    <experiments>22</experiments>
</comment>
<comment type="interaction">
    <interactant intactId="EBI-491549">
        <id>P35222</id>
    </interactant>
    <interactant intactId="EBI-2119465">
        <id>P36402</id>
        <label>TCF7</label>
    </interactant>
    <organismsDiffer>false</organismsDiffer>
    <experiments>4</experiments>
</comment>
<comment type="interaction">
    <interactant intactId="EBI-491549">
        <id>P35222</id>
    </interactant>
    <interactant intactId="EBI-924724">
        <id>Q9NQB0</id>
        <label>TCF7L2</label>
    </interactant>
    <organismsDiffer>false</organismsDiffer>
    <experiments>27</experiments>
</comment>
<comment type="interaction">
    <interactant intactId="EBI-491549">
        <id>P35222</id>
    </interactant>
    <interactant intactId="EBI-1772203">
        <id>O14746</id>
        <label>TERT</label>
    </interactant>
    <organismsDiffer>false</organismsDiffer>
    <experiments>2</experiments>
</comment>
<comment type="interaction">
    <interactant intactId="EBI-491549">
        <id>P35222</id>
    </interactant>
    <interactant intactId="EBI-1051794">
        <id>Q9UKE5</id>
        <label>TNIK</label>
    </interactant>
    <organismsDiffer>false</organismsDiffer>
    <experiments>3</experiments>
</comment>
<comment type="interaction">
    <interactant intactId="EBI-491549">
        <id>P35222</id>
    </interactant>
    <interactant intactId="EBI-539628">
        <id>P11388</id>
        <label>TOP2A</label>
    </interactant>
    <organismsDiffer>false</organismsDiffer>
    <experiments>5</experiments>
</comment>
<comment type="interaction">
    <interactant intactId="EBI-491549">
        <id>P35222</id>
    </interactant>
    <interactant intactId="EBI-25847109">
        <id>O14656-2</id>
        <label>TOR1A</label>
    </interactant>
    <organismsDiffer>false</organismsDiffer>
    <experiments>3</experiments>
</comment>
<comment type="interaction">
    <interactant intactId="EBI-491549">
        <id>P35222</id>
    </interactant>
    <interactant intactId="EBI-77642">
        <id>Q13625</id>
        <label>TP53BP2</label>
    </interactant>
    <organismsDiffer>false</organismsDiffer>
    <experiments>5</experiments>
</comment>
<comment type="interaction">
    <interactant intactId="EBI-491549">
        <id>P35222</id>
    </interactant>
    <interactant intactId="EBI-358329">
        <id>O95071</id>
        <label>UBR5</label>
    </interactant>
    <organismsDiffer>false</organismsDiffer>
    <experiments>6</experiments>
</comment>
<comment type="interaction">
    <interactant intactId="EBI-491549">
        <id>P35222</id>
    </interactant>
    <interactant intactId="EBI-286357">
        <id>P11473</id>
        <label>VDR</label>
    </interactant>
    <organismsDiffer>false</organismsDiffer>
    <experiments>2</experiments>
</comment>
<comment type="interaction">
    <interactant intactId="EBI-491549">
        <id>P35222</id>
    </interactant>
    <interactant intactId="EBI-747743">
        <id>Q9GZV5</id>
        <label>WWTR1</label>
    </interactant>
    <organismsDiffer>false</organismsDiffer>
    <experiments>4</experiments>
</comment>
<comment type="interaction">
    <interactant intactId="EBI-491549">
        <id>P35222</id>
    </interactant>
    <interactant intactId="EBI-1044059">
        <id>P46937</id>
        <label>YAP1</label>
    </interactant>
    <organismsDiffer>false</organismsDiffer>
    <experiments>15</experiments>
</comment>
<comment type="interaction">
    <interactant intactId="EBI-491549">
        <id>P35222</id>
    </interactant>
    <interactant intactId="EBI-6558686">
        <id>P46937-3</id>
        <label>YAP1</label>
    </interactant>
    <organismsDiffer>false</organismsDiffer>
    <experiments>2</experiments>
</comment>
<comment type="interaction">
    <interactant intactId="EBI-491549">
        <id>P35222</id>
    </interactant>
    <interactant intactId="EBI-2365912">
        <id>O35625</id>
        <label>Axin1</label>
    </interactant>
    <organismsDiffer>true</organismsDiffer>
    <experiments>4</experiments>
</comment>
<comment type="interaction">
    <interactant intactId="EBI-491549">
        <id>P35222</id>
    </interactant>
    <interactant intactId="EBI-1037449">
        <id>Q9YGY0</id>
        <label>axin1</label>
    </interactant>
    <organismsDiffer>true</organismsDiffer>
    <experiments>2</experiments>
</comment>
<comment type="interaction">
    <interactant intactId="EBI-491549">
        <id>P35222</id>
    </interactant>
    <interactant intactId="EBI-5234367">
        <id>Q67FY2</id>
        <label>Bcl9l</label>
    </interactant>
    <organismsDiffer>true</organismsDiffer>
    <experiments>2</experiments>
</comment>
<comment type="interaction">
    <interactant intactId="EBI-491549">
        <id>P35222</id>
    </interactant>
    <interactant intactId="EBI-79998">
        <id>P33724</id>
        <label>CAV1</label>
    </interactant>
    <organismsDiffer>true</organismsDiffer>
    <experiments>5</experiments>
</comment>
<comment type="interaction">
    <interactant intactId="EBI-491549">
        <id>P35222</id>
    </interactant>
    <interactant intactId="EBI-647895">
        <id>P26231</id>
        <label>Ctnna1</label>
    </interactant>
    <organismsDiffer>true</organismsDiffer>
    <experiments>2</experiments>
</comment>
<comment type="interaction">
    <interactant intactId="EBI-491549">
        <id>P35222</id>
    </interactant>
    <interactant intactId="EBI-984464">
        <id>P27782</id>
        <label>Lef1</label>
    </interactant>
    <organismsDiffer>true</organismsDiffer>
    <experiments>2</experiments>
</comment>
<comment type="interaction">
    <interactant intactId="EBI-491549">
        <id>P35222</id>
    </interactant>
    <interactant intactId="EBI-16110594">
        <id>Q01887</id>
        <label>Ryk</label>
    </interactant>
    <organismsDiffer>true</organismsDiffer>
    <experiments>2</experiments>
</comment>
<comment type="interaction">
    <interactant intactId="EBI-491549">
        <id>P35222</id>
    </interactant>
    <interactant intactId="EBI-491541">
        <id>P18012</id>
        <label>sctB</label>
    </interactant>
    <organismsDiffer>true</organismsDiffer>
    <experiments>4</experiments>
</comment>
<comment type="interaction">
    <interactant intactId="EBI-491549">
        <id>P35222</id>
    </interactant>
    <interactant intactId="EBI-3505685">
        <id>P40645</id>
        <label>Sox6</label>
    </interactant>
    <organismsDiffer>true</organismsDiffer>
    <experiments>2</experiments>
</comment>
<comment type="interaction">
    <interactant intactId="EBI-491549">
        <id>P35222</id>
    </interactant>
    <interactant intactId="EBI-1161647">
        <id>Q9DBG9</id>
        <label>Tax1bp3</label>
    </interactant>
    <organismsDiffer>true</organismsDiffer>
    <experiments>3</experiments>
</comment>
<comment type="interaction">
    <interactant intactId="EBI-491549">
        <id>P35222</id>
    </interactant>
    <interactant intactId="EBI-1211920">
        <id>Q9EPK5</id>
        <label>Wwtr1</label>
    </interactant>
    <organismsDiffer>true</organismsDiffer>
    <experiments>2</experiments>
</comment>
<comment type="subcellular location">
    <subcellularLocation>
        <location evidence="66 73 84 85 87">Cytoplasm</location>
    </subcellularLocation>
    <subcellularLocation>
        <location evidence="58 70 73 80 81 84 85 87">Nucleus</location>
    </subcellularLocation>
    <subcellularLocation>
        <location evidence="2">Cytoplasm</location>
        <location evidence="2">Cytoskeleton</location>
    </subcellularLocation>
    <subcellularLocation>
        <location evidence="13 66">Cell junction</location>
        <location evidence="13 66">Adherens junction</location>
    </subcellularLocation>
    <subcellularLocation>
        <location evidence="2">Cell junction</location>
    </subcellularLocation>
    <subcellularLocation>
        <location evidence="24 70">Cell membrane</location>
    </subcellularLocation>
    <subcellularLocation>
        <location>Cytoplasm</location>
        <location>Cytoskeleton</location>
        <location>Microtubule organizing center</location>
        <location>Centrosome</location>
    </subcellularLocation>
    <subcellularLocation>
        <location>Cytoplasm</location>
        <location>Cytoskeleton</location>
        <location>Spindle pole</location>
    </subcellularLocation>
    <subcellularLocation>
        <location evidence="3">Synapse</location>
    </subcellularLocation>
    <subcellularLocation>
        <location evidence="3">Cytoplasm</location>
        <location evidence="3">Cytoskeleton</location>
        <location evidence="3">Cilium basal body</location>
    </subcellularLocation>
    <text evidence="2 3 73">Colocalized with RAPGEF2 and TJP1 at cell-cell contacts (By similarity). Cytoplasmic when it is un-stable (highly phosphorylated) or bound to CDH1. Translocates to the nucleus when it is stabilized (low level of phosphorylation). Interaction with GLIS2 and MUC1 promotes nuclear translocation. Interaction with EMD inhibits nuclear localization. The majority of CTNNB1 is localized to the cell membrane. In interphase, colocalizes with CROCC between CEP250 puncta at the proximal end of centrioles, and this localization is dependent on CROCC and CEP250. In mitosis, when NEK2 activity increases, it localizes to centrosomes at spindle poles independent of CROCC. Colocalizes with CDK5 in the cell-cell contacts and plasma membrane of undifferentiated and differentiated neuroblastoma cells. Interaction with FAM53B promotes translocation to the nucleus (PubMed:25183871). Translocates to the nucleus in the presence of SNAIL1 (By similarity). Ca(2+)-mediated localization to the cell membrane in dental epithelial cells is inhibited via WNT3A (By similarity). Localizes to cell-cell contacts as keratinocyte differentiation progresses (By similarity).</text>
</comment>
<comment type="tissue specificity">
    <text evidence="20 40 43 81">Expressed in several hair follicle cell types: basal and peripheral matrix cells, and cells of the outer and inner root sheaths. Expressed in colon. Present in cortical neurons (at protein level). Expressed in breast cancer tissues (at protein level) (PubMed:29367600).</text>
</comment>
<comment type="PTM">
    <text evidence="3 6 14 25 26 27 40 46 55 57 61 63 72">Phosphorylation at Ser-552 by AMPK promotes stabilization of the protein, enhancing TCF/LEF-mediated transcription (By similarity). Phosphorylation by GSK3B requires prior phosphorylation of Ser-45 by another kinase (PubMed:10966653, PubMed:12027456, PubMed:12051714). Phosphorylation proceeds then from Thr-41 to Ser-37 and Ser-33 (PubMed:12077367, PubMed:25169422). Phosphorylated by NEK2 (PubMed:18086858). EGF stimulates tyrosine phosphorylation (PubMed:10187801). Phosphorylated on Ser-33 and Ser-37 by HIPK2 and GSK3B, this phosphorylation triggers proteasomal degradation (PubMed:20307497). Phosphorylation on Ser-191 and Ser-246 by CDK5 (PubMed:17009320). Phosphorylation by CDK2 regulates insulin internalization (PubMed:21262353). Phosphorylation by PTK6 at Tyr-64, Tyr-142, Tyr-331 and/or Tyr-333 with the predominant site at Tyr-64 is not essential for inhibition of transcriptional activity (PubMed:20026641). Phosphorylation by SRC at Tyr-333 promotes interaction with isoform M2 of PKM (PKM2); promoting transcription activation (PubMed:22056988).</text>
</comment>
<comment type="PTM">
    <text evidence="3 16 17 27 57 58">Ubiquitinated by the SCF(BTRC) E3 ligase complex when phosphorylated by GSK3B, leading to its degradation (PubMed:12077367). Ubiquitinated by a E3 ubiquitin ligase complex containing UBE2D1, SIAH1, CACYBP/SIP, SKP1, APC and TBL1X, leading to its subsequent proteasomal degradation (PubMed:11389839, PubMed:11389840, PubMed:20307497). Ubiquitinated and degraded following interaction with SOX9 (By similarity). Ubiquitinated via 'Lys-11'- and 'Lys-29'-linked ubiquitin chains by UBR5, leading to its stabilization (PubMed:21118991).</text>
</comment>
<comment type="PTM">
    <text evidence="3">S-nitrosylation at Cys-619 within adherens junctions promotes VEGF-induced, NO-dependent endothelial cell permeability by disrupting interaction with E-cadherin, thus mediating disassembly adherens junctions.</text>
</comment>
<comment type="PTM">
    <text evidence="70">O-glycosylation at Ser-23 decreases nuclear localization and transcriptional activity, and increases localization to the plasma membrane and interaction with E-cadherin CDH1.</text>
</comment>
<comment type="PTM">
    <text evidence="71">Deacetylated at Lys-49 by SIRT1.</text>
</comment>
<comment type="PTM">
    <text evidence="71">Phosphorylated at Thr-556 by herpes virus 1/HHV-1 leading to CTNNB1 inhibition.</text>
</comment>
<comment type="disease" evidence="91">
    <disease id="DI-01359">
        <name>Colorectal cancer</name>
        <acronym>CRC</acronym>
        <description>A complex disease characterized by malignant lesions arising from the inner wall of the large intestine (the colon) and the rectum. Genetic alterations are often associated with progression from premalignant lesion (adenoma) to invasive adenocarcinoma. Risk factors for cancer of the colon and rectum include colon polyps, long-standing ulcerative colitis, and genetic family history.</description>
        <dbReference type="MIM" id="114500"/>
    </disease>
    <text>The gene represented in this entry may be involved in disease pathogenesis.</text>
</comment>
<comment type="disease">
    <text>Activating mutations in CTNNB1 have oncogenic activity resulting in tumor development. Somatic mutations are found in various tumor types, including colon cancers, ovarian and prostate carcinomas, hepatoblastoma (HB), hepatocellular carcinoma (HCC). HBs are malignant embryonal tumors mainly affecting young children in the first three years of life.</text>
</comment>
<comment type="disease" evidence="7 20 25">
    <disease id="DI-02167">
        <name>Pilomatrixoma</name>
        <acronym>PTR</acronym>
        <description>Common benign skin tumor.</description>
        <dbReference type="MIM" id="132600"/>
    </disease>
    <text>The gene represented in this entry is involved in disease pathogenesis.</text>
</comment>
<comment type="disease" evidence="12 25">
    <disease id="DI-01958">
        <name>Medulloblastoma</name>
        <acronym>MDB</acronym>
        <description>Malignant, invasive embryonal tumor of the cerebellum with a preferential manifestation in children.</description>
        <dbReference type="MIM" id="155255"/>
    </disease>
    <text>The gene represented in this entry may be involved in disease pathogenesis.</text>
</comment>
<comment type="disease" evidence="8">
    <disease id="DI-01655">
        <name>Ovarian cancer</name>
        <acronym>OC</acronym>
        <description>The term ovarian cancer defines malignancies originating from ovarian tissue. Although many histologic types of ovarian tumors have been described, epithelial ovarian carcinoma is the most common form. Ovarian cancers are often asymptomatic and the recognized signs and symptoms, even of late-stage disease, are vague. Consequently, most patients are diagnosed with advanced disease.</description>
        <dbReference type="MIM" id="167000"/>
    </disease>
    <text>Disease susceptibility is associated with variants affecting the gene represented in this entry.</text>
</comment>
<comment type="disease">
    <text evidence="5 90">A chromosomal aberration involving CTNNB1 is found in salivary gland pleiomorphic adenomas, the most common benign epithelial tumors of the salivary gland. Translocation t(3;8)(p21;q12) with PLAG1.</text>
</comment>
<comment type="disease" evidence="18">
    <disease id="DI-03213">
        <name>Mesothelioma, malignant</name>
        <acronym>MESOM</acronym>
        <description>An aggressive neoplasm of the serosal lining of the chest. It appears as broad sheets of cells, with some regions containing spindle-shaped, sarcoma-like cells and other regions showing adenomatous patterns. Pleural mesotheliomas have been linked to exposure to asbestos.</description>
        <dbReference type="MIM" id="156240"/>
    </disease>
    <text>The gene represented in this entry may be involved in disease pathogenesis.</text>
</comment>
<comment type="disease" evidence="69 75 78">
    <disease id="DI-03652">
        <name>Neurodevelopmental disorder with spastic diplegia and visual defects</name>
        <acronym>NEDSDV</acronym>
        <description>An autosomal dominant disorder characterized by global developmental delay, severe intellectual disability with absent or very limited speech, microcephaly, spasticity, and visual abnormalities.</description>
        <dbReference type="MIM" id="615075"/>
    </disease>
    <text>The disease is caused by variants affecting the gene represented in this entry.</text>
</comment>
<comment type="disease" evidence="79">
    <disease id="DI-05042">
        <name>Vitreoretinopathy, exudative 7</name>
        <acronym>EVR7</acronym>
        <description>A form of exudative vitreoretinopathy, a disorder of the retinal vasculature characterized by an abrupt cessation of growth of peripheral capillaries, leading to an avascular peripheral retina. This may lead to compensatory retinal neovascularization, which is thought to be induced by hypoxia from the initial avascular insult. New vessels are prone to leakage and rupture causing exudates and bleeding, followed by scarring, retinal detachment and blindness. Clinical features can be highly variable, even within the same family. Patients with mild forms of the disease are asymptomatic, and their only disease related abnormality is an arc of avascular retina in the extreme temporal periphery.</description>
        <dbReference type="MIM" id="617572"/>
    </disease>
    <text>The disease is caused by variants affecting the gene represented in this entry.</text>
</comment>
<comment type="similarity">
    <text evidence="95">Belongs to the beta-catenin family.</text>
</comment>
<comment type="caution">
    <text evidence="15 97">A paper showing an interaction with TBP and phosphorylation at Tyr-86 and Tyr-654 has been retracted due to panel duplication in several figures.</text>
</comment>
<comment type="sequence caution" evidence="95">
    <conflict type="miscellaneous discrepancy">
        <sequence resource="EMBL-CDS" id="AAG35511"/>
    </conflict>
    <text>Probable cloning artifact.</text>
</comment>
<comment type="sequence caution" evidence="95">
    <conflict type="erroneous initiation">
        <sequence resource="EMBL-CDS" id="BAB93475"/>
    </conflict>
    <text>Truncated N-terminus.</text>
</comment>
<comment type="online information" name="Atlas of Genetics and Cytogenetics in Oncology and Haematology">
    <link uri="https://atlasgeneticsoncology.org/gene/71/CTNNB1"/>
</comment>
<comment type="online information" name="Wikipedia">
    <link uri="https://en.wikipedia.org/wiki/Beta-catenin"/>
    <text>Beta-catenin entry</text>
</comment>
<name>CTNB1_HUMAN</name>
<gene>
    <name evidence="99" type="primary">CTNNB1</name>
    <name type="synonym">CTNNB</name>
    <name type="ORF">OK/SW-cl.35</name>
    <name type="ORF">PRO2286</name>
</gene>
<protein>
    <recommendedName>
        <fullName evidence="99">Catenin beta-1</fullName>
    </recommendedName>
    <alternativeName>
        <fullName evidence="94">Beta-catenin</fullName>
    </alternativeName>
</protein>
<feature type="initiator methionine" description="Removed" evidence="105">
    <location>
        <position position="1"/>
    </location>
</feature>
<feature type="chain" id="PRO_0000064271" description="Catenin beta-1">
    <location>
        <begin position="2"/>
        <end position="781"/>
    </location>
</feature>
<feature type="repeat" description="ARM 1">
    <location>
        <begin position="151"/>
        <end position="191"/>
    </location>
</feature>
<feature type="repeat" description="ARM 2">
    <location>
        <begin position="193"/>
        <end position="234"/>
    </location>
</feature>
<feature type="repeat" description="ARM 3">
    <location>
        <begin position="235"/>
        <end position="276"/>
    </location>
</feature>
<feature type="repeat" description="ARM 4">
    <location>
        <begin position="277"/>
        <end position="318"/>
    </location>
</feature>
<feature type="repeat" description="ARM 5">
    <location>
        <begin position="319"/>
        <end position="360"/>
    </location>
</feature>
<feature type="repeat" description="ARM 6">
    <location>
        <begin position="361"/>
        <end position="389"/>
    </location>
</feature>
<feature type="repeat" description="ARM 7">
    <location>
        <begin position="400"/>
        <end position="441"/>
    </location>
</feature>
<feature type="repeat" description="ARM 8">
    <location>
        <begin position="442"/>
        <end position="484"/>
    </location>
</feature>
<feature type="repeat" description="ARM 9">
    <location>
        <begin position="489"/>
        <end position="530"/>
    </location>
</feature>
<feature type="repeat" description="ARM 10">
    <location>
        <begin position="531"/>
        <end position="571"/>
    </location>
</feature>
<feature type="repeat" description="ARM 11">
    <location>
        <begin position="594"/>
        <end position="636"/>
    </location>
</feature>
<feature type="repeat" description="ARM 12">
    <location>
        <begin position="637"/>
        <end position="666"/>
    </location>
</feature>
<feature type="region of interest" description="Interaction with VCL" evidence="1">
    <location>
        <begin position="2"/>
        <end position="23"/>
    </location>
</feature>
<feature type="region of interest" description="Disordered" evidence="4">
    <location>
        <begin position="34"/>
        <end position="57"/>
    </location>
</feature>
<feature type="region of interest" description="Interaction with BCL9" evidence="42">
    <location>
        <begin position="156"/>
        <end position="178"/>
    </location>
</feature>
<feature type="region of interest" description="Disordered" evidence="4">
    <location>
        <begin position="705"/>
        <end position="781"/>
    </location>
</feature>
<feature type="region of interest" description="Interaction with SCRIB" evidence="1">
    <location>
        <begin position="772"/>
        <end position="781"/>
    </location>
</feature>
<feature type="compositionally biased region" description="Basic and acidic residues" evidence="4">
    <location>
        <begin position="734"/>
        <end position="745"/>
    </location>
</feature>
<feature type="modified residue" description="N-acetylalanine" evidence="105">
    <location>
        <position position="2"/>
    </location>
</feature>
<feature type="modified residue" description="Phosphoserine; by GSK3-beta; alternate" evidence="25">
    <location>
        <position position="23"/>
    </location>
</feature>
<feature type="modified residue" description="Phosphoserine; by GSK3-beta" evidence="25">
    <location>
        <position position="29"/>
    </location>
</feature>
<feature type="modified residue" description="Phosphoserine; by GSK3-beta and HIPK2" evidence="57 72">
    <location>
        <position position="33"/>
    </location>
</feature>
<feature type="modified residue" description="Phosphoserine; by GSK3-beta and HIPK2" evidence="57">
    <location>
        <position position="37"/>
    </location>
</feature>
<feature type="modified residue" description="Phosphothreonine; by GSK3-beta" evidence="25">
    <location>
        <position position="41"/>
    </location>
</feature>
<feature type="modified residue" description="Phosphoserine" evidence="26">
    <location>
        <position position="45"/>
    </location>
</feature>
<feature type="modified residue" description="N6-acetyllysine" evidence="71">
    <location>
        <position position="49"/>
    </location>
</feature>
<feature type="modified residue" description="Phosphotyrosine; by PTK6" evidence="55">
    <location>
        <position position="64"/>
    </location>
</feature>
<feature type="modified residue" description="Phosphotyrosine; by FYN and PTK6" evidence="33 55">
    <location>
        <position position="142"/>
    </location>
</feature>
<feature type="modified residue" description="Phosphoserine; by CDK5" evidence="40 104 106">
    <location>
        <position position="191"/>
    </location>
</feature>
<feature type="modified residue" description="Phosphoserine; by CDK5" evidence="40">
    <location>
        <position position="246"/>
    </location>
</feature>
<feature type="modified residue" description="Phosphotyrosine; by PTK6" evidence="55">
    <location>
        <position position="331"/>
    </location>
</feature>
<feature type="modified residue" description="Phosphotyrosine; by SRC and PTK6" evidence="63 96">
    <location>
        <position position="333"/>
    </location>
</feature>
<feature type="modified residue" description="Phosphoserine" evidence="104 106">
    <location>
        <position position="552"/>
    </location>
</feature>
<feature type="modified residue" description="(Microbial infection) Phosphothreonine" evidence="87">
    <location>
        <position position="556"/>
    </location>
</feature>
<feature type="modified residue" description="Phosphothreonine" evidence="102">
    <location>
        <position position="556"/>
    </location>
</feature>
<feature type="modified residue" description="S-nitrosocysteine" evidence="3">
    <location>
        <position position="619"/>
    </location>
</feature>
<feature type="modified residue" description="Phosphoserine" evidence="101 102 103">
    <location>
        <position position="675"/>
    </location>
</feature>
<feature type="glycosylation site" description="O-linked (GlcNAc) serine; alternate" evidence="70">
    <location>
        <position position="23"/>
    </location>
</feature>
<feature type="sequence variant" id="VAR_017612" description="In hepatocellular carcinoma; no effect; dbSNP:rs1413975856." evidence="10 25">
    <original>S</original>
    <variation>R</variation>
    <location>
        <position position="23"/>
    </location>
</feature>
<feature type="sequence variant" id="VAR_017613" description="In hepatocellular carcinoma." evidence="10">
    <location>
        <begin position="25"/>
        <end position="33"/>
    </location>
</feature>
<feature type="sequence variant" id="VAR_017614" description="In hepatocellular carcinoma; dbSNP:rs121913396." evidence="10">
    <original>D</original>
    <variation>A</variation>
    <location>
        <position position="32"/>
    </location>
</feature>
<feature type="sequence variant" id="VAR_017615" description="In PTR and hepatocellular carcinoma; dbSNP:rs121913396." evidence="7 10">
    <original>D</original>
    <variation>G</variation>
    <location>
        <position position="32"/>
    </location>
</feature>
<feature type="sequence variant" id="VAR_017616" description="In PTR, hepatoblastoma and hepatocellular carcinoma; dbSNP:rs28931588." evidence="7 10 20 92">
    <original>D</original>
    <variation>Y</variation>
    <location>
        <position position="32"/>
    </location>
</feature>
<feature type="sequence variant" id="VAR_017617" description="In PTR, MDB and hepatocellular carcinoma; dbSNP:rs121913400." evidence="7 10 12">
    <original>S</original>
    <variation>F</variation>
    <location>
        <position position="33"/>
    </location>
</feature>
<feature type="sequence variant" id="VAR_017618" description="In hepatocellular carcinoma." evidence="10">
    <original>S</original>
    <variation>L</variation>
    <location>
        <position position="33"/>
    </location>
</feature>
<feature type="sequence variant" id="VAR_017619" description="In colorectal cancer and PTR; constitutively active Wnt signaling pathway; enhances transactivation of target genes; dbSNP:rs121913400." evidence="7 25 82 91">
    <original>S</original>
    <variation>Y</variation>
    <location>
        <position position="33"/>
    </location>
</feature>
<feature type="sequence variant" id="VAR_017620" description="In PTR; dbSNP:rs28931589." evidence="7">
    <original>G</original>
    <variation>E</variation>
    <location>
        <position position="34"/>
    </location>
</feature>
<feature type="sequence variant" id="VAR_017621" description="In hepatocellular carcinoma; dbSNP:rs121913399." evidence="10">
    <original>G</original>
    <variation>R</variation>
    <location>
        <position position="34"/>
    </location>
</feature>
<feature type="sequence variant" id="VAR_017622" description="In hepatoblastoma; dbSNP:rs28931589." evidence="92">
    <original>G</original>
    <variation>V</variation>
    <location>
        <position position="34"/>
    </location>
</feature>
<feature type="sequence variant" id="VAR_017623" description="In hepatocellular carcinoma." evidence="10">
    <original>I</original>
    <variation>S</variation>
    <location>
        <position position="35"/>
    </location>
</feature>
<feature type="sequence variant" id="VAR_017628" description="In hepatocellular carcinoma." evidence="10">
    <original>SG</original>
    <variation>W</variation>
    <location>
        <begin position="37"/>
        <end position="38"/>
    </location>
</feature>
<feature type="sequence variant" id="VAR_017624" description="In MDB and hepatocellular carcinoma; enhances transactivation of target genes; dbSNP:rs121913228." evidence="10 12 25">
    <original>S</original>
    <variation>A</variation>
    <location>
        <position position="37"/>
    </location>
</feature>
<feature type="sequence variant" id="VAR_017625" description="In PTR, hepatoblastoma and ovarian cancer; dbSNP:rs121913403." evidence="7 8 92">
    <original>S</original>
    <variation>C</variation>
    <location>
        <position position="37"/>
    </location>
</feature>
<feature type="sequence variant" id="VAR_017626" description="In PTR; dbSNP:rs121913403." evidence="7">
    <original>S</original>
    <variation>F</variation>
    <location>
        <position position="37"/>
    </location>
</feature>
<feature type="sequence variant" id="VAR_017627" description="In hepatocellular carcinoma; dbSNP:rs121913403." evidence="10">
    <original>S</original>
    <variation>Y</variation>
    <location>
        <position position="37"/>
    </location>
</feature>
<feature type="sequence variant" id="VAR_017629" description="In hepatoblastoma and hepatocellular carcinoma; also in a desmoid tumor; strongly reduces phosphorylation and degradation; abolishes phosphorylation on Ser-33 and Ser-37 and enhances transactivation of target genes; dbSNP:rs121913412." evidence="8 9 10 11 25 26 92">
    <original>T</original>
    <variation>A</variation>
    <location>
        <position position="41"/>
    </location>
</feature>
<feature type="sequence variant" id="VAR_017630" description="In PTR, hepatocellular carcinoma and ovarian cancer; dbSNP:rs121913413." evidence="7 8 10">
    <original>T</original>
    <variation>I</variation>
    <location>
        <position position="41"/>
    </location>
</feature>
<feature type="sequence variant" id="VAR_017631" description="In hepatocellular carcinoma; dbSNP:rs121913409." evidence="10">
    <original>S</original>
    <variation>F</variation>
    <location>
        <position position="45"/>
    </location>
</feature>
<feature type="sequence variant" id="VAR_017632" description="In hepatocellular carcinoma; dbSNP:rs121913407." evidence="10">
    <original>S</original>
    <variation>P</variation>
    <location>
        <position position="45"/>
    </location>
</feature>
<feature type="sequence variant" id="VAR_055430" description="In colorectal cancer." evidence="91">
    <location>
        <position position="45"/>
    </location>
</feature>
<feature type="sequence variant" id="VAR_089205" description="Found in a patient with features of osteopathia striata cranial sclerosis; uncertain significance; results in increased Wnt signaling." evidence="88">
    <original>K</original>
    <variation>N</variation>
    <location>
        <position position="292"/>
    </location>
</feature>
<feature type="sequence variant" id="VAR_072282" description="In NEDSDV." evidence="75">
    <original>L</original>
    <variation>P</variation>
    <location>
        <position position="388"/>
    </location>
</feature>
<feature type="sequence variant" id="VAR_079199" description="In NEDSDV; the patient also manifest features of exudative vitreoretinopathy." evidence="78">
    <location>
        <begin position="558"/>
        <end position="781"/>
    </location>
</feature>
<feature type="sequence variant" id="VAR_018954" description="In dbSNP:rs4135384." evidence="93">
    <original>M</original>
    <variation>V</variation>
    <location>
        <position position="688"/>
    </location>
</feature>
<feature type="sequence variant" id="VAR_079200" description="In EVR7; uncertain significance; dbSNP:rs748653573." evidence="79">
    <original>R</original>
    <variation>C</variation>
    <location>
        <position position="710"/>
    </location>
</feature>
<feature type="mutagenesis site" description="No effect." evidence="25">
    <original>S</original>
    <variation>F</variation>
    <location>
        <position position="29"/>
    </location>
</feature>
<feature type="mutagenesis site" description="Abolishes phosphorylation by PTK6." evidence="55">
    <original>Y</original>
    <variation>F</variation>
    <location>
        <position position="64"/>
    </location>
</feature>
<feature type="mutagenesis site" description="No effect on interaction with BCL9 and BCL9L." evidence="42">
    <original>Y</original>
    <variation>E</variation>
    <location>
        <position position="142"/>
    </location>
</feature>
<feature type="mutagenesis site" description="Abolishes interaction with BCL9 but no effect on interaction with CDH3; when associated with A-159." evidence="42">
    <original>L</original>
    <variation>A</variation>
    <location>
        <position position="156"/>
    </location>
</feature>
<feature type="mutagenesis site" description="No effect on interaction with BCL9 and CDH3. Abolishes interaction with BCL9 but no effect on interaction with CDH3; when associated with A-156." evidence="42">
    <original>L</original>
    <variation>A</variation>
    <location>
        <position position="159"/>
    </location>
</feature>
<feature type="mutagenesis site" description="No effect on interaction with BCL9 and CDH3." evidence="42">
    <original>L</original>
    <variation>A</variation>
    <location>
        <position position="178"/>
    </location>
</feature>
<feature type="mutagenesis site" description="Abolishes or strongly reduces AXIN2 binding." evidence="14">
    <original>F</original>
    <variation>A</variation>
    <location>
        <position position="253"/>
    </location>
</feature>
<feature type="mutagenesis site" description="Abolishes or strongly reduces AXIN1 and AXIN2 binding. Strongly reduces phosphorylation and degradation; when associated with A-386 and A-383." evidence="14">
    <original>H</original>
    <variation>A</variation>
    <location>
        <position position="260"/>
    </location>
</feature>
<feature type="mutagenesis site" description="Abolishes or strongly reduces AXIN1 and AXIN2 binding." evidence="14">
    <original>K</original>
    <variation>A</variation>
    <location>
        <position position="292"/>
    </location>
</feature>
<feature type="mutagenesis site" description="Abolishes TCF7L2 binding." evidence="21">
    <original>K</original>
    <variation>E</variation>
    <location>
        <position position="312"/>
    </location>
</feature>
<feature type="mutagenesis site" description="Abolished phosphorylation by SRC and interaction with isoform M2 of PKM (PKM2)." evidence="63">
    <original>Y</original>
    <variation>F</variation>
    <location>
        <position position="333"/>
    </location>
</feature>
<feature type="mutagenesis site" description="Abolishes APC binding." evidence="14">
    <original>K</original>
    <variation>A</variation>
    <location>
        <position position="345"/>
    </location>
</feature>
<feature type="mutagenesis site" description="Abolishes APC binding. Strongly reduces phosphorylation and degradation; when associated with A-260 and A-386." evidence="14">
    <original>W</original>
    <variation>A</variation>
    <location>
        <position position="383"/>
    </location>
</feature>
<feature type="mutagenesis site" description="Strongly reduces APC binding. Strongly reduces phosphorylation and degradation; when associated with A-260 and A-383." evidence="14">
    <original>R</original>
    <variation>A</variation>
    <location>
        <position position="386"/>
    </location>
</feature>
<feature type="mutagenesis site" description="Abolishes TCF7L2 and LEF1 binding." evidence="14">
    <original>N</original>
    <variation>A</variation>
    <location>
        <position position="426"/>
    </location>
</feature>
<feature type="mutagenesis site" description="Strongly reduces or abolishes LEF1 binding." evidence="14 21">
    <original>K</original>
    <variation>A</variation>
    <location>
        <position position="435"/>
    </location>
</feature>
<feature type="mutagenesis site" description="Abolishes TCF7L2 binding." evidence="14 21">
    <original>K</original>
    <variation>E</variation>
    <location>
        <position position="435"/>
    </location>
</feature>
<feature type="mutagenesis site" description="Abolishes TCF7L2 binding, and strongly reduces or abolishes LEF1 binding." evidence="14">
    <original>R</original>
    <variation>A</variation>
    <location>
        <position position="469"/>
    </location>
</feature>
<feature type="mutagenesis site" description="Abolishes TCF7L2 binding, and strongly reduces or abolishes LEF1 binding." evidence="14">
    <original>H</original>
    <variation>A</variation>
    <location>
        <position position="470"/>
    </location>
</feature>
<feature type="mutagenesis site" description="Abolishes TCF7L2 and LEF1 binding." evidence="14">
    <original>K</original>
    <variation>A</variation>
    <location>
        <position position="508"/>
    </location>
</feature>
<feature type="mutagenesis site" description="Abolishes CTNNBIP1 binding; when associated with A-661." evidence="30">
    <original>F</original>
    <variation>A</variation>
    <location>
        <position position="660"/>
    </location>
</feature>
<feature type="mutagenesis site" description="Abolishes CTNNBIP1 binding; when associated with A-660." evidence="30">
    <original>R</original>
    <variation>A</variation>
    <location>
        <position position="661"/>
    </location>
</feature>
<feature type="helix" evidence="113">
    <location>
        <begin position="145"/>
        <end position="160"/>
    </location>
</feature>
<feature type="strand" evidence="114">
    <location>
        <begin position="161"/>
        <end position="164"/>
    </location>
</feature>
<feature type="helix" evidence="113">
    <location>
        <begin position="165"/>
        <end position="179"/>
    </location>
</feature>
<feature type="helix" evidence="113">
    <location>
        <begin position="182"/>
        <end position="189"/>
    </location>
</feature>
<feature type="helix" evidence="113">
    <location>
        <begin position="192"/>
        <end position="204"/>
    </location>
</feature>
<feature type="helix" evidence="113">
    <location>
        <begin position="208"/>
        <end position="221"/>
    </location>
</feature>
<feature type="helix" evidence="113">
    <location>
        <begin position="225"/>
        <end position="233"/>
    </location>
</feature>
<feature type="helix" evidence="113">
    <location>
        <begin position="236"/>
        <end position="243"/>
    </location>
</feature>
<feature type="helix" evidence="113">
    <location>
        <begin position="249"/>
        <end position="265"/>
    </location>
</feature>
<feature type="helix" evidence="113">
    <location>
        <begin position="269"/>
        <end position="275"/>
    </location>
</feature>
<feature type="helix" evidence="113">
    <location>
        <begin position="278"/>
        <end position="284"/>
    </location>
</feature>
<feature type="helix" evidence="113">
    <location>
        <begin position="285"/>
        <end position="287"/>
    </location>
</feature>
<feature type="helix" evidence="113">
    <location>
        <begin position="291"/>
        <end position="303"/>
    </location>
</feature>
<feature type="helix" evidence="107">
    <location>
        <begin position="309"/>
        <end position="317"/>
    </location>
</feature>
<feature type="helix" evidence="107">
    <location>
        <begin position="320"/>
        <end position="330"/>
    </location>
</feature>
<feature type="helix" evidence="107">
    <location>
        <begin position="334"/>
        <end position="347"/>
    </location>
</feature>
<feature type="helix" evidence="107">
    <location>
        <begin position="353"/>
        <end position="359"/>
    </location>
</feature>
<feature type="helix" evidence="107">
    <location>
        <begin position="362"/>
        <end position="367"/>
    </location>
</feature>
<feature type="turn" evidence="107">
    <location>
        <begin position="368"/>
        <end position="371"/>
    </location>
</feature>
<feature type="helix" evidence="107">
    <location>
        <begin position="375"/>
        <end position="389"/>
    </location>
</feature>
<feature type="helix" evidence="115">
    <location>
        <begin position="392"/>
        <end position="394"/>
    </location>
</feature>
<feature type="helix" evidence="107">
    <location>
        <begin position="399"/>
        <end position="408"/>
    </location>
</feature>
<feature type="helix" evidence="107">
    <location>
        <begin position="414"/>
        <end position="427"/>
    </location>
</feature>
<feature type="turn" evidence="107">
    <location>
        <begin position="428"/>
        <end position="430"/>
    </location>
</feature>
<feature type="helix" evidence="107">
    <location>
        <begin position="432"/>
        <end position="440"/>
    </location>
</feature>
<feature type="helix" evidence="107">
    <location>
        <begin position="443"/>
        <end position="454"/>
    </location>
</feature>
<feature type="helix" evidence="107">
    <location>
        <begin position="458"/>
        <end position="471"/>
    </location>
</feature>
<feature type="strand" evidence="107">
    <location>
        <begin position="473"/>
        <end position="475"/>
    </location>
</feature>
<feature type="helix" evidence="107">
    <location>
        <begin position="478"/>
        <end position="487"/>
    </location>
</feature>
<feature type="helix" evidence="107">
    <location>
        <begin position="491"/>
        <end position="496"/>
    </location>
</feature>
<feature type="strand" evidence="112">
    <location>
        <begin position="499"/>
        <end position="501"/>
    </location>
</feature>
<feature type="helix" evidence="107">
    <location>
        <begin position="504"/>
        <end position="517"/>
    </location>
</feature>
<feature type="helix" evidence="107">
    <location>
        <begin position="521"/>
        <end position="523"/>
    </location>
</feature>
<feature type="helix" evidence="107">
    <location>
        <begin position="524"/>
        <end position="529"/>
    </location>
</feature>
<feature type="helix" evidence="107">
    <location>
        <begin position="532"/>
        <end position="547"/>
    </location>
</feature>
<feature type="strand" evidence="108">
    <location>
        <begin position="550"/>
        <end position="552"/>
    </location>
</feature>
<feature type="strand" evidence="108">
    <location>
        <begin position="554"/>
        <end position="557"/>
    </location>
</feature>
<feature type="strand" evidence="109">
    <location>
        <begin position="561"/>
        <end position="563"/>
    </location>
</feature>
<feature type="helix" evidence="107">
    <location>
        <begin position="566"/>
        <end position="580"/>
    </location>
</feature>
<feature type="helix" evidence="107">
    <location>
        <begin position="584"/>
        <end position="592"/>
    </location>
</feature>
<feature type="helix" evidence="107">
    <location>
        <begin position="596"/>
        <end position="601"/>
    </location>
</feature>
<feature type="helix" evidence="107">
    <location>
        <begin position="602"/>
        <end position="604"/>
    </location>
</feature>
<feature type="helix" evidence="107">
    <location>
        <begin position="608"/>
        <end position="621"/>
    </location>
</feature>
<feature type="helix" evidence="107">
    <location>
        <begin position="625"/>
        <end position="633"/>
    </location>
</feature>
<feature type="turn" evidence="116">
    <location>
        <begin position="634"/>
        <end position="636"/>
    </location>
</feature>
<feature type="helix" evidence="107">
    <location>
        <begin position="637"/>
        <end position="642"/>
    </location>
</feature>
<feature type="helix" evidence="107">
    <location>
        <begin position="643"/>
        <end position="645"/>
    </location>
</feature>
<feature type="helix" evidence="107">
    <location>
        <begin position="649"/>
        <end position="662"/>
    </location>
</feature>
<feature type="turn" evidence="110">
    <location>
        <begin position="663"/>
        <end position="665"/>
    </location>
</feature>
<feature type="helix" evidence="110">
    <location>
        <begin position="668"/>
        <end position="682"/>
    </location>
</feature>
<feature type="helix" evidence="110">
    <location>
        <begin position="688"/>
        <end position="690"/>
    </location>
</feature>
<feature type="strand" evidence="111">
    <location>
        <begin position="778"/>
        <end position="780"/>
    </location>
</feature>
<evidence type="ECO:0000250" key="1"/>
<evidence type="ECO:0000250" key="2">
    <source>
        <dbReference type="UniProtKB" id="B6V8E6"/>
    </source>
</evidence>
<evidence type="ECO:0000250" key="3">
    <source>
        <dbReference type="UniProtKB" id="Q02248"/>
    </source>
</evidence>
<evidence type="ECO:0000256" key="4">
    <source>
        <dbReference type="SAM" id="MobiDB-lite"/>
    </source>
</evidence>
<evidence type="ECO:0000269" key="5">
    <source>
    </source>
</evidence>
<evidence type="ECO:0000269" key="6">
    <source>
    </source>
</evidence>
<evidence type="ECO:0000269" key="7">
    <source>
    </source>
</evidence>
<evidence type="ECO:0000269" key="8">
    <source>
    </source>
</evidence>
<evidence type="ECO:0000269" key="9">
    <source>
    </source>
</evidence>
<evidence type="ECO:0000269" key="10">
    <source>
    </source>
</evidence>
<evidence type="ECO:0000269" key="11">
    <source>
    </source>
</evidence>
<evidence type="ECO:0000269" key="12">
    <source>
    </source>
</evidence>
<evidence type="ECO:0000269" key="13">
    <source>
    </source>
</evidence>
<evidence type="ECO:0000269" key="14">
    <source>
    </source>
</evidence>
<evidence type="ECO:0000269" key="15">
    <source>
    </source>
</evidence>
<evidence type="ECO:0000269" key="16">
    <source>
    </source>
</evidence>
<evidence type="ECO:0000269" key="17">
    <source>
    </source>
</evidence>
<evidence type="ECO:0000269" key="18">
    <source>
    </source>
</evidence>
<evidence type="ECO:0000269" key="19">
    <source>
    </source>
</evidence>
<evidence type="ECO:0000269" key="20">
    <source>
    </source>
</evidence>
<evidence type="ECO:0000269" key="21">
    <source>
    </source>
</evidence>
<evidence type="ECO:0000269" key="22">
    <source>
    </source>
</evidence>
<evidence type="ECO:0000269" key="23">
    <source>
    </source>
</evidence>
<evidence type="ECO:0000269" key="24">
    <source>
    </source>
</evidence>
<evidence type="ECO:0000269" key="25">
    <source>
    </source>
</evidence>
<evidence type="ECO:0000269" key="26">
    <source>
    </source>
</evidence>
<evidence type="ECO:0000269" key="27">
    <source>
    </source>
</evidence>
<evidence type="ECO:0000269" key="28">
    <source>
    </source>
</evidence>
<evidence type="ECO:0000269" key="29">
    <source>
    </source>
</evidence>
<evidence type="ECO:0000269" key="30">
    <source>
    </source>
</evidence>
<evidence type="ECO:0000269" key="31">
    <source>
    </source>
</evidence>
<evidence type="ECO:0000269" key="32">
    <source>
    </source>
</evidence>
<evidence type="ECO:0000269" key="33">
    <source>
    </source>
</evidence>
<evidence type="ECO:0000269" key="34">
    <source>
    </source>
</evidence>
<evidence type="ECO:0000269" key="35">
    <source>
    </source>
</evidence>
<evidence type="ECO:0000269" key="36">
    <source>
    </source>
</evidence>
<evidence type="ECO:0000269" key="37">
    <source>
    </source>
</evidence>
<evidence type="ECO:0000269" key="38">
    <source>
    </source>
</evidence>
<evidence type="ECO:0000269" key="39">
    <source>
    </source>
</evidence>
<evidence type="ECO:0000269" key="40">
    <source>
    </source>
</evidence>
<evidence type="ECO:0000269" key="41">
    <source>
    </source>
</evidence>
<evidence type="ECO:0000269" key="42">
    <source>
    </source>
</evidence>
<evidence type="ECO:0000269" key="43">
    <source>
    </source>
</evidence>
<evidence type="ECO:0000269" key="44">
    <source>
    </source>
</evidence>
<evidence type="ECO:0000269" key="45">
    <source>
    </source>
</evidence>
<evidence type="ECO:0000269" key="46">
    <source>
    </source>
</evidence>
<evidence type="ECO:0000269" key="47">
    <source>
    </source>
</evidence>
<evidence type="ECO:0000269" key="48">
    <source>
    </source>
</evidence>
<evidence type="ECO:0000269" key="49">
    <source>
    </source>
</evidence>
<evidence type="ECO:0000269" key="50">
    <source>
    </source>
</evidence>
<evidence type="ECO:0000269" key="51">
    <source>
    </source>
</evidence>
<evidence type="ECO:0000269" key="52">
    <source>
    </source>
</evidence>
<evidence type="ECO:0000269" key="53">
    <source>
    </source>
</evidence>
<evidence type="ECO:0000269" key="54">
    <source>
    </source>
</evidence>
<evidence type="ECO:0000269" key="55">
    <source>
    </source>
</evidence>
<evidence type="ECO:0000269" key="56">
    <source>
    </source>
</evidence>
<evidence type="ECO:0000269" key="57">
    <source>
    </source>
</evidence>
<evidence type="ECO:0000269" key="58">
    <source>
    </source>
</evidence>
<evidence type="ECO:0000269" key="59">
    <source>
    </source>
</evidence>
<evidence type="ECO:0000269" key="60">
    <source>
    </source>
</evidence>
<evidence type="ECO:0000269" key="61">
    <source>
    </source>
</evidence>
<evidence type="ECO:0000269" key="62">
    <source>
    </source>
</evidence>
<evidence type="ECO:0000269" key="63">
    <source>
    </source>
</evidence>
<evidence type="ECO:0000269" key="64">
    <source>
    </source>
</evidence>
<evidence type="ECO:0000269" key="65">
    <source>
    </source>
</evidence>
<evidence type="ECO:0000269" key="66">
    <source>
    </source>
</evidence>
<evidence type="ECO:0000269" key="67">
    <source>
    </source>
</evidence>
<evidence type="ECO:0000269" key="68">
    <source>
    </source>
</evidence>
<evidence type="ECO:0000269" key="69">
    <source>
    </source>
</evidence>
<evidence type="ECO:0000269" key="70">
    <source>
    </source>
</evidence>
<evidence type="ECO:0000269" key="71">
    <source>
    </source>
</evidence>
<evidence type="ECO:0000269" key="72">
    <source>
    </source>
</evidence>
<evidence type="ECO:0000269" key="73">
    <source>
    </source>
</evidence>
<evidence type="ECO:0000269" key="74">
    <source>
    </source>
</evidence>
<evidence type="ECO:0000269" key="75">
    <source>
    </source>
</evidence>
<evidence type="ECO:0000269" key="76">
    <source>
    </source>
</evidence>
<evidence type="ECO:0000269" key="77">
    <source>
    </source>
</evidence>
<evidence type="ECO:0000269" key="78">
    <source>
    </source>
</evidence>
<evidence type="ECO:0000269" key="79">
    <source>
    </source>
</evidence>
<evidence type="ECO:0000269" key="80">
    <source>
    </source>
</evidence>
<evidence type="ECO:0000269" key="81">
    <source>
    </source>
</evidence>
<evidence type="ECO:0000269" key="82">
    <source>
    </source>
</evidence>
<evidence type="ECO:0000269" key="83">
    <source>
    </source>
</evidence>
<evidence type="ECO:0000269" key="84">
    <source>
    </source>
</evidence>
<evidence type="ECO:0000269" key="85">
    <source>
    </source>
</evidence>
<evidence type="ECO:0000269" key="86">
    <source>
    </source>
</evidence>
<evidence type="ECO:0000269" key="87">
    <source>
    </source>
</evidence>
<evidence type="ECO:0000269" key="88">
    <source>
    </source>
</evidence>
<evidence type="ECO:0000269" key="89">
    <source>
    </source>
</evidence>
<evidence type="ECO:0000269" key="90">
    <source>
    </source>
</evidence>
<evidence type="ECO:0000269" key="91">
    <source>
    </source>
</evidence>
<evidence type="ECO:0000269" key="92">
    <source>
    </source>
</evidence>
<evidence type="ECO:0000269" key="93">
    <source ref="3"/>
</evidence>
<evidence type="ECO:0000303" key="94">
    <source>
    </source>
</evidence>
<evidence type="ECO:0000305" key="95"/>
<evidence type="ECO:0000305" key="96">
    <source>
    </source>
</evidence>
<evidence type="ECO:0000305" key="97">
    <source>
    </source>
</evidence>
<evidence type="ECO:0000305" key="98">
    <source>
    </source>
</evidence>
<evidence type="ECO:0000312" key="99">
    <source>
        <dbReference type="HGNC" id="HGNC:2514"/>
    </source>
</evidence>
<evidence type="ECO:0007744" key="100">
    <source>
        <dbReference type="PDB" id="3TX7"/>
    </source>
</evidence>
<evidence type="ECO:0007744" key="101">
    <source>
    </source>
</evidence>
<evidence type="ECO:0007744" key="102">
    <source>
    </source>
</evidence>
<evidence type="ECO:0007744" key="103">
    <source>
    </source>
</evidence>
<evidence type="ECO:0007744" key="104">
    <source>
    </source>
</evidence>
<evidence type="ECO:0007744" key="105">
    <source>
    </source>
</evidence>
<evidence type="ECO:0007744" key="106">
    <source>
    </source>
</evidence>
<evidence type="ECO:0007829" key="107">
    <source>
        <dbReference type="PDB" id="1JDH"/>
    </source>
</evidence>
<evidence type="ECO:0007829" key="108">
    <source>
        <dbReference type="PDB" id="1QZ7"/>
    </source>
</evidence>
<evidence type="ECO:0007829" key="109">
    <source>
        <dbReference type="PDB" id="1T08"/>
    </source>
</evidence>
<evidence type="ECO:0007829" key="110">
    <source>
        <dbReference type="PDB" id="2Z6H"/>
    </source>
</evidence>
<evidence type="ECO:0007829" key="111">
    <source>
        <dbReference type="PDB" id="3DIW"/>
    </source>
</evidence>
<evidence type="ECO:0007829" key="112">
    <source>
        <dbReference type="PDB" id="4DJS"/>
    </source>
</evidence>
<evidence type="ECO:0007829" key="113">
    <source>
        <dbReference type="PDB" id="7AFW"/>
    </source>
</evidence>
<evidence type="ECO:0007829" key="114">
    <source>
        <dbReference type="PDB" id="7UWO"/>
    </source>
</evidence>
<evidence type="ECO:0007829" key="115">
    <source>
        <dbReference type="PDB" id="7ZRB"/>
    </source>
</evidence>
<evidence type="ECO:0007829" key="116">
    <source>
        <dbReference type="PDB" id="8Y0G"/>
    </source>
</evidence>
<sequence>MATQADLMELDMAMEPDRKAAVSHWQQQSYLDSGIHSGATTTAPSLSGKGNPEEEDVDTSQVLYEWEQGFSQSFTQEQVADIDGQYAMTRAQRVRAAMFPETLDEGMQIPSTQFDAAHPTNVQRLAEPSQMLKHAVVNLINYQDDAELATRAIPELTKLLNDEDQVVVNKAAVMVHQLSKKEASRHAIMRSPQMVSAIVRTMQNTNDVETARCTAGTLHNLSHHREGLLAIFKSGGIPALVKMLGSPVDSVLFYAITTLHNLLLHQEGAKMAVRLAGGLQKMVALLNKTNVKFLAITTDCLQILAYGNQESKLIILASGGPQALVNIMRTYTYEKLLWTTSRVLKVLSVCSSNKPAIVEAGGMQALGLHLTDPSQRLVQNCLWTLRNLSDAATKQEGMEGLLGTLVQLLGSDDINVVTCAAGILSNLTCNNYKNKMMVCQVGGIEALVRTVLRAGDREDITEPAICALRHLTSRHQEAEMAQNAVRLHYGLPVVVKLLHPPSHWPLIKATVGLIRNLALCPANHAPLREQGAIPRLVQLLVRAHQDTQRRTSMGGTQQQFVEGVRMEEIVEGCTGALHILARDVHNRIVIRGLNTIPLFVQLLYSPIENIQRVAAGVLCELAQDKEAAEAIEAEGATAPLTELLHSRNEGVATYAAAVLFRMSEDKPQDYKKRLSVELTSSLFRTEPMAWNETADLGLDIGAQGEPLGYRQDDPSYRSFHSGGYGQDALGMDPMMEHEMGGHHPGADYPVDGLPDLGHAQDLMDGLPPGDSNQLAWFDTDL</sequence>
<reference key="1">
    <citation type="journal article" date="1994" name="J. Cell Biol.">
        <title>E-cadherin and APC compete for the interaction with beta-catenin and the cytoskeleton.</title>
        <authorList>
            <person name="Huelsken J."/>
            <person name="Birchmeier W."/>
            <person name="Behrens J."/>
        </authorList>
    </citation>
    <scope>NUCLEOTIDE SEQUENCE [MRNA]</scope>
    <source>
        <tissue>Placenta</tissue>
    </source>
</reference>
<reference key="2">
    <citation type="submission" date="1999-02" db="EMBL/GenBank/DDBJ databases">
        <title>Functional prediction of the coding sequences of 75 new genes deduced by analysis of cDNA clones from human fetal liver.</title>
        <authorList>
            <person name="Zhang C."/>
            <person name="Yu Y."/>
            <person name="Zhang S."/>
            <person name="Wei H."/>
            <person name="Bi J."/>
            <person name="Zhou G."/>
            <person name="Dong C."/>
            <person name="Zai Y."/>
            <person name="Xu W."/>
            <person name="Gao F."/>
            <person name="Liu M."/>
            <person name="He F."/>
        </authorList>
    </citation>
    <scope>NUCLEOTIDE SEQUENCE [LARGE SCALE MRNA]</scope>
    <source>
        <tissue>Fetal liver</tissue>
    </source>
</reference>
<reference key="3">
    <citation type="submission" date="2003-11" db="EMBL/GenBank/DDBJ databases">
        <authorList>
            <consortium name="NIEHS SNPs program"/>
        </authorList>
    </citation>
    <scope>NUCLEOTIDE SEQUENCE [GENOMIC DNA]</scope>
    <scope>VARIANT VAL-688</scope>
</reference>
<reference key="4">
    <citation type="journal article" date="2004" name="Nat. Genet.">
        <title>Complete sequencing and characterization of 21,243 full-length human cDNAs.</title>
        <authorList>
            <person name="Ota T."/>
            <person name="Suzuki Y."/>
            <person name="Nishikawa T."/>
            <person name="Otsuki T."/>
            <person name="Sugiyama T."/>
            <person name="Irie R."/>
            <person name="Wakamatsu A."/>
            <person name="Hayashi K."/>
            <person name="Sato H."/>
            <person name="Nagai K."/>
            <person name="Kimura K."/>
            <person name="Makita H."/>
            <person name="Sekine M."/>
            <person name="Obayashi M."/>
            <person name="Nishi T."/>
            <person name="Shibahara T."/>
            <person name="Tanaka T."/>
            <person name="Ishii S."/>
            <person name="Yamamoto J."/>
            <person name="Saito K."/>
            <person name="Kawai Y."/>
            <person name="Isono Y."/>
            <person name="Nakamura Y."/>
            <person name="Nagahari K."/>
            <person name="Murakami K."/>
            <person name="Yasuda T."/>
            <person name="Iwayanagi T."/>
            <person name="Wagatsuma M."/>
            <person name="Shiratori A."/>
            <person name="Sudo H."/>
            <person name="Hosoiri T."/>
            <person name="Kaku Y."/>
            <person name="Kodaira H."/>
            <person name="Kondo H."/>
            <person name="Sugawara M."/>
            <person name="Takahashi M."/>
            <person name="Kanda K."/>
            <person name="Yokoi T."/>
            <person name="Furuya T."/>
            <person name="Kikkawa E."/>
            <person name="Omura Y."/>
            <person name="Abe K."/>
            <person name="Kamihara K."/>
            <person name="Katsuta N."/>
            <person name="Sato K."/>
            <person name="Tanikawa M."/>
            <person name="Yamazaki M."/>
            <person name="Ninomiya K."/>
            <person name="Ishibashi T."/>
            <person name="Yamashita H."/>
            <person name="Murakawa K."/>
            <person name="Fujimori K."/>
            <person name="Tanai H."/>
            <person name="Kimata M."/>
            <person name="Watanabe M."/>
            <person name="Hiraoka S."/>
            <person name="Chiba Y."/>
            <person name="Ishida S."/>
            <person name="Ono Y."/>
            <person name="Takiguchi S."/>
            <person name="Watanabe S."/>
            <person name="Yosida M."/>
            <person name="Hotuta T."/>
            <person name="Kusano J."/>
            <person name="Kanehori K."/>
            <person name="Takahashi-Fujii A."/>
            <person name="Hara H."/>
            <person name="Tanase T.-O."/>
            <person name="Nomura Y."/>
            <person name="Togiya S."/>
            <person name="Komai F."/>
            <person name="Hara R."/>
            <person name="Takeuchi K."/>
            <person name="Arita M."/>
            <person name="Imose N."/>
            <person name="Musashino K."/>
            <person name="Yuuki H."/>
            <person name="Oshima A."/>
            <person name="Sasaki N."/>
            <person name="Aotsuka S."/>
            <person name="Yoshikawa Y."/>
            <person name="Matsunawa H."/>
            <person name="Ichihara T."/>
            <person name="Shiohata N."/>
            <person name="Sano S."/>
            <person name="Moriya S."/>
            <person name="Momiyama H."/>
            <person name="Satoh N."/>
            <person name="Takami S."/>
            <person name="Terashima Y."/>
            <person name="Suzuki O."/>
            <person name="Nakagawa S."/>
            <person name="Senoh A."/>
            <person name="Mizoguchi H."/>
            <person name="Goto Y."/>
            <person name="Shimizu F."/>
            <person name="Wakebe H."/>
            <person name="Hishigaki H."/>
            <person name="Watanabe T."/>
            <person name="Sugiyama A."/>
            <person name="Takemoto M."/>
            <person name="Kawakami B."/>
            <person name="Yamazaki M."/>
            <person name="Watanabe K."/>
            <person name="Kumagai A."/>
            <person name="Itakura S."/>
            <person name="Fukuzumi Y."/>
            <person name="Fujimori Y."/>
            <person name="Komiyama M."/>
            <person name="Tashiro H."/>
            <person name="Tanigami A."/>
            <person name="Fujiwara T."/>
            <person name="Ono T."/>
            <person name="Yamada K."/>
            <person name="Fujii Y."/>
            <person name="Ozaki K."/>
            <person name="Hirao M."/>
            <person name="Ohmori Y."/>
            <person name="Kawabata A."/>
            <person name="Hikiji T."/>
            <person name="Kobatake N."/>
            <person name="Inagaki H."/>
            <person name="Ikema Y."/>
            <person name="Okamoto S."/>
            <person name="Okitani R."/>
            <person name="Kawakami T."/>
            <person name="Noguchi S."/>
            <person name="Itoh T."/>
            <person name="Shigeta K."/>
            <person name="Senba T."/>
            <person name="Matsumura K."/>
            <person name="Nakajima Y."/>
            <person name="Mizuno T."/>
            <person name="Morinaga M."/>
            <person name="Sasaki M."/>
            <person name="Togashi T."/>
            <person name="Oyama M."/>
            <person name="Hata H."/>
            <person name="Watanabe M."/>
            <person name="Komatsu T."/>
            <person name="Mizushima-Sugano J."/>
            <person name="Satoh T."/>
            <person name="Shirai Y."/>
            <person name="Takahashi Y."/>
            <person name="Nakagawa K."/>
            <person name="Okumura K."/>
            <person name="Nagase T."/>
            <person name="Nomura N."/>
            <person name="Kikuchi H."/>
            <person name="Masuho Y."/>
            <person name="Yamashita R."/>
            <person name="Nakai K."/>
            <person name="Yada T."/>
            <person name="Nakamura Y."/>
            <person name="Ohara O."/>
            <person name="Isogai T."/>
            <person name="Sugano S."/>
        </authorList>
    </citation>
    <scope>NUCLEOTIDE SEQUENCE [LARGE SCALE MRNA]</scope>
    <source>
        <tissue>Hippocampus</tissue>
    </source>
</reference>
<reference key="5">
    <citation type="journal article" date="2006" name="Nature">
        <title>The DNA sequence, annotation and analysis of human chromosome 3.</title>
        <authorList>
            <person name="Muzny D.M."/>
            <person name="Scherer S.E."/>
            <person name="Kaul R."/>
            <person name="Wang J."/>
            <person name="Yu J."/>
            <person name="Sudbrak R."/>
            <person name="Buhay C.J."/>
            <person name="Chen R."/>
            <person name="Cree A."/>
            <person name="Ding Y."/>
            <person name="Dugan-Rocha S."/>
            <person name="Gill R."/>
            <person name="Gunaratne P."/>
            <person name="Harris R.A."/>
            <person name="Hawes A.C."/>
            <person name="Hernandez J."/>
            <person name="Hodgson A.V."/>
            <person name="Hume J."/>
            <person name="Jackson A."/>
            <person name="Khan Z.M."/>
            <person name="Kovar-Smith C."/>
            <person name="Lewis L.R."/>
            <person name="Lozado R.J."/>
            <person name="Metzker M.L."/>
            <person name="Milosavljevic A."/>
            <person name="Miner G.R."/>
            <person name="Morgan M.B."/>
            <person name="Nazareth L.V."/>
            <person name="Scott G."/>
            <person name="Sodergren E."/>
            <person name="Song X.-Z."/>
            <person name="Steffen D."/>
            <person name="Wei S."/>
            <person name="Wheeler D.A."/>
            <person name="Wright M.W."/>
            <person name="Worley K.C."/>
            <person name="Yuan Y."/>
            <person name="Zhang Z."/>
            <person name="Adams C.Q."/>
            <person name="Ansari-Lari M.A."/>
            <person name="Ayele M."/>
            <person name="Brown M.J."/>
            <person name="Chen G."/>
            <person name="Chen Z."/>
            <person name="Clendenning J."/>
            <person name="Clerc-Blankenburg K.P."/>
            <person name="Chen R."/>
            <person name="Chen Z."/>
            <person name="Davis C."/>
            <person name="Delgado O."/>
            <person name="Dinh H.H."/>
            <person name="Dong W."/>
            <person name="Draper H."/>
            <person name="Ernst S."/>
            <person name="Fu G."/>
            <person name="Gonzalez-Garay M.L."/>
            <person name="Garcia D.K."/>
            <person name="Gillett W."/>
            <person name="Gu J."/>
            <person name="Hao B."/>
            <person name="Haugen E."/>
            <person name="Havlak P."/>
            <person name="He X."/>
            <person name="Hennig S."/>
            <person name="Hu S."/>
            <person name="Huang W."/>
            <person name="Jackson L.R."/>
            <person name="Jacob L.S."/>
            <person name="Kelly S.H."/>
            <person name="Kube M."/>
            <person name="Levy R."/>
            <person name="Li Z."/>
            <person name="Liu B."/>
            <person name="Liu J."/>
            <person name="Liu W."/>
            <person name="Lu J."/>
            <person name="Maheshwari M."/>
            <person name="Nguyen B.-V."/>
            <person name="Okwuonu G.O."/>
            <person name="Palmeiri A."/>
            <person name="Pasternak S."/>
            <person name="Perez L.M."/>
            <person name="Phelps K.A."/>
            <person name="Plopper F.J."/>
            <person name="Qiang B."/>
            <person name="Raymond C."/>
            <person name="Rodriguez R."/>
            <person name="Saenphimmachak C."/>
            <person name="Santibanez J."/>
            <person name="Shen H."/>
            <person name="Shen Y."/>
            <person name="Subramanian S."/>
            <person name="Tabor P.E."/>
            <person name="Verduzco D."/>
            <person name="Waldron L."/>
            <person name="Wang J."/>
            <person name="Wang J."/>
            <person name="Wang Q."/>
            <person name="Williams G.A."/>
            <person name="Wong G.K.-S."/>
            <person name="Yao Z."/>
            <person name="Zhang J."/>
            <person name="Zhang X."/>
            <person name="Zhao G."/>
            <person name="Zhou J."/>
            <person name="Zhou Y."/>
            <person name="Nelson D."/>
            <person name="Lehrach H."/>
            <person name="Reinhardt R."/>
            <person name="Naylor S.L."/>
            <person name="Yang H."/>
            <person name="Olson M."/>
            <person name="Weinstock G."/>
            <person name="Gibbs R.A."/>
        </authorList>
    </citation>
    <scope>NUCLEOTIDE SEQUENCE [LARGE SCALE GENOMIC DNA]</scope>
</reference>
<reference key="6">
    <citation type="submission" date="2005-07" db="EMBL/GenBank/DDBJ databases">
        <authorList>
            <person name="Mural R.J."/>
            <person name="Istrail S."/>
            <person name="Sutton G.G."/>
            <person name="Florea L."/>
            <person name="Halpern A.L."/>
            <person name="Mobarry C.M."/>
            <person name="Lippert R."/>
            <person name="Walenz B."/>
            <person name="Shatkay H."/>
            <person name="Dew I."/>
            <person name="Miller J.R."/>
            <person name="Flanigan M.J."/>
            <person name="Edwards N.J."/>
            <person name="Bolanos R."/>
            <person name="Fasulo D."/>
            <person name="Halldorsson B.V."/>
            <person name="Hannenhalli S."/>
            <person name="Turner R."/>
            <person name="Yooseph S."/>
            <person name="Lu F."/>
            <person name="Nusskern D.R."/>
            <person name="Shue B.C."/>
            <person name="Zheng X.H."/>
            <person name="Zhong F."/>
            <person name="Delcher A.L."/>
            <person name="Huson D.H."/>
            <person name="Kravitz S.A."/>
            <person name="Mouchard L."/>
            <person name="Reinert K."/>
            <person name="Remington K.A."/>
            <person name="Clark A.G."/>
            <person name="Waterman M.S."/>
            <person name="Eichler E.E."/>
            <person name="Adams M.D."/>
            <person name="Hunkapiller M.W."/>
            <person name="Myers E.W."/>
            <person name="Venter J.C."/>
        </authorList>
    </citation>
    <scope>NUCLEOTIDE SEQUENCE [LARGE SCALE GENOMIC DNA]</scope>
</reference>
<reference key="7">
    <citation type="journal article" date="2004" name="Genome Res.">
        <title>The status, quality, and expansion of the NIH full-length cDNA project: the Mammalian Gene Collection (MGC).</title>
        <authorList>
            <consortium name="The MGC Project Team"/>
        </authorList>
    </citation>
    <scope>NUCLEOTIDE SEQUENCE [LARGE SCALE MRNA]</scope>
    <source>
        <tissue>Skin</tissue>
    </source>
</reference>
<reference key="8">
    <citation type="journal article" date="2002" name="Cancer Res.">
        <title>Oncogenic beta-catenin is required for bone morphogenetic protein 4 expression in human cancer cells.</title>
        <authorList>
            <person name="Kim J.-S."/>
            <person name="Crooks H."/>
            <person name="Dracheva T."/>
            <person name="Nishanian T.G."/>
            <person name="Singh B."/>
            <person name="Jen J."/>
            <person name="Waldman T."/>
        </authorList>
    </citation>
    <scope>NUCLEOTIDE SEQUENCE [GENOMIC DNA] OF 1-312</scope>
</reference>
<reference key="9">
    <citation type="submission" date="2001-05" db="EMBL/GenBank/DDBJ databases">
        <title>Identification of immuno-peptidmics that are recognized by tumor-reactive CTL generated from TIL of colon cancer patients.</title>
        <authorList>
            <person name="Shichijo S."/>
            <person name="Itoh K."/>
        </authorList>
    </citation>
    <scope>NUCLEOTIDE SEQUENCE [LARGE SCALE MRNA] OF 258-781</scope>
    <source>
        <tissue>Colon adenocarcinoma</tissue>
    </source>
</reference>
<reference key="10">
    <citation type="journal article" date="1994" name="FEBS Lett.">
        <title>Distinct cadherin-catenin complexes in Ca(2+)-dependent cell-cell adhesion.</title>
        <authorList>
            <person name="Butz S."/>
            <person name="Kemler R."/>
        </authorList>
    </citation>
    <scope>IDENTIFICATION IN AN E-CADHERIN/CATENIN ADHESION COMPLEX</scope>
</reference>
<reference key="11">
    <citation type="journal article" date="1997" name="Nat. Genet.">
        <title>Promoter swapping between the genes for a novel zinc finger protein and beta-catenin in pleiomorphic adenomas with t(3;8)(p21;q12) translocations.</title>
        <authorList>
            <person name="Kas K."/>
            <person name="Voz M.L."/>
            <person name="Roeijer E."/>
            <person name="Astroem A.-K."/>
            <person name="Meyen E."/>
            <person name="Stenman G."/>
            <person name="Van de Ven W.J.M."/>
        </authorList>
    </citation>
    <scope>CHROMOSOMAL TRANSLOCATION WITH PLAG1</scope>
</reference>
<reference key="12">
    <citation type="journal article" date="1999" name="Cancer Res.">
        <title>Conserved mechanism of PLAG1 activation in salivary gland tumors with and without chromosome 8q12 abnormalities: identification of SII as a new fusion partner gene.</title>
        <authorList>
            <person name="Astroem A.-K."/>
            <person name="Voz M.L."/>
            <person name="Kas K."/>
            <person name="Roeijer E."/>
            <person name="Wedell B."/>
            <person name="Mandahl N."/>
            <person name="Van de Ven W."/>
            <person name="Mark J."/>
            <person name="Stenman G."/>
        </authorList>
    </citation>
    <scope>CHROMOSOMAL TRANSLOCATION WITH PLAG1</scope>
</reference>
<reference key="13">
    <citation type="journal article" date="1999" name="J. Biol. Chem.">
        <title>Phosphorylation and free pool of beta-catenin are regulated by tyrosine kinases and tyrosine phosphatases during epithelial cell migration.</title>
        <authorList>
            <person name="Mueller T."/>
            <person name="Choidas A."/>
            <person name="Reichmann E."/>
            <person name="Ullrich A."/>
        </authorList>
    </citation>
    <scope>STIMULATION OF TYROSINE PHOSPHORYLATION BY EGF</scope>
    <scope>DEPHOSPHORYLATION BY PTPRF</scope>
</reference>
<reference key="14">
    <citation type="journal article" date="2000" name="J. Cell Sci.">
        <title>ARVCF localizes to the nucleus and adherens junction and is mutually exclusive with p120(ctn) in E-cadherin complexes.</title>
        <authorList>
            <person name="Mariner D.J."/>
            <person name="Wang J."/>
            <person name="Reynolds A.B."/>
        </authorList>
    </citation>
    <scope>SUBCELLULAR LOCATION</scope>
</reference>
<reference key="15">
    <citation type="journal article" date="2000" name="Nat. Struct. Biol.">
        <title>Hot spots in beta-catenin for interactions with LEF-1, conductin and APC.</title>
        <authorList>
            <person name="von Kries J.P."/>
            <person name="Winbeck G."/>
            <person name="Asbrand C."/>
            <person name="Schwarz-Romond T."/>
            <person name="Sochnikova N."/>
            <person name="Dell'Oro A."/>
            <person name="Behrens J."/>
            <person name="Birchmeier W."/>
        </authorList>
    </citation>
    <scope>INTERACTION WITH LEF1; APC; AXIN1; AXIN2 AND TCF7L2</scope>
    <scope>PHOSPHORYLATION BY GSK3B</scope>
    <scope>MUTAGENESIS OF PHE-253; HIS-260; LYS-292; LYS-345; TRP-383; ARG-386; ASN-426; LYS-435; ARG-469; HIS-470 AND LYS-508</scope>
</reference>
<reference key="16">
    <citation type="journal article" date="2001" name="Br. J. Dermatol.">
        <title>Beta-catenin expression in pilomatrixomas. Relationship with beta-catenin gene mutations and comparison with beta-catenin expression in normal hair follicles.</title>
        <authorList>
            <person name="Moreno-Bueno G."/>
            <person name="Gamallo C."/>
            <person name="Perez-Gallego L."/>
            <person name="Contreras F."/>
            <person name="Palacios J."/>
        </authorList>
    </citation>
    <scope>TISSUE SPECIFICITY</scope>
    <scope>VARIANT PTR TYR-32</scope>
</reference>
<reference key="17">
    <citation type="journal article" date="2001" name="Genes Dev.">
        <title>Chromatin-specific regulation of LEF-1-beta-catenin transcription activation and inhibition in vitro.</title>
        <authorList>
            <person name="Tutter A.V."/>
            <person name="Fryer C.J."/>
            <person name="Jones K.A."/>
        </authorList>
    </citation>
    <scope>INTERACTION WITH LEF1</scope>
    <scope>INHIBITION BY CTNNBIP1 BINDING</scope>
</reference>
<reference key="18">
    <citation type="journal article" date="2001" name="J. Biol. Chem.">
        <title>Regulation of beta-catenin structure and activity by tyrosine phosphorylation.</title>
        <authorList>
            <person name="Piedra J."/>
            <person name="Martinez D."/>
            <person name="Castano J."/>
            <person name="Miravet S."/>
            <person name="Dunach M."/>
            <person name="de Herreros A.G."/>
        </authorList>
    </citation>
    <scope>RETRACTED PAPER</scope>
</reference>
<reference key="19">
    <citation type="journal article" date="2004" name="Biochem. Biophys. Res. Commun.">
        <title>CD43 has a functional NLS, interacts with beta-catenin, and affects gene expression.</title>
        <authorList>
            <person name="Andersson C.X."/>
            <person name="Fernandez-Rodriguez J."/>
            <person name="Laos S."/>
            <person name="Sikut R."/>
            <person name="Sikut A."/>
            <person name="Baeckstroem D."/>
            <person name="Hansson G.C."/>
        </authorList>
    </citation>
    <scope>INTERACTION WITH SPN/CD43 CYTOPLASMIC TAIL</scope>
</reference>
<reference key="20">
    <citation type="journal article" date="2011" name="Mol. Biol. Cell">
        <title>The EDD E3 ubiquitin ligase ubiquitinates and up-regulates beta-catenin.</title>
        <authorList>
            <person name="Hay-Koren A."/>
            <person name="Caspi M."/>
            <person name="Zilberberg A."/>
            <person name="Rosin-Arbesfeld R."/>
        </authorList>
    </citation>
    <scope>UBIQUITINATION</scope>
    <scope>SUBCELLULAR LOCATION</scope>
</reference>
<reference key="21">
    <citation type="journal article" date="2016" name="J. Biol. Chem.">
        <authorList>
            <person name="Piedra J."/>
            <person name="Martinez D."/>
            <person name="Castano J."/>
            <person name="Miravet S."/>
            <person name="Dunach M."/>
            <person name="de Herreros A.G."/>
        </authorList>
    </citation>
    <scope>RETRACTION NOTICE OF PUBMED:11279024</scope>
</reference>
<reference key="22">
    <citation type="journal article" date="2001" name="J. Cell Sci.">
        <title>AlphaT-catenin: a novel tissue-specific beta-catenin-binding protein mediating strong cell-cell adhesion.</title>
        <authorList>
            <person name="Janssens B."/>
            <person name="Goossens S."/>
            <person name="Staes K."/>
            <person name="Gilbert B."/>
            <person name="van Hengel J."/>
            <person name="Colpaert C."/>
            <person name="Bruyneel E."/>
            <person name="Mareel M."/>
            <person name="van Roy F."/>
        </authorList>
    </citation>
    <scope>INTERACTION WITH CTNNA3</scope>
</reference>
<reference key="23">
    <citation type="journal article" date="2001" name="Mol. Cell">
        <title>Siah-1, SIP, and Ebi collaborate in a novel pathway for beta-catenin degradation linked to p53 responses.</title>
        <authorList>
            <person name="Matsuzawa S."/>
            <person name="Reed J.C."/>
        </authorList>
    </citation>
    <scope>INTERACTION WITH SIAH1</scope>
    <scope>UBIQUITINATION</scope>
</reference>
<reference key="24">
    <citation type="journal article" date="2001" name="Mol. Cell">
        <title>Siah-1 mediates a novel beta-catenin degradation pathway linking p53 to the adenomatous polyposis coli protein.</title>
        <authorList>
            <person name="Liu J."/>
            <person name="Stevens J."/>
            <person name="Rote C.A."/>
            <person name="Yost H.J."/>
            <person name="Hu Y."/>
            <person name="Neufeld K.L."/>
            <person name="White R.L."/>
            <person name="Matsunami N."/>
        </authorList>
    </citation>
    <scope>INTERACTION WITH SIAH1</scope>
    <scope>UBIQUITINATION</scope>
</reference>
<reference key="25">
    <citation type="journal article" date="2001" name="Oncogene">
        <title>Genetic alteration of the beta-catenin gene (CTNNB1) in human lung cancer and malignant mesothelioma and identification of a new 3p21.3 homozygous deletion.</title>
        <authorList>
            <person name="Shigemitsu K."/>
            <person name="Sekido Y."/>
            <person name="Usami N."/>
            <person name="Mori S."/>
            <person name="Sato M."/>
            <person name="Horio Y."/>
            <person name="Hasegawa Y."/>
            <person name="Bader S.A."/>
            <person name="Gazdar A.F."/>
            <person name="Minna J.D."/>
            <person name="Hida T."/>
            <person name="Yoshioka H."/>
            <person name="Imaizumi M."/>
            <person name="Ueda Y."/>
            <person name="Takahashi M."/>
            <person name="Shimokata K."/>
        </authorList>
    </citation>
    <scope>INVOLVEMENT IN MESOM</scope>
</reference>
<reference key="26">
    <citation type="journal article" date="2002" name="Biochemistry">
        <title>Physical and functional interaction between receptor-like protein tyrosine phosphatase PCP-2 and beta-catenin.</title>
        <authorList>
            <person name="Yan H.-X."/>
            <person name="He Y.-Q."/>
            <person name="Dong H."/>
            <person name="Zhang P."/>
            <person name="Zeng J.-Z."/>
            <person name="Cao H.-F."/>
            <person name="Wu M.-C."/>
            <person name="Wang H.-Y."/>
        </authorList>
    </citation>
    <scope>INTERACTION WITH PTPRU</scope>
</reference>
<reference key="27">
    <citation type="journal article" date="2002" name="Biochem. Biophys. Res. Commun.">
        <title>Characterisation of the phosphorylation of beta-catenin at the GSK-3 priming site Ser45.</title>
        <authorList>
            <person name="Hagen T."/>
            <person name="Vidal-Puig A."/>
        </authorList>
    </citation>
    <scope>PHOSPHORYLATION AT SER-45</scope>
    <scope>CHARACTERIZATION OF VARIANT HEPATOCELLULAR CARCINOMA ALA-41</scope>
    <scope>CHARACTERIZATION OF VARIANT DESMOID TUMOR ALA-41</scope>
    <scope>CHARACTERIZATION OF VARIANT HEPATOBLASTOMA ALA-41</scope>
</reference>
<reference key="28">
    <citation type="journal article" date="2002" name="Cell">
        <title>Adenovirus fiber disrupts CAR-mediated intercellular adhesion allowing virus escape.</title>
        <authorList>
            <person name="Walters R.W."/>
            <person name="Freimuth P."/>
            <person name="Moninger T.O."/>
            <person name="Ganske I."/>
            <person name="Zabner J."/>
            <person name="Welsh M.J."/>
        </authorList>
    </citation>
    <scope>INTERACTION WITH CXADR</scope>
</reference>
<reference key="29">
    <citation type="journal article" date="2002" name="Exp. Cell Res.">
        <title>Identification of two novel regulated serines in the N-terminus of beta-catenin.</title>
        <authorList>
            <person name="van Noort M."/>
            <person name="van de Wetering M."/>
            <person name="Clevers H."/>
        </authorList>
    </citation>
    <scope>PHOSPHORYLATION AT SER-23 AND SER-29 BY GSK3B</scope>
    <scope>PHOSPHORYLATION AT THR-41</scope>
    <scope>MUTAGENESIS OF SER-29</scope>
    <scope>CHARACTERIZATION OF VARIANTS HEPATOCELLULAR CARCINOMA ARG-23; ALA-37 AND ALA-41</scope>
    <scope>CHARACTERIZATION OF VARIANT PTR TYR-33</scope>
    <scope>CHARACTERIZATION OF VARIANT MDB ALA-37</scope>
    <scope>CHARACTERIZATION OF VARIANT DESMOID TUMOR ALA-41</scope>
    <scope>CHARACTERIZATION OF VARIANT HEPATOBLASTOMA ALA-41</scope>
</reference>
<reference key="30">
    <citation type="journal article" date="2002" name="J. Biol. Chem.">
        <title>Protein binding and functional characterization of plakophilin 2. Evidence for its diverse roles in desmosomes and beta -catenin signaling.</title>
        <authorList>
            <person name="Chen X."/>
            <person name="Bonne S."/>
            <person name="Hatzfeld M."/>
            <person name="van Roy F."/>
            <person name="Green K.J."/>
        </authorList>
    </citation>
    <scope>INTERACTION WITH CDH1 AND PKP2</scope>
    <scope>SUBCELLULAR LOCATION</scope>
</reference>
<reference key="31">
    <citation type="journal article" date="2002" name="J. Biol. Chem.">
        <title>Wnt signaling controls the phosphorylation status of beta-catenin.</title>
        <authorList>
            <person name="van Noort M."/>
            <person name="Meeldijk J."/>
            <person name="van der Zee R."/>
            <person name="Destree O."/>
            <person name="Clevers H."/>
        </authorList>
    </citation>
    <scope>WNT SIGNALING MODULATES PHOSPHORYLATION</scope>
</reference>
<reference key="32">
    <citation type="journal article" date="2002" name="J. Cell Sci.">
        <title>Regulation of S33/S37 phosphorylated beta-catenin in normal and transformed cells.</title>
        <authorList>
            <person name="Sadot E."/>
            <person name="Conacci-Sorrell M."/>
            <person name="Zhurinsky J."/>
            <person name="Shnizer D."/>
            <person name="Lando Z."/>
            <person name="Zharhary D."/>
            <person name="Kam Z."/>
            <person name="Ben-Ze'ev A."/>
            <person name="Geiger B."/>
        </authorList>
    </citation>
    <scope>PHOSPHORYLATION</scope>
    <scope>INTERACTION OF PHOSPHORYLATED CTNNB1 WITH BTRC</scope>
</reference>
<reference key="33">
    <citation type="journal article" date="2002" name="Oncogene">
        <title>The transmembrane receptor protein tyrosine phosphatase DEP1 interacts with p120(ctn).</title>
        <authorList>
            <person name="Holsinger L.J."/>
            <person name="Ward K."/>
            <person name="Duffield B."/>
            <person name="Zachwieja J."/>
            <person name="Jallal B."/>
        </authorList>
    </citation>
    <scope>INTERACTION WITH PTPRJ</scope>
</reference>
<reference key="34">
    <citation type="journal article" date="2002" name="Oncogene">
        <title>The emergence of protocadherin-PC expression during the acquisition of apoptosis-resistance by prostate cancer cells.</title>
        <authorList>
            <person name="Chen M.-W."/>
            <person name="Vacherot F."/>
            <person name="De La Taille A."/>
            <person name="Gil-Diez-De-Medina S."/>
            <person name="Shen R."/>
            <person name="Friedman R.A."/>
            <person name="Burchardt M."/>
            <person name="Chopin D.K."/>
            <person name="Buttyan R."/>
        </authorList>
    </citation>
    <scope>INTERACTION WITH PCDH11Y</scope>
</reference>
<reference key="35">
    <citation type="journal article" date="2003" name="Hepatology">
        <title>EBP50, a beta-catenin-associating protein, enhances Wnt signaling and is over-expressed in hepatocellular carcinoma.</title>
        <authorList>
            <person name="Shibata T."/>
            <person name="Chuma M."/>
            <person name="Kokubu A."/>
            <person name="Sakamoto M."/>
            <person name="Hirohashi S."/>
        </authorList>
    </citation>
    <scope>INTERACTION WITH NHERF1</scope>
</reference>
<reference key="36">
    <citation type="journal article" date="2000" name="Biochem. Biophys. Res. Commun.">
        <title>Regulation of beta-catenin signaling in the Wnt pathway.</title>
        <authorList>
            <person name="Kikuchi A."/>
        </authorList>
    </citation>
    <scope>REVIEW</scope>
</reference>
<reference key="37">
    <citation type="journal article" date="2003" name="Mol. Cell. Biol.">
        <title>p120 Catenin-associated Fer and Fyn tyrosine kinases regulate beta-catenin Tyr-142 phosphorylation and beta-catenin-alpha-catenin Interaction.</title>
        <authorList>
            <person name="Piedra J."/>
            <person name="Miravet S."/>
            <person name="Castano J."/>
            <person name="Palmer H.G."/>
            <person name="Heisterkamp N."/>
            <person name="Garcia de Herreros A."/>
            <person name="Dunach M."/>
        </authorList>
    </citation>
    <scope>PHOSPHORYLATION AT TYR-142 BY FYN</scope>
</reference>
<reference key="38">
    <citation type="journal article" date="2003" name="Nature">
        <title>Chibby, a nuclear beta-catenin-associated antagonist of the Wnt/Wingless pathway.</title>
        <authorList>
            <person name="Takemaru K."/>
            <person name="Yamaguchi S."/>
            <person name="Lee Y.S."/>
            <person name="Zhang Y."/>
            <person name="Carthew R.W."/>
            <person name="Moon R.T."/>
        </authorList>
    </citation>
    <scope>INTERACTION WITH CBY1</scope>
</reference>
<reference key="39">
    <citation type="journal article" date="2004" name="Mol. Biol. Cell">
        <title>Novel membrane protein shrew-1 targets to cadherin-mediated junctions in polarized epithelial cells.</title>
        <authorList>
            <person name="Bharti S."/>
            <person name="Handrow-Metzmacher H."/>
            <person name="Zickenheiner S."/>
            <person name="Zeitvogel A."/>
            <person name="Baumann R."/>
            <person name="Starzinski-Powitz A."/>
        </authorList>
    </citation>
    <scope>INTERACTION WITH AJAP1</scope>
    <source>
        <tissue>Brain</tissue>
    </source>
</reference>
<reference key="40">
    <citation type="journal article" date="2006" name="Cancer Res.">
        <title>TC1 (C8orf4) enhances the Wnt/beta-catenin pathway by relieving antagonistic activity of Chibby.</title>
        <authorList>
            <person name="Jung Y."/>
            <person name="Bang S."/>
            <person name="Choi K."/>
            <person name="Kim E."/>
            <person name="Kim Y."/>
            <person name="Kim J."/>
            <person name="Park J."/>
            <person name="Koo H."/>
            <person name="Moon R.T."/>
            <person name="Song K."/>
            <person name="Lee I."/>
        </authorList>
    </citation>
    <scope>INTERACTION WITH CBY1</scope>
    <scope>SUBCELLULAR LOCATION</scope>
</reference>
<reference key="41">
    <citation type="journal article" date="2006" name="Cancer Res.">
        <title>E-cadherin regulates human Nanos1, which interacts with p120ctn and induces tumor cell migration and invasion.</title>
        <authorList>
            <person name="Strumane K."/>
            <person name="Bonnomet A."/>
            <person name="Stove C."/>
            <person name="Vandenbroucke R."/>
            <person name="Nawrocki-Raby B."/>
            <person name="Bruyneel E."/>
            <person name="Mareel M."/>
            <person name="Birembaut P."/>
            <person name="Berx G."/>
            <person name="van Roy F."/>
        </authorList>
    </citation>
    <scope>SUBCELLULAR LOCATION</scope>
    <scope>INTERACTION WITH NANOS1</scope>
</reference>
<reference key="42">
    <citation type="journal article" date="2006" name="Cell">
        <title>Global, in vivo, and site-specific phosphorylation dynamics in signaling networks.</title>
        <authorList>
            <person name="Olsen J.V."/>
            <person name="Blagoev B."/>
            <person name="Gnad F."/>
            <person name="Macek B."/>
            <person name="Kumar C."/>
            <person name="Mortensen P."/>
            <person name="Mann M."/>
        </authorList>
    </citation>
    <scope>PHOSPHORYLATION [LARGE SCALE ANALYSIS] AT SER-675</scope>
    <scope>IDENTIFICATION BY MASS SPECTROMETRY [LARGE SCALE ANALYSIS]</scope>
    <source>
        <tissue>Cervix carcinoma</tissue>
    </source>
</reference>
<reference key="43">
    <citation type="journal article" date="2006" name="EMBO J.">
        <title>The inner nuclear membrane protein emerin regulates beta-catenin activity by restricting its accumulation in the nucleus.</title>
        <authorList>
            <person name="Markiewicz E."/>
            <person name="Tilgner K."/>
            <person name="Barker N."/>
            <person name="van de Wetering M."/>
            <person name="Clevers H."/>
            <person name="Dorobek M."/>
            <person name="Hausmanowa-Petrusewicz I."/>
            <person name="Ramaekers F.C.S."/>
            <person name="Broers J.L.V."/>
            <person name="Blankesteijn W.M."/>
            <person name="Salpingidou G."/>
            <person name="Wilson R.G."/>
            <person name="Ellis J.A."/>
            <person name="Hutchison C.J."/>
        </authorList>
    </citation>
    <scope>SUBCELLULAR LOCATION</scope>
    <scope>INTERACTION WITH EMD</scope>
</reference>
<reference key="44">
    <citation type="journal article" date="2007" name="Biochim. Biophys. Acta">
        <title>MUC1 inhibits cell proliferation by a beta-catenin-dependent mechanism.</title>
        <authorList>
            <person name="Lillehoj E.P."/>
            <person name="Lu W."/>
            <person name="Kiser T."/>
            <person name="Goldblum S.E."/>
            <person name="Kim K.C."/>
        </authorList>
    </citation>
    <scope>INTERACTION WITH MUC1</scope>
    <scope>SUBCELLULAR LOCATION</scope>
    <scope>FUNCTION</scope>
</reference>
<reference key="45">
    <citation type="journal article" date="2007" name="FEBS Lett.">
        <title>The Kruppel-like zinc finger protein Glis2 functions as a negative modulator of the Wnt/beta-catenin signaling pathway.</title>
        <authorList>
            <person name="Kim Y.-S."/>
            <person name="Kang H.S."/>
            <person name="Jetten A.M."/>
        </authorList>
    </citation>
    <scope>INTERACTION WITH GLIS2</scope>
    <scope>TISSUE SPECIFICITY</scope>
    <scope>SUBCELLULAR LOCATION</scope>
</reference>
<reference key="46">
    <citation type="journal article" date="2007" name="J. Cell. Biochem.">
        <title>cdk5 modulates beta- and delta-catenin/Pin1 interactions in neuronal cells.</title>
        <authorList>
            <person name="Munoz J.P."/>
            <person name="Huichalaf C.H."/>
            <person name="Orellana D."/>
            <person name="Maccioni R.B."/>
        </authorList>
    </citation>
    <scope>PHOSPHORYLATION AT SER-191 AND SER-246</scope>
    <scope>INTERACTION WITH CDK5</scope>
    <scope>SUBCELLULAR LOCATION</scope>
    <scope>TISSUE SPECIFICITY</scope>
</reference>
<reference key="47">
    <citation type="journal article" date="2007" name="Proc. Natl. Acad. Sci. U.S.A.">
        <title>The tumor suppressor Fhit acts as a repressor of beta-catenin transcriptional activity.</title>
        <authorList>
            <person name="Weiske J."/>
            <person name="Albring K.F."/>
            <person name="Huber O."/>
        </authorList>
    </citation>
    <scope>INTERACTION WITH FHIT</scope>
    <scope>IDENTIFICATION IN A COMPLEX WITH LEF1</scope>
    <scope>FUNCTION</scope>
</reference>
<reference key="48">
    <citation type="journal article" date="2008" name="Genes Dev.">
        <title>beta-Catenin is a Nek2 substrate involved in centrosome separation.</title>
        <authorList>
            <person name="Bahmanyar S."/>
            <person name="Kaplan D.D."/>
            <person name="Deluca J.G."/>
            <person name="Giddings T.H. Jr."/>
            <person name="O'Toole E.T."/>
            <person name="Winey M."/>
            <person name="Salmon E.D."/>
            <person name="Casey P.J."/>
            <person name="Nelson W.J."/>
            <person name="Barth A.I."/>
        </authorList>
    </citation>
    <scope>FUNCTION</scope>
    <scope>SUBCELLULAR LOCATION</scope>
    <scope>PHOSPHORYLATION</scope>
    <scope>INTERACTION WITH NEK2</scope>
</reference>
<reference key="49">
    <citation type="journal article" date="2008" name="J. Proteome Res.">
        <title>Combining protein-based IMAC, peptide-based IMAC, and MudPIT for efficient phosphoproteomic analysis.</title>
        <authorList>
            <person name="Cantin G.T."/>
            <person name="Yi W."/>
            <person name="Lu B."/>
            <person name="Park S.K."/>
            <person name="Xu T."/>
            <person name="Lee J.-D."/>
            <person name="Yates J.R. III"/>
        </authorList>
    </citation>
    <scope>PHOSPHORYLATION [LARGE SCALE ANALYSIS] AT THR-556 AND SER-675</scope>
    <scope>IDENTIFICATION BY MASS SPECTROMETRY [LARGE SCALE ANALYSIS]</scope>
    <source>
        <tissue>Cervix carcinoma</tissue>
    </source>
</reference>
<reference key="50">
    <citation type="journal article" date="2008" name="Mol. Cancer Res.">
        <title>Sox7 Is an independent checkpoint for beta-catenin function in prostate and colon epithelial cells.</title>
        <authorList>
            <person name="Guo L."/>
            <person name="Zhong D."/>
            <person name="Lau S."/>
            <person name="Liu X."/>
            <person name="Dong X.Y."/>
            <person name="Sun X."/>
            <person name="Yang V.W."/>
            <person name="Vertino P.M."/>
            <person name="Moreno C.S."/>
            <person name="Varma V."/>
            <person name="Dong J.T."/>
            <person name="Zhou W."/>
        </authorList>
    </citation>
    <scope>INTERACTION WITH SOX7</scope>
</reference>
<reference key="51">
    <citation type="journal article" date="2008" name="Mol. Cell. Biol.">
        <title>CHD8 is an ATP-dependent chromatin remodeling factor that regulates beta-catenin target genes.</title>
        <authorList>
            <person name="Thompson B.A."/>
            <person name="Tremblay V."/>
            <person name="Lin G."/>
            <person name="Bochar D.A."/>
        </authorList>
    </citation>
    <scope>INTERACTION WITH CHD8</scope>
</reference>
<reference key="52">
    <citation type="journal article" date="2008" name="Proc. Natl. Acad. Sci. U.S.A.">
        <title>A quantitative atlas of mitotic phosphorylation.</title>
        <authorList>
            <person name="Dephoure N."/>
            <person name="Zhou C."/>
            <person name="Villen J."/>
            <person name="Beausoleil S.A."/>
            <person name="Bakalarski C.E."/>
            <person name="Elledge S.J."/>
            <person name="Gygi S.P."/>
        </authorList>
    </citation>
    <scope>IDENTIFICATION BY MASS SPECTROMETRY [LARGE SCALE ANALYSIS]</scope>
    <source>
        <tissue>Cervix carcinoma</tissue>
    </source>
</reference>
<reference key="53">
    <citation type="journal article" date="2009" name="BMC Mol. Biol.">
        <title>Chibby forms a homodimer through a heptad repeat of leucine residues in its C-terminal coiled-coil motif.</title>
        <authorList>
            <person name="Mofunanya A."/>
            <person name="Li F.Q."/>
            <person name="Hsieh J.C."/>
            <person name="Takemaru K."/>
        </authorList>
    </citation>
    <scope>INTERACTION WITH CBY1</scope>
</reference>
<reference key="54">
    <citation type="journal article" date="2009" name="EMBO J.">
        <title>The kinase TNIK is an essential activator of Wnt target genes.</title>
        <authorList>
            <person name="Mahmoudi T."/>
            <person name="Li V.S.W."/>
            <person name="Ng S.S."/>
            <person name="Taouatas N."/>
            <person name="Vries R.G.J."/>
            <person name="Mohammed S."/>
            <person name="Heck A.J."/>
            <person name="Clevers H."/>
        </authorList>
    </citation>
    <scope>INTERACTION WITH TCF7L2 AND TNIK</scope>
</reference>
<reference key="55">
    <citation type="journal article" date="2009" name="J. Biol. Chem.">
        <title>Down-regulation of death-associated protein kinase-2 is required for beta-catenin-induced anoikis resistance of malignant epithelial cells.</title>
        <authorList>
            <person name="Li H."/>
            <person name="Ray G."/>
            <person name="Yoo B.H."/>
            <person name="Erdogan M."/>
            <person name="Rosen K.V."/>
        </authorList>
    </citation>
    <scope>FUNCTION</scope>
</reference>
<reference key="56">
    <citation type="journal article" date="2009" name="J. Biol. Chem.">
        <title>Endosomal adaptor proteins APPL1 and APPL2 are novel activators of beta-catenin/TCF-mediated transcription.</title>
        <authorList>
            <person name="Rashid S."/>
            <person name="Pilecka I."/>
            <person name="Torun A."/>
            <person name="Olchowik M."/>
            <person name="Bielinska B."/>
            <person name="Miaczynska M."/>
        </authorList>
    </citation>
    <scope>INTERACTION WITH RUVBL2; APPL2; APPL1; HDAC1 AND HDAC2</scope>
</reference>
<reference key="57">
    <citation type="journal article" date="2009" name="Sci. Signal.">
        <title>Quantitative phosphoproteomic analysis of T cell receptor signaling reveals system-wide modulation of protein-protein interactions.</title>
        <authorList>
            <person name="Mayya V."/>
            <person name="Lundgren D.H."/>
            <person name="Hwang S.-I."/>
            <person name="Rezaul K."/>
            <person name="Wu L."/>
            <person name="Eng J.K."/>
            <person name="Rodionov V."/>
            <person name="Han D.K."/>
        </authorList>
    </citation>
    <scope>IDENTIFICATION BY MASS SPECTROMETRY [LARGE SCALE ANALYSIS]</scope>
    <source>
        <tissue>Leukemic T-cell</tissue>
    </source>
</reference>
<reference key="58">
    <citation type="journal article" date="2010" name="Biochem. Biophys. Res. Commun.">
        <title>Homeodomain-interacting protein kinase 2 (HIPK2) targets beta-catenin for phosphorylation and proteasomal degradation.</title>
        <authorList>
            <person name="Kim E.-A."/>
            <person name="Kim J.E."/>
            <person name="Sung K.S."/>
            <person name="Choi D.W."/>
            <person name="Lee B.J."/>
            <person name="Choi C.Y."/>
        </authorList>
    </citation>
    <scope>PHOSPHORYLATION AT SER-33 AND SER-37 BY HIPK2</scope>
    <scope>UBIQUITINATION</scope>
</reference>
<reference key="59">
    <citation type="journal article" date="2010" name="J. Biol. Chem.">
        <title>The phospholipid-binding protein SESTD1 is a novel regulator of the transient receptor potential channels TRPC4 and TRPC5.</title>
        <authorList>
            <person name="Miehe S."/>
            <person name="Bieberstein A."/>
            <person name="Arnould I."/>
            <person name="Ihdene O."/>
            <person name="Rutten H."/>
            <person name="Strubing C."/>
        </authorList>
    </citation>
    <scope>INTERACTION WITH SESTD1</scope>
</reference>
<reference key="60">
    <citation type="journal article" date="2010" name="J. Biol. Chem.">
        <title>Cell-cell contact formation governs Ca2+ signaling by TRPC4 in the vascular endothelium: evidence for a regulatory TRPC4-beta-catenin interaction.</title>
        <authorList>
            <person name="Graziani A."/>
            <person name="Poteser M."/>
            <person name="Heupel W.M."/>
            <person name="Schleifer H."/>
            <person name="Krenn M."/>
            <person name="Drenckhahn D."/>
            <person name="Romanin C."/>
            <person name="Baumgartner W."/>
            <person name="Groschner K."/>
        </authorList>
    </citation>
    <scope>INTERACTION WITH TRPC4</scope>
</reference>
<reference key="61">
    <citation type="journal article" date="2010" name="Mol. Biol. Rep.">
        <title>Characterization of a novel human CDK5 splicing variant that inhibits Wnt/beta-catenin signaling.</title>
        <authorList>
            <person name="Li Q."/>
            <person name="Liu X."/>
            <person name="Zhang M."/>
            <person name="Ye G."/>
            <person name="Qiao Q."/>
            <person name="Ling Y."/>
            <person name="Wu Y."/>
            <person name="Zhang Y."/>
            <person name="Yu L."/>
        </authorList>
    </citation>
    <scope>INTERACTION WITH CDK5</scope>
</reference>
<reference key="62">
    <citation type="journal article" date="2010" name="J. Cell Sci.">
        <title>Identification of beta-catenin as a target of the intracellular tyrosine kinase PTK6.</title>
        <authorList>
            <person name="Palka-Hamblin H.L."/>
            <person name="Gierut J.J."/>
            <person name="Bie W."/>
            <person name="Brauer P.M."/>
            <person name="Zheng Y."/>
            <person name="Asara J.M."/>
            <person name="Tyner A.L."/>
        </authorList>
    </citation>
    <scope>PHOSPHORYLATION AT TYR-64; TYR-142; TYR-331 AND TYR-333</scope>
    <scope>INTERACTION WITH PTK6</scope>
    <scope>MUTAGENESIS OF TYR-64</scope>
</reference>
<reference key="63">
    <citation type="journal article" date="2010" name="Sci. Signal.">
        <title>Quantitative phosphoproteomics reveals widespread full phosphorylation site occupancy during mitosis.</title>
        <authorList>
            <person name="Olsen J.V."/>
            <person name="Vermeulen M."/>
            <person name="Santamaria A."/>
            <person name="Kumar C."/>
            <person name="Miller M.L."/>
            <person name="Jensen L.J."/>
            <person name="Gnad F."/>
            <person name="Cox J."/>
            <person name="Jensen T.S."/>
            <person name="Nigg E.A."/>
            <person name="Brunak S."/>
            <person name="Mann M."/>
        </authorList>
    </citation>
    <scope>PHOSPHORYLATION [LARGE SCALE ANALYSIS] AT SER-675</scope>
    <scope>IDENTIFICATION BY MASS SPECTROMETRY [LARGE SCALE ANALYSIS]</scope>
    <source>
        <tissue>Cervix carcinoma</tissue>
    </source>
</reference>
<reference key="64">
    <citation type="journal article" date="2011" name="BMC Syst. Biol.">
        <title>Initial characterization of the human central proteome.</title>
        <authorList>
            <person name="Burkard T.R."/>
            <person name="Planyavsky M."/>
            <person name="Kaupe I."/>
            <person name="Breitwieser F.P."/>
            <person name="Buerckstuemmer T."/>
            <person name="Bennett K.L."/>
            <person name="Superti-Furga G."/>
            <person name="Colinge J."/>
        </authorList>
    </citation>
    <scope>IDENTIFICATION BY MASS SPECTROMETRY [LARGE SCALE ANALYSIS]</scope>
</reference>
<reference key="65">
    <citation type="journal article" date="2011" name="Cell. Signal.">
        <title>Compartmentalized CDK2 is connected with SHP-1 and beta-catenin and regulates insulin internalization.</title>
        <authorList>
            <person name="Fiset A."/>
            <person name="Xu E."/>
            <person name="Bergeron S."/>
            <person name="Marette A."/>
            <person name="Pelletier G."/>
            <person name="Siminovitch K.A."/>
            <person name="Olivier M."/>
            <person name="Beauchemin N."/>
            <person name="Faure R.L."/>
        </authorList>
    </citation>
    <scope>FUNCTION IN INSULIN INTERNALIZATION</scope>
    <scope>SUBCELLULAR LOCATION</scope>
    <scope>INTERACTION WITH CDK2</scope>
    <scope>PHOSPHORYLATION BY CDK2</scope>
</reference>
<reference key="66">
    <citation type="journal article" date="2011" name="EMBO Rep.">
        <title>Protein tyrosine kinase 7 has a conserved role in Wnt/beta-catenin canonical signalling.</title>
        <authorList>
            <person name="Puppo F."/>
            <person name="Thome V."/>
            <person name="Lhoumeau A.-C."/>
            <person name="Cibois M."/>
            <person name="Gangar A."/>
            <person name="Lembo F."/>
            <person name="Belotti E."/>
            <person name="Marchetto S."/>
            <person name="Lecine P."/>
            <person name="Prebet T."/>
            <person name="Sebbagh M."/>
            <person name="Shin W.-S."/>
            <person name="Lee S.-T."/>
            <person name="Kodjabachian L."/>
            <person name="Borg J.-P."/>
        </authorList>
    </citation>
    <scope>INTERACTION WITH PKT7</scope>
</reference>
<reference key="67">
    <citation type="journal article" date="2011" name="J. Biol. Chem.">
        <title>Crystal structure of the human N-Myc downstream-regulated gene 2 protein provides insight into its role as a tumor suppressor.</title>
        <authorList>
            <person name="Hwang J."/>
            <person name="Kim Y."/>
            <person name="Kang H.B."/>
            <person name="Jaroszewski L."/>
            <person name="Deacon A.M."/>
            <person name="Lee H."/>
            <person name="Choi W.C."/>
            <person name="Kim K.J."/>
            <person name="Kim C.H."/>
            <person name="Kang B.S."/>
            <person name="Lee J.O."/>
            <person name="Oh T.K."/>
            <person name="Kim J.W."/>
            <person name="Wilson I.A."/>
            <person name="Kim M.H."/>
        </authorList>
    </citation>
    <scope>INTERACTION WITH NDRG2</scope>
</reference>
<reference key="68">
    <citation type="journal article" date="2011" name="Nature">
        <title>Nuclear PKM2 regulates beta-catenin transactivation upon EGFR activation.</title>
        <authorList>
            <person name="Yang W."/>
            <person name="Xia Y."/>
            <person name="Ji H."/>
            <person name="Zheng Y."/>
            <person name="Liang J."/>
            <person name="Huang W."/>
            <person name="Gao X."/>
            <person name="Aldape K."/>
            <person name="Lu Z."/>
        </authorList>
    </citation>
    <scope>INTERACTION WITH PKM ISOFORM M2</scope>
    <scope>PHOSPHORYLATION AT TYR-333</scope>
    <scope>MUTAGENESIS OF TYR-333</scope>
</reference>
<reference key="69">
    <citation type="journal article" date="2011" name="Nat. Med.">
        <title>Defective Wnt-dependent cerebellar midline fusion in a mouse model of Joubert syndrome.</title>
        <authorList>
            <person name="Lancaster M.A."/>
            <person name="Gopal D.J."/>
            <person name="Kim J."/>
            <person name="Saleem S.N."/>
            <person name="Silhavy J.L."/>
            <person name="Louie C.M."/>
            <person name="Thacker B.E."/>
            <person name="Williams Y."/>
            <person name="Zaki M.S."/>
            <person name="Gleeson J.G."/>
        </authorList>
    </citation>
    <scope>INTERACTION WITH AHI1</scope>
</reference>
<reference key="70">
    <citation type="journal article" date="2011" name="Sci. Signal.">
        <title>System-wide temporal characterization of the proteome and phosphoproteome of human embryonic stem cell differentiation.</title>
        <authorList>
            <person name="Rigbolt K.T."/>
            <person name="Prokhorova T.A."/>
            <person name="Akimov V."/>
            <person name="Henningsen J."/>
            <person name="Johansen P.T."/>
            <person name="Kratchmarova I."/>
            <person name="Kassem M."/>
            <person name="Mann M."/>
            <person name="Olsen J.V."/>
            <person name="Blagoev B."/>
        </authorList>
    </citation>
    <scope>PHOSPHORYLATION [LARGE SCALE ANALYSIS] AT SER-191 AND SER-552</scope>
    <scope>IDENTIFICATION BY MASS SPECTROMETRY [LARGE SCALE ANALYSIS]</scope>
</reference>
<reference key="71">
    <citation type="journal article" date="2012" name="Cell Cycle">
        <title>The tumor suppressor HINT1 regulates MITF and beta-catenin transcriptional activity in melanoma cells.</title>
        <authorList>
            <person name="Genovese G."/>
            <person name="Ghosh P."/>
            <person name="Li H."/>
            <person name="Rettino A."/>
            <person name="Sioletic S."/>
            <person name="Cittadini A."/>
            <person name="Sgambato A."/>
        </authorList>
    </citation>
    <scope>IDENTIFICATION IN A COMPLEX WITH HINT1 AND MITF</scope>
    <scope>FUNCTION</scope>
</reference>
<reference key="72">
    <citation type="journal article" date="2012" name="EMBO Rep.">
        <title>Kindlin 2 forms a transcriptional complex with beta-catenin and TCF4 to enhance Wnt signalling.</title>
        <authorList>
            <person name="Yu Y."/>
            <person name="Wu J."/>
            <person name="Wang Y."/>
            <person name="Zhao T."/>
            <person name="Ma B."/>
            <person name="Liu Y."/>
            <person name="Fang W."/>
            <person name="Zhu W.G."/>
            <person name="Zhang H."/>
        </authorList>
    </citation>
    <scope>FUNCTION</scope>
    <scope>INTERACTION WITH FERMT2</scope>
    <scope>IDENTIFICATION IN A COMPLEX WITH FERMT2 AND TCF7L2</scope>
    <scope>SUBCELLULAR LOCATION</scope>
</reference>
<reference key="73">
    <citation type="journal article" date="2012" name="Gastroenterology">
        <title>Beta-catenin inhibits promyelocytic leukemia protein tumor suppressor function in colorectal cancer cells.</title>
        <authorList>
            <person name="Satow R."/>
            <person name="Shitashige M."/>
            <person name="Jigami T."/>
            <person name="Fukami K."/>
            <person name="Honda K."/>
            <person name="Kitabayashi I."/>
            <person name="Yamada T."/>
        </authorList>
    </citation>
    <scope>FUNCTION</scope>
    <scope>INTERACTION WITH PML</scope>
</reference>
<reference key="74">
    <citation type="journal article" date="2012" name="J. Pathol.">
        <title>Non-junctional human desmoglein 3 acts as an upstream regulator of Src in E-cadherin adhesion, a pathway possibly involved in the pathogenesis of pemphigus vulgaris.</title>
        <authorList>
            <person name="Tsang S.M."/>
            <person name="Brown L."/>
            <person name="Lin K."/>
            <person name="Liu L."/>
            <person name="Piper K."/>
            <person name="O'Toole E.A."/>
            <person name="Grose R."/>
            <person name="Hart I.R."/>
            <person name="Garrod D.R."/>
            <person name="Fortune F."/>
            <person name="Wan H."/>
        </authorList>
    </citation>
    <scope>SUBCELLULAR LOCATION</scope>
</reference>
<reference key="75">
    <citation type="journal article" date="2012" name="N. Engl. J. Med.">
        <title>Diagnostic exome sequencing in persons with severe intellectual disability.</title>
        <authorList>
            <person name="de Ligt J."/>
            <person name="Willemsen M.H."/>
            <person name="van Bon B.W."/>
            <person name="Kleefstra T."/>
            <person name="Yntema H.G."/>
            <person name="Kroes T."/>
            <person name="Vulto-van Silfhout A.T."/>
            <person name="Koolen D.A."/>
            <person name="de Vries P."/>
            <person name="Gilissen C."/>
            <person name="del Rosario M."/>
            <person name="Hoischen A."/>
            <person name="Scheffer H."/>
            <person name="de Vries B.B."/>
            <person name="Brunner H.G."/>
            <person name="Veltman J.A."/>
            <person name="Vissers L.E."/>
        </authorList>
    </citation>
    <scope>INVOLVEMENT IN NEDSDV</scope>
</reference>
<reference key="76">
    <citation type="journal article" date="2012" name="Proc. Natl. Acad. Sci. U.S.A.">
        <title>N-terminal acetylome analyses and functional insights of the N-terminal acetyltransferase NatB.</title>
        <authorList>
            <person name="Van Damme P."/>
            <person name="Lasa M."/>
            <person name="Polevoda B."/>
            <person name="Gazquez C."/>
            <person name="Elosegui-Artola A."/>
            <person name="Kim D.S."/>
            <person name="De Juan-Pardo E."/>
            <person name="Demeyer K."/>
            <person name="Hole K."/>
            <person name="Larrea E."/>
            <person name="Timmerman E."/>
            <person name="Prieto J."/>
            <person name="Arnesen T."/>
            <person name="Sherman F."/>
            <person name="Gevaert K."/>
            <person name="Aldabe R."/>
        </authorList>
    </citation>
    <scope>ACETYLATION [LARGE SCALE ANALYSIS] AT ALA-2</scope>
    <scope>CLEAVAGE OF INITIATOR METHIONINE [LARGE SCALE ANALYSIS]</scope>
    <scope>IDENTIFICATION BY MASS SPECTROMETRY [LARGE SCALE ANALYSIS]</scope>
</reference>
<reference key="77">
    <citation type="journal article" date="2014" name="Development">
        <title>Simplet/Fam53b is required for Wnt signal transduction by regulating beta-catenin nuclear localization.</title>
        <authorList>
            <person name="Kizil C."/>
            <person name="Kuechler B."/>
            <person name="Yan J.J."/>
            <person name="Oezhan G."/>
            <person name="Moro E."/>
            <person name="Argenton F."/>
            <person name="Brand M."/>
            <person name="Weidinger G."/>
            <person name="Antos C.L."/>
        </authorList>
    </citation>
    <scope>SUBCELLULAR LOCATION</scope>
    <scope>INTERACTION WITH FAM53B</scope>
</reference>
<reference key="78">
    <citation type="journal article" date="2014" name="Exp. Cell Res.">
        <title>beta-catenin is O-GlcNAc glycosylated at Serine 23: implications for beta-catenin's subcellular localization and transactivator function.</title>
        <authorList>
            <person name="Ha J.R."/>
            <person name="Hao L."/>
            <person name="Venkateswaran G."/>
            <person name="Huang Y.H."/>
            <person name="Garcia E."/>
            <person name="Persad S."/>
        </authorList>
    </citation>
    <scope>GLYCOSYLATION AT SER-23</scope>
    <scope>SUBCELLULAR LOCATION</scope>
</reference>
<reference key="79">
    <citation type="journal article" date="2014" name="J. Proteomics">
        <title>An enzyme assisted RP-RPLC approach for in-depth analysis of human liver phosphoproteome.</title>
        <authorList>
            <person name="Bian Y."/>
            <person name="Song C."/>
            <person name="Cheng K."/>
            <person name="Dong M."/>
            <person name="Wang F."/>
            <person name="Huang J."/>
            <person name="Sun D."/>
            <person name="Wang L."/>
            <person name="Ye M."/>
            <person name="Zou H."/>
        </authorList>
    </citation>
    <scope>PHOSPHORYLATION [LARGE SCALE ANALYSIS] AT SER-191 AND SER-552</scope>
    <scope>IDENTIFICATION BY MASS SPECTROMETRY [LARGE SCALE ANALYSIS]</scope>
    <source>
        <tissue>Liver</tissue>
    </source>
</reference>
<reference key="80">
    <citation type="journal article" date="2014" name="Mol. Cell. Biol.">
        <title>The ubiquitin ligase RNF220 enhances canonical Wnt signaling through USP7-mediated deubiquitination of beta-catenin.</title>
        <authorList>
            <person name="Ma P."/>
            <person name="Yang X."/>
            <person name="Kong Q."/>
            <person name="Li C."/>
            <person name="Yang S."/>
            <person name="Li Y."/>
            <person name="Mao B."/>
        </authorList>
    </citation>
    <scope>INTERACTION WITH RNF220</scope>
</reference>
<reference key="81">
    <citation type="journal article" date="2015" name="Int. J. Cancer">
        <title>MCC inhibits beta-catenin transcriptional activity by sequestering DBC1 in the cytoplasm.</title>
        <authorList>
            <person name="Pangon L."/>
            <person name="Mladenova D."/>
            <person name="Watkins L."/>
            <person name="Van Kralingen C."/>
            <person name="Currey N."/>
            <person name="Al-Sohaily S."/>
            <person name="Lecine P."/>
            <person name="Borg J.P."/>
            <person name="Kohonen-Corish M.R."/>
        </authorList>
    </citation>
    <scope>ACETYLATION AT LYS-49</scope>
    <scope>DEACETYLATION</scope>
</reference>
<reference key="82">
    <citation type="journal article" date="2015" name="J. Cell. Biochem.">
        <title>HN1 negatively influences the beta-catenin/E-cadherin interaction, and contributes to migration in prostate cells.</title>
        <authorList>
            <person name="Varisli L."/>
            <person name="Ozturk B.E."/>
            <person name="Akyuz G.K."/>
            <person name="Korkmaz K.S."/>
        </authorList>
    </citation>
    <scope>INTERACTION WITH JPT1</scope>
    <scope>PHOSPHORYLATION AT SER-33</scope>
</reference>
<reference key="83">
    <citation type="journal article" date="2015" name="Nature">
        <title>Loss of delta-catenin function in severe autism.</title>
        <authorList>
            <person name="Turner T.N."/>
            <person name="Sharma K."/>
            <person name="Oh E.C."/>
            <person name="Liu Y.P."/>
            <person name="Collins R.L."/>
            <person name="Sosa M.X."/>
            <person name="Auer D.R."/>
            <person name="Brand H."/>
            <person name="Sanders S.J."/>
            <person name="Moreno-De-Luca D."/>
            <person name="Pihur V."/>
            <person name="Plona T."/>
            <person name="Pike K."/>
            <person name="Soppet D.R."/>
            <person name="Smith M.W."/>
            <person name="Cheung S.W."/>
            <person name="Martin C.L."/>
            <person name="State M.W."/>
            <person name="Talkowski M.E."/>
            <person name="Cook E."/>
            <person name="Huganir R."/>
            <person name="Katsanis N."/>
            <person name="Chakravarti A."/>
        </authorList>
    </citation>
    <scope>INTERACTION WITH CTNND2</scope>
</reference>
<reference key="84">
    <citation type="journal article" date="2017" name="Cell Res.">
        <title>Twa1/Gid8 is a beta-catenin nuclear retention factor in Wnt signaling and colorectal tumorigenesis.</title>
        <authorList>
            <person name="Lu Y."/>
            <person name="Xie S."/>
            <person name="Zhang W."/>
            <person name="Zhang C."/>
            <person name="Gao C."/>
            <person name="Sun Q."/>
            <person name="Cai Y."/>
            <person name="Xu Z."/>
            <person name="Xiao M."/>
            <person name="Xu Y."/>
            <person name="Huang X."/>
            <person name="Wu X."/>
            <person name="Liu W."/>
            <person name="Wang F."/>
            <person name="Kang Y."/>
            <person name="Zhou T."/>
        </authorList>
    </citation>
    <scope>INTERACTION WITH GID8; AXIN1 AND TCF7L2</scope>
    <scope>SUBCELLULAR LOCATION</scope>
</reference>
<reference key="85">
    <citation type="journal article" date="2017" name="Mucosal Immunol.">
        <title>Cadherin 26 is an alpha integrin-binding epithelial receptor regulated during allergic inflammation.</title>
        <authorList>
            <person name="Caldwell J.M."/>
            <person name="Collins M.H."/>
            <person name="Kemme K.A."/>
            <person name="Sherrill J.D."/>
            <person name="Wen T."/>
            <person name="Rochman M."/>
            <person name="Stucke E.M."/>
            <person name="Amin L."/>
            <person name="Tai H."/>
            <person name="Putnam P.E."/>
            <person name="Jimenez-Dalmaroni M.J."/>
            <person name="Wormald M.R."/>
            <person name="Porollo A."/>
            <person name="Abonia J.P."/>
            <person name="Rothenberg M.E."/>
        </authorList>
    </citation>
    <scope>IDENTIFICATION IN A CADHERIN/CATENIN ADHESION COMPLEX</scope>
</reference>
<reference key="86">
    <citation type="journal article" date="2018" name="Biochem. Biophys. Res. Commun.">
        <title>KSHV vPK inhibits Wnt signaling via preventing interactions between beta-catenin and TCF4.</title>
        <authorList>
            <person name="Cha S."/>
            <person name="Kang M.S."/>
            <person name="Seo T."/>
        </authorList>
    </citation>
    <scope>INTERACTION WITH TCF7L2/TCF4 AND HERPES VIRUS 8 PROTEIN VPK (MICROBIAL INFECTION)</scope>
</reference>
<reference key="87">
    <citation type="journal article" date="2018" name="Cell Death Dis.">
        <title>Transmembrane protein 170B is a novel breast tumorigenesis suppressor gene that inhibits the Wnt/beta-catenin pathway.</title>
        <authorList>
            <person name="Li M."/>
            <person name="Han Y."/>
            <person name="Zhou H."/>
            <person name="Li X."/>
            <person name="Lin C."/>
            <person name="Zhang E."/>
            <person name="Chi X."/>
            <person name="Hu J."/>
            <person name="Xu H."/>
        </authorList>
    </citation>
    <scope>SUBCELLULAR LOCATION</scope>
    <scope>INTERACTION WITH TMEM170B</scope>
    <scope>TISSUE SPECIFICITY</scope>
</reference>
<reference key="88">
    <citation type="journal article" date="2017" name="Am. J. Hum. Genet.">
        <title>Defects in the cell signaling mediator beta-catenin cause the retinal vascular condition FEVR.</title>
        <authorList>
            <person name="Panagiotou E.S."/>
            <person name="Sanjurjo Soriano C."/>
            <person name="Poulter J.A."/>
            <person name="Lord E.C."/>
            <person name="Dzulova D."/>
            <person name="Kondo H."/>
            <person name="Hiyoshi A."/>
            <person name="Chung B.H."/>
            <person name="Chu Y.W."/>
            <person name="Lai C.H.Y."/>
            <person name="Tafoya M.E."/>
            <person name="Karjosukarso D."/>
            <person name="Collin R.W.J."/>
            <person name="Topping J."/>
            <person name="Downey L.M."/>
            <person name="Ali M."/>
            <person name="Inglehearn C.F."/>
            <person name="Toomes C."/>
        </authorList>
    </citation>
    <scope>INVOLVEMENT IN EVR7</scope>
    <scope>VARIANT EVR7 CYS-710</scope>
</reference>
<reference key="89">
    <citation type="journal article" date="2018" name="Cancer Res.">
        <title>Forkhead Box F2 Suppresses Gastric Cancer through a Novel FOXF2-IRF2BPL-beta-Catenin Signaling Axis.</title>
        <authorList>
            <person name="Higashimori A."/>
            <person name="Dong Y."/>
            <person name="Zhang Y."/>
            <person name="Kang W."/>
            <person name="Nakatsu G."/>
            <person name="Ng S.S.M."/>
            <person name="Arakawa T."/>
            <person name="Sung J.J.Y."/>
            <person name="Chan F.K.L."/>
            <person name="Yu J."/>
        </authorList>
    </citation>
    <scope>INTERACTION WITH IRF2BPL</scope>
    <scope>VARIANT TYR-33</scope>
</reference>
<reference key="90">
    <citation type="journal article" date="2018" name="EBioMedicine">
        <title>SOX30 Inhibits Tumor Metastasis through Attenuating Wnt-Signaling via Transcriptional and Posttranslational Regulation of beta-Catenin in Lung Cancer.</title>
        <authorList>
            <person name="Han F."/>
            <person name="Liu W.B."/>
            <person name="Shi X.Y."/>
            <person name="Yang J.T."/>
            <person name="Zhang X."/>
            <person name="Li Z.M."/>
            <person name="Jiang X."/>
            <person name="Yin L."/>
            <person name="Li J.J."/>
            <person name="Huang C.S."/>
            <person name="Cao J."/>
            <person name="Liu J.Y."/>
        </authorList>
    </citation>
    <scope>INTERACTION WITH SOX30 AND TCF7L2</scope>
    <scope>SUBCELLULAR LOCATION</scope>
</reference>
<reference key="91">
    <citation type="journal article" date="2018" name="Mol. Cancer Res.">
        <title>FLYWCH1, a Novel Suppressor of Nuclear beta-Catenin, Regulates Migration and Morphology in Colorectal Cancer.</title>
        <authorList>
            <person name="Muhammad B.A."/>
            <person name="Almozyan S."/>
            <person name="Babaei-Jadidi R."/>
            <person name="Onyido E.K."/>
            <person name="Saadeddin A."/>
            <person name="Kashfi S.H."/>
            <person name="Spencer-Dene B."/>
            <person name="Ilyas M."/>
            <person name="Lourdusamy A."/>
            <person name="Behrens A."/>
            <person name="Nateri A.S."/>
        </authorList>
    </citation>
    <scope>INTERACTION WITH FLYWCH1</scope>
</reference>
<reference key="92">
    <citation type="journal article" date="2018" name="Stem Cell Reports">
        <title>DSG2 Is a Functional Cell Surface Marker for Identification and Isolation of Human Pluripotent Stem Cells.</title>
        <authorList>
            <person name="Park J."/>
            <person name="Son Y."/>
            <person name="Lee N.G."/>
            <person name="Lee K."/>
            <person name="Lee D.G."/>
            <person name="Song J."/>
            <person name="Lee J."/>
            <person name="Kim S."/>
            <person name="Cho M.J."/>
            <person name="Jang J.H."/>
            <person name="Lee J."/>
            <person name="Park J.G."/>
            <person name="Kim Y.G."/>
            <person name="Kim J.S."/>
            <person name="Lee J."/>
            <person name="Cho Y.S."/>
            <person name="Park Y.J."/>
            <person name="Han B.S."/>
            <person name="Bae K.H."/>
            <person name="Han S."/>
            <person name="Kang B."/>
            <person name="Haam S."/>
            <person name="Lee S.H."/>
            <person name="Lee S.C."/>
            <person name="Min J.K."/>
        </authorList>
    </citation>
    <scope>FUNCTION</scope>
    <scope>INTERACTION WITH DSG2</scope>
    <scope>SUBCELLULAR LOCATION</scope>
</reference>
<reference key="93">
    <citation type="journal article" date="2019" name="Science">
        <title>LMBR1L regulates lymphopoiesis through Wnt/beta-catenin signaling.</title>
        <authorList>
            <person name="Choi J.H."/>
            <person name="Zhong X."/>
            <person name="McAlpine W."/>
            <person name="Liao T.C."/>
            <person name="Zhang D."/>
            <person name="Fang B."/>
            <person name="Russell J."/>
            <person name="Ludwig S."/>
            <person name="Nair-Gill E."/>
            <person name="Zhang Z."/>
            <person name="Wang K.W."/>
            <person name="Misawa T."/>
            <person name="Zhan X."/>
            <person name="Choi M."/>
            <person name="Wang T."/>
            <person name="Li X."/>
            <person name="Tang M."/>
            <person name="Sun Q."/>
            <person name="Yu L."/>
            <person name="Murray A.R."/>
            <person name="Moresco E.M.Y."/>
            <person name="Beutler B."/>
        </authorList>
    </citation>
    <scope>INTERACTION WITH LMBR1L</scope>
</reference>
<reference key="94">
    <citation type="journal article" date="2020" name="J. Virol.">
        <title>beta-Catenin Is Required for the cGAS/STING Signaling Pathway but Antagonized by the Herpes Simplex Virus 1 US3 Protein.</title>
        <authorList>
            <person name="You H."/>
            <person name="Lin Y."/>
            <person name="Lin F."/>
            <person name="Yang M."/>
            <person name="Li J."/>
            <person name="Zhang R."/>
            <person name="Huang Z."/>
            <person name="Shen Q."/>
            <person name="Tang R."/>
            <person name="Zheng C."/>
        </authorList>
    </citation>
    <scope>PHOSPHORYLATION AT THR-556 (MICROBIAL INFECTION)</scope>
    <scope>SUBCELLULAR LOCATION</scope>
</reference>
<reference key="95">
    <citation type="journal article" date="2000" name="Cell">
        <title>Crystal structure of a beta-catenin/Tcf complex.</title>
        <authorList>
            <person name="Graham T.A."/>
            <person name="Weaver C."/>
            <person name="Mao F."/>
            <person name="Kimelman D."/>
            <person name="Xu W."/>
        </authorList>
    </citation>
    <scope>X-RAY CRYSTALLOGRAPHY (2.1 ANGSTROMS) OF 133-664</scope>
</reference>
<reference key="96">
    <citation type="journal article" date="2001" name="Nat. Struct. Biol.">
        <title>Tcf4 can specifically recognize beta-catenin using alternative conformations.</title>
        <authorList>
            <person name="Graham T.A."/>
            <person name="Ferkey D.M."/>
            <person name="Mao F."/>
            <person name="Kimelman D."/>
            <person name="Xu W."/>
        </authorList>
    </citation>
    <scope>X-RAY CRYSTALLOGRAPHY (2.0 ANGSTROMS) OF 134-664 IN COMPLEX WITH TCF7L2</scope>
    <scope>MUTAGENESIS OF LYS-312 AND LYS-435</scope>
</reference>
<reference key="97">
    <citation type="journal article" date="2001" name="Nat. Struct. Biol.">
        <title>Structure of a human Tcf4-beta-catenin complex.</title>
        <authorList>
            <person name="Poy F."/>
            <person name="Lepourcelet M."/>
            <person name="Shivdasani R.A."/>
            <person name="Eck M.J."/>
        </authorList>
    </citation>
    <scope>X-RAY CRYSTALLOGRAPHY (2.5 ANGSTROMS) OF 134-668 IN COMPLEX WITH TCF7L2</scope>
</reference>
<reference key="98">
    <citation type="journal article" date="2002" name="Mol. Cell">
        <title>The crystal structure of the beta-catenin/ICAT complex reveals the inhibitory mechanism of ICAT.</title>
        <authorList>
            <person name="Graham T.A."/>
            <person name="Clements W.K."/>
            <person name="Kimelman D."/>
            <person name="Xu W."/>
        </authorList>
    </citation>
    <scope>X-RAY CRYSTALLOGRAPHY (2.5 ANGSTROMS) OF 134-664 IN COMPLEX WITH CTNNBIP1</scope>
    <scope>MUTAGENESIS OF PHE-660 AND ARG-661</scope>
</reference>
<reference key="99">
    <citation type="journal article" date="2006" name="Mol. Cell">
        <title>Crystal structure of a beta-catenin/BCL9/Tcf4 complex.</title>
        <authorList>
            <person name="Sampietro J."/>
            <person name="Dahlberg C.L."/>
            <person name="Cho U.S."/>
            <person name="Hinds T.R."/>
            <person name="Kimelman D."/>
            <person name="Xu W."/>
        </authorList>
    </citation>
    <scope>X-RAY CRYSTALLOGRAPHY (2.60 ANGSTROMS) OF 1-136 IN COMPLEX WITH BCL9 AND TCF7L2</scope>
    <scope>INTERACTION WITH BCL9; BCL9L CDH3 AND TCF7L2</scope>
    <scope>MUTAGENESIS OF TYR-142; LEU-156; LEU-159 AND LEU-178</scope>
</reference>
<reference evidence="100" key="100">
    <citation type="journal article" date="2012" name="Proc. Natl. Acad. Sci. U.S.A.">
        <title>Structural basis of coactivation of liver receptor homolog-1 by beta-catenin.</title>
        <authorList>
            <person name="Yumoto F."/>
            <person name="Nguyen P."/>
            <person name="Sablin E.P."/>
            <person name="Baxter J.D."/>
            <person name="Webb P."/>
            <person name="Fletterick R.J."/>
        </authorList>
    </citation>
    <scope>X-RAY CRYSTALLOGRAPHY (2.76 ANGSTROMS) OF 183-663 COMPLEX WITH NR5A2</scope>
    <scope>FUNCTION</scope>
    <scope>INTERACTION WITH NR5A2</scope>
</reference>
<reference key="101">
    <citation type="journal article" date="1997" name="Science">
        <title>Activation of beta-catenin-Tcf signaling in colon cancer by mutations in beta-catenin or APC.</title>
        <authorList>
            <person name="Morin P.J."/>
            <person name="Sparks A.B."/>
            <person name="Korinek V."/>
            <person name="Barker N."/>
            <person name="Clevers H."/>
            <person name="Vogelstein B."/>
            <person name="Kinzler K.W."/>
        </authorList>
    </citation>
    <scope>VARIANTS COLORECTAL CANCER TYR-33 AND SER-45 DEL</scope>
</reference>
<reference key="102">
    <citation type="journal article" date="1999" name="Cancer Res.">
        <title>Childhood hepatoblastomas frequently carry a mutated degradation targeting box of the beta-catenin gene.</title>
        <authorList>
            <person name="Koch A."/>
            <person name="Denkhaus D."/>
            <person name="Albrecht S."/>
            <person name="Leuschner I."/>
            <person name="von Schweinitz D."/>
            <person name="Pietsch T."/>
        </authorList>
    </citation>
    <scope>VARIANTS HEPATOBLASTOMA TYR-32; VAL-34; CYS-37 AND ALA-41</scope>
</reference>
<reference key="103">
    <citation type="journal article" date="1999" name="Genes Chromosomes Cancer">
        <title>Beta-catenin accumulation and mutation of the CTNNB1 gene in hepatoblastoma.</title>
        <authorList>
            <person name="Blaeker H."/>
            <person name="Hofmann W.J."/>
            <person name="Rieker R.J."/>
            <person name="Penzel R."/>
            <person name="Graf M."/>
            <person name="Otto H.F."/>
        </authorList>
    </citation>
    <scope>VARIANT HEPATOBLASTOMA ALA-41</scope>
</reference>
<reference key="104">
    <citation type="journal article" date="1999" name="Jpn. J. Cancer Res.">
        <title>Mutational analysis of beta-catenin gene in Japanese ovarian carcinomas: frequent mutations in endometrioid carcinomas.</title>
        <authorList>
            <person name="Sagae S."/>
            <person name="Kobayashi K."/>
            <person name="Nishioka Y."/>
            <person name="Sugimura M."/>
            <person name="Ishioka S."/>
            <person name="Nagata M."/>
            <person name="Terasawa K."/>
            <person name="Tokino T."/>
            <person name="Kudo R."/>
        </authorList>
    </citation>
    <scope>VARIANTS OVARIAN CANCER CYS-37; ILE-41 AND ALA-41</scope>
</reference>
<reference key="105">
    <citation type="journal article" date="1999" name="J. Clin. Pathol.">
        <title>A novel case of a sporadic desmoid tumour with mutation of the beta catenin gene.</title>
        <authorList>
            <person name="Shitoh K."/>
            <person name="Konishi F."/>
            <person name="Iijima T."/>
            <person name="Ohdaira T."/>
            <person name="Sakai K."/>
            <person name="Kanazawa K."/>
            <person name="Miyaki M."/>
        </authorList>
    </citation>
    <scope>VARIANT DESMOID TUMOR ALA-41</scope>
</reference>
<reference key="106">
    <citation type="journal article" date="1999" name="Nat. Genet.">
        <title>A common human skin tumour is caused by activating mutations in beta-catenin.</title>
        <authorList>
            <person name="Chan E.F."/>
            <person name="Gat U."/>
            <person name="McNiff J.M."/>
            <person name="Fuchs E."/>
        </authorList>
    </citation>
    <scope>VARIANTS PTR GLY-32; TYR-32; PHE-33; TYR-33; GLU-34; CYS-37; PHE-37 AND ILE-41</scope>
</reference>
<reference key="107">
    <citation type="journal article" date="1999" name="Oncogene">
        <title>Beta-catenin mutations in hepatocellular carcinoma correlate with a low rate of loss of heterozygosity.</title>
        <authorList>
            <person name="Legoix P."/>
            <person name="Bluteau O."/>
            <person name="Bayer J."/>
            <person name="Perret C."/>
            <person name="Balabaud C."/>
            <person name="Belghiti J."/>
            <person name="Franco D."/>
            <person name="Thomas G."/>
            <person name="Laurent-Puig P."/>
            <person name="Zucman-Rossi J."/>
        </authorList>
    </citation>
    <scope>VARIANTS HEPATOCELLULAR CARCINOMA ARG-23; 25-TRP--SER-33 DEL; ALA-32; GLY-32; TYR-32; LEU-33; PHE-33; ARG-34; SER-35; ALA-37; 37-SER-GLY-38 DELINS TRP; TYR-37; ALA-41; ILE-41; PHE-45 AND PRO-45</scope>
</reference>
<reference key="108">
    <citation type="journal article" date="2000" name="Am. J. Pathol.">
        <title>APC mutations in sporadic medulloblastomas.</title>
        <authorList>
            <person name="Huang H."/>
            <person name="Mahler-Araujo B.M."/>
            <person name="Sankila A."/>
            <person name="Chimelli L."/>
            <person name="Yonekawa Y."/>
            <person name="Kleihues P."/>
            <person name="Ohgaki H."/>
        </authorList>
    </citation>
    <scope>VARIANTS MDB PHE-33 AND ALA-37</scope>
</reference>
<reference key="109">
    <citation type="journal article" date="2015" name="Hum. Genet.">
        <title>De novo mutations in beta-catenin (CTNNB1) appear to be a frequent cause of intellectual disability: expanding the mutational and clinical spectrum.</title>
        <authorList>
            <person name="Kuechler A."/>
            <person name="Willemsen M.H."/>
            <person name="Albrecht B."/>
            <person name="Bacino C.A."/>
            <person name="Bartholomew D.W."/>
            <person name="van Bokhoven H."/>
            <person name="van den Boogaard M.J."/>
            <person name="Bramswig N."/>
            <person name="Buettner C."/>
            <person name="Cremer K."/>
            <person name="Czeschik J.C."/>
            <person name="Engels H."/>
            <person name="van Gassen K."/>
            <person name="Graf E."/>
            <person name="van Haelst M."/>
            <person name="He W."/>
            <person name="Hogue J.S."/>
            <person name="Kempers M."/>
            <person name="Koolen D."/>
            <person name="Monroe G."/>
            <person name="de Munnik S."/>
            <person name="Pastore M."/>
            <person name="Reis A."/>
            <person name="Reuter M.S."/>
            <person name="Tegay D.H."/>
            <person name="Veltman J."/>
            <person name="Visser G."/>
            <person name="van Hasselt P."/>
            <person name="Smeets E.E."/>
            <person name="Vissers L."/>
            <person name="Wieland T."/>
            <person name="Wissink W."/>
            <person name="Yntema H."/>
            <person name="Zink A.M."/>
            <person name="Strom T.M."/>
            <person name="Luedecke H.J."/>
            <person name="Kleefstra T."/>
            <person name="Wieczorek D."/>
        </authorList>
    </citation>
    <scope>VARIANT NEDSDV PRO-388</scope>
</reference>
<reference key="110">
    <citation type="journal article" date="2017" name="Medicine (Baltimore)">
        <title>Exome sequencing identifies a de novo mutation of CTNNB1 gene in a patient mainly presented with retinal detachment, lens and vitreous opacities, microcephaly, and developmental delay: Case report and literature review.</title>
        <authorList>
            <person name="Li N."/>
            <person name="Xu Y."/>
            <person name="Li G."/>
            <person name="Yu T."/>
            <person name="Yao R.E."/>
            <person name="Wang X."/>
            <person name="Wang J."/>
        </authorList>
    </citation>
    <scope>VARIANT NEDSDV 558-GLN--LEU-781 DEL</scope>
</reference>
<reference key="111">
    <citation type="journal article" date="2024" name="J. Clin. Endocrinol. Metab.">
        <title>A mosaic variant in CTNNB1/beta-catenin as a novel cause for osteopathia striata with cranial sclerosis.</title>
        <authorList>
            <person name="Huybrechts Y."/>
            <person name="Appelman-Dijkstra N.M."/>
            <person name="Steenackers E."/>
            <person name="Van Beylen W."/>
            <person name="Mortier G."/>
            <person name="Hendrickx G."/>
            <person name="Van Hul W."/>
        </authorList>
    </citation>
    <scope>VARIANT ASN-292</scope>
    <scope>CHARACTERIZATION OF VARIANT ASN-292</scope>
</reference>
<keyword id="KW-0002">3D-structure</keyword>
<keyword id="KW-0007">Acetylation</keyword>
<keyword id="KW-0010">Activator</keyword>
<keyword id="KW-0130">Cell adhesion</keyword>
<keyword id="KW-0965">Cell junction</keyword>
<keyword id="KW-1003">Cell membrane</keyword>
<keyword id="KW-0966">Cell projection</keyword>
<keyword id="KW-0160">Chromosomal rearrangement</keyword>
<keyword id="KW-0963">Cytoplasm</keyword>
<keyword id="KW-0206">Cytoskeleton</keyword>
<keyword id="KW-0225">Disease variant</keyword>
<keyword id="KW-0325">Glycoprotein</keyword>
<keyword id="KW-0945">Host-virus interaction</keyword>
<keyword id="KW-0991">Intellectual disability</keyword>
<keyword id="KW-0472">Membrane</keyword>
<keyword id="KW-0524">Neurogenesis</keyword>
<keyword id="KW-0539">Nucleus</keyword>
<keyword id="KW-0597">Phosphoprotein</keyword>
<keyword id="KW-1267">Proteomics identification</keyword>
<keyword id="KW-1185">Reference proteome</keyword>
<keyword id="KW-0677">Repeat</keyword>
<keyword id="KW-0702">S-nitrosylation</keyword>
<keyword id="KW-0770">Synapse</keyword>
<keyword id="KW-0804">Transcription</keyword>
<keyword id="KW-0805">Transcription regulation</keyword>
<keyword id="KW-0832">Ubl conjugation</keyword>
<keyword id="KW-0879">Wnt signaling pathway</keyword>
<proteinExistence type="evidence at protein level"/>